<name>RBL_WHEAT</name>
<sequence length="477" mass="52851">MSPQTETKAGVGFKAGVKDYKLTYYTPEYETKDTDILAAFRVSPQPGVPPEEAGAAVAAESSTGTWTTVWTDGLTSLDRYKGRCYHIEPVAGEDSQWICYVAYPLDLFEEGSVTNMFTSIVGNVFGFKALRALRLEDLRIPPTYSKTFQGPPHGIQVERDKLNKYGRPLLGCTIKPKLGLSAKNYGRACYECLRGGLDFTKDDENVNSQPFMRWRDRFVFCAEAIYKSQAETGEIKGHYLNATAGTCEEMIKRAVFARELGVPIVMHDYLTGGFTANTTLAHYCRDNGLLLHIHRAMHAVIDRQKNHGMHFRVLAKALRMSGGDHIHSGTVVGKLEGEREMTLGFVDLLRDDFIEKDRARGIFFTQDWVSMPGVIPVASGGIHVWHMPALTEIFGDDSVLQFGGGTLGHPWGNAPGAAANRVALEACVQARNEGRDLAREGNEIIRAACKWSPELAAACEVWKAIKFEFEPVDTIDK</sequence>
<geneLocation type="chloroplast"/>
<comment type="function">
    <text evidence="3">RuBisCO catalyzes two reactions: the carboxylation of D-ribulose 1,5-bisphosphate, the primary event in carbon dioxide fixation, as well as the oxidative fragmentation of the pentose substrate in the photorespiration process (PubMed:2928307). Both reactions occur simultaneously and in competition at the same active site.</text>
</comment>
<comment type="catalytic activity">
    <reaction>
        <text>2 (2R)-3-phosphoglycerate + 2 H(+) = D-ribulose 1,5-bisphosphate + CO2 + H2O</text>
        <dbReference type="Rhea" id="RHEA:23124"/>
        <dbReference type="ChEBI" id="CHEBI:15377"/>
        <dbReference type="ChEBI" id="CHEBI:15378"/>
        <dbReference type="ChEBI" id="CHEBI:16526"/>
        <dbReference type="ChEBI" id="CHEBI:57870"/>
        <dbReference type="ChEBI" id="CHEBI:58272"/>
        <dbReference type="EC" id="4.1.1.39"/>
    </reaction>
</comment>
<comment type="catalytic activity">
    <reaction>
        <text>D-ribulose 1,5-bisphosphate + O2 = 2-phosphoglycolate + (2R)-3-phosphoglycerate + 2 H(+)</text>
        <dbReference type="Rhea" id="RHEA:36631"/>
        <dbReference type="ChEBI" id="CHEBI:15378"/>
        <dbReference type="ChEBI" id="CHEBI:15379"/>
        <dbReference type="ChEBI" id="CHEBI:57870"/>
        <dbReference type="ChEBI" id="CHEBI:58033"/>
        <dbReference type="ChEBI" id="CHEBI:58272"/>
    </reaction>
</comment>
<comment type="cofactor">
    <cofactor>
        <name>Mg(2+)</name>
        <dbReference type="ChEBI" id="CHEBI:18420"/>
    </cofactor>
    <text>Binds 1 Mg(2+) ion per subunit.</text>
</comment>
<comment type="subunit">
    <text evidence="2">Heterohexadecamer of 8 large chains and 8 small chains; disulfide-linked. The disulfide link is formed within the large subunit homodimers.</text>
</comment>
<comment type="subcellular location">
    <subcellularLocation>
        <location>Plastid</location>
        <location>Chloroplast</location>
    </subcellularLocation>
</comment>
<comment type="PTM">
    <text evidence="2">The disulfide bond which can form between Cys-247 in the large chain dimeric partners within the hexadecamer appears to be associated with oxidative stress and protein turnover.</text>
</comment>
<comment type="miscellaneous">
    <text>The basic functional RuBisCO is composed of a large chain homodimer in a 'head-to-tail' conformation. In form I RuBisCO this homodimer is arranged in a barrel-like tetramer with the small subunits forming a tetrameric 'cap' on each end of the 'barrel'.</text>
</comment>
<comment type="similarity">
    <text evidence="4">Belongs to the RuBisCO large chain family. Type I subfamily.</text>
</comment>
<accession>P11383</accession>
<accession>Q7YKX2</accession>
<feature type="propeptide" id="PRO_0000031447" evidence="3">
    <location>
        <begin position="1"/>
        <end position="2"/>
    </location>
</feature>
<feature type="chain" id="PRO_0000031448" description="Ribulose bisphosphate carboxylase large chain">
    <location>
        <begin position="3"/>
        <end position="477"/>
    </location>
</feature>
<feature type="active site" description="Proton acceptor" evidence="1">
    <location>
        <position position="175"/>
    </location>
</feature>
<feature type="active site" description="Proton acceptor" evidence="1">
    <location>
        <position position="294"/>
    </location>
</feature>
<feature type="binding site" description="in homodimeric partner" evidence="1">
    <location>
        <position position="123"/>
    </location>
    <ligand>
        <name>substrate</name>
    </ligand>
</feature>
<feature type="binding site" evidence="1">
    <location>
        <position position="173"/>
    </location>
    <ligand>
        <name>substrate</name>
    </ligand>
</feature>
<feature type="binding site" evidence="1">
    <location>
        <position position="177"/>
    </location>
    <ligand>
        <name>substrate</name>
    </ligand>
</feature>
<feature type="binding site" description="via carbamate group" evidence="1">
    <location>
        <position position="201"/>
    </location>
    <ligand>
        <name>Mg(2+)</name>
        <dbReference type="ChEBI" id="CHEBI:18420"/>
    </ligand>
</feature>
<feature type="binding site" evidence="1">
    <location>
        <position position="203"/>
    </location>
    <ligand>
        <name>Mg(2+)</name>
        <dbReference type="ChEBI" id="CHEBI:18420"/>
    </ligand>
</feature>
<feature type="binding site" evidence="1">
    <location>
        <position position="204"/>
    </location>
    <ligand>
        <name>Mg(2+)</name>
        <dbReference type="ChEBI" id="CHEBI:18420"/>
    </ligand>
</feature>
<feature type="binding site" evidence="1">
    <location>
        <position position="295"/>
    </location>
    <ligand>
        <name>substrate</name>
    </ligand>
</feature>
<feature type="binding site" evidence="1">
    <location>
        <position position="327"/>
    </location>
    <ligand>
        <name>substrate</name>
    </ligand>
</feature>
<feature type="binding site" evidence="1">
    <location>
        <position position="379"/>
    </location>
    <ligand>
        <name>substrate</name>
    </ligand>
</feature>
<feature type="site" description="Not N6-methylated" evidence="3">
    <location>
        <position position="14"/>
    </location>
</feature>
<feature type="site" description="Transition state stabilizer" evidence="1">
    <location>
        <position position="334"/>
    </location>
</feature>
<feature type="modified residue" description="N-acetylproline" evidence="3">
    <location>
        <position position="3"/>
    </location>
</feature>
<feature type="modified residue" description="N6-carboxylysine" evidence="1">
    <location>
        <position position="201"/>
    </location>
</feature>
<feature type="disulfide bond" description="Interchain; in linked form" evidence="2">
    <location>
        <position position="247"/>
    </location>
</feature>
<feature type="sequence conflict" description="In Ref. 2; AAP92166." evidence="4" ref="2">
    <original>Y</original>
    <variation>C</variation>
    <location>
        <position position="144"/>
    </location>
</feature>
<feature type="sequence conflict" description="In Ref. 4; CAA44027." evidence="4" ref="4">
    <original>A</original>
    <variation>R</variation>
    <location>
        <position position="281"/>
    </location>
</feature>
<feature type="strand" evidence="5">
    <location>
        <begin position="36"/>
        <end position="44"/>
    </location>
</feature>
<feature type="helix" evidence="5">
    <location>
        <begin position="50"/>
        <end position="60"/>
    </location>
</feature>
<feature type="turn" evidence="5">
    <location>
        <begin position="61"/>
        <end position="63"/>
    </location>
</feature>
<feature type="helix" evidence="5">
    <location>
        <begin position="70"/>
        <end position="74"/>
    </location>
</feature>
<feature type="helix" evidence="5">
    <location>
        <begin position="77"/>
        <end position="80"/>
    </location>
</feature>
<feature type="strand" evidence="5">
    <location>
        <begin position="83"/>
        <end position="89"/>
    </location>
</feature>
<feature type="strand" evidence="5">
    <location>
        <begin position="97"/>
        <end position="103"/>
    </location>
</feature>
<feature type="helix" evidence="5">
    <location>
        <begin position="105"/>
        <end position="107"/>
    </location>
</feature>
<feature type="helix" evidence="5">
    <location>
        <begin position="113"/>
        <end position="121"/>
    </location>
</feature>
<feature type="helix" evidence="5">
    <location>
        <begin position="124"/>
        <end position="126"/>
    </location>
</feature>
<feature type="strand" evidence="5">
    <location>
        <begin position="130"/>
        <end position="139"/>
    </location>
</feature>
<feature type="helix" evidence="5">
    <location>
        <begin position="142"/>
        <end position="145"/>
    </location>
</feature>
<feature type="helix" evidence="5">
    <location>
        <begin position="155"/>
        <end position="162"/>
    </location>
</feature>
<feature type="strand" evidence="5">
    <location>
        <begin position="169"/>
        <end position="173"/>
    </location>
</feature>
<feature type="strand" evidence="5">
    <location>
        <begin position="175"/>
        <end position="180"/>
    </location>
</feature>
<feature type="helix" evidence="5">
    <location>
        <begin position="182"/>
        <end position="194"/>
    </location>
</feature>
<feature type="strand" evidence="5">
    <location>
        <begin position="198"/>
        <end position="201"/>
    </location>
</feature>
<feature type="strand" evidence="5">
    <location>
        <begin position="207"/>
        <end position="209"/>
    </location>
</feature>
<feature type="helix" evidence="5">
    <location>
        <begin position="214"/>
        <end position="232"/>
    </location>
</feature>
<feature type="strand" evidence="5">
    <location>
        <begin position="237"/>
        <end position="241"/>
    </location>
</feature>
<feature type="helix" evidence="5">
    <location>
        <begin position="247"/>
        <end position="260"/>
    </location>
</feature>
<feature type="strand" evidence="5">
    <location>
        <begin position="263"/>
        <end position="268"/>
    </location>
</feature>
<feature type="helix" evidence="5">
    <location>
        <begin position="269"/>
        <end position="272"/>
    </location>
</feature>
<feature type="helix" evidence="5">
    <location>
        <begin position="274"/>
        <end position="287"/>
    </location>
</feature>
<feature type="strand" evidence="5">
    <location>
        <begin position="290"/>
        <end position="294"/>
    </location>
</feature>
<feature type="helix" evidence="5">
    <location>
        <begin position="298"/>
        <end position="302"/>
    </location>
</feature>
<feature type="strand" evidence="5">
    <location>
        <begin position="307"/>
        <end position="309"/>
    </location>
</feature>
<feature type="helix" evidence="5">
    <location>
        <begin position="311"/>
        <end position="321"/>
    </location>
</feature>
<feature type="strand" evidence="5">
    <location>
        <begin position="324"/>
        <end position="329"/>
    </location>
</feature>
<feature type="helix" evidence="5">
    <location>
        <begin position="339"/>
        <end position="350"/>
    </location>
</feature>
<feature type="strand" evidence="5">
    <location>
        <begin position="352"/>
        <end position="354"/>
    </location>
</feature>
<feature type="helix" evidence="5">
    <location>
        <begin position="358"/>
        <end position="360"/>
    </location>
</feature>
<feature type="strand" evidence="5">
    <location>
        <begin position="375"/>
        <end position="378"/>
    </location>
</feature>
<feature type="helix" evidence="5">
    <location>
        <begin position="384"/>
        <end position="386"/>
    </location>
</feature>
<feature type="helix" evidence="5">
    <location>
        <begin position="387"/>
        <end position="394"/>
    </location>
</feature>
<feature type="strand" evidence="5">
    <location>
        <begin position="399"/>
        <end position="403"/>
    </location>
</feature>
<feature type="helix" evidence="5">
    <location>
        <begin position="404"/>
        <end position="407"/>
    </location>
</feature>
<feature type="helix" evidence="5">
    <location>
        <begin position="413"/>
        <end position="433"/>
    </location>
</feature>
<feature type="helix" evidence="5">
    <location>
        <begin position="437"/>
        <end position="449"/>
    </location>
</feature>
<feature type="helix" evidence="5">
    <location>
        <begin position="453"/>
        <end position="461"/>
    </location>
</feature>
<organism>
    <name type="scientific">Triticum aestivum</name>
    <name type="common">Wheat</name>
    <dbReference type="NCBI Taxonomy" id="4565"/>
    <lineage>
        <taxon>Eukaryota</taxon>
        <taxon>Viridiplantae</taxon>
        <taxon>Streptophyta</taxon>
        <taxon>Embryophyta</taxon>
        <taxon>Tracheophyta</taxon>
        <taxon>Spermatophyta</taxon>
        <taxon>Magnoliopsida</taxon>
        <taxon>Liliopsida</taxon>
        <taxon>Poales</taxon>
        <taxon>Poaceae</taxon>
        <taxon>BOP clade</taxon>
        <taxon>Pooideae</taxon>
        <taxon>Triticodae</taxon>
        <taxon>Triticeae</taxon>
        <taxon>Triticinae</taxon>
        <taxon>Triticum</taxon>
    </lineage>
</organism>
<evidence type="ECO:0000250" key="1"/>
<evidence type="ECO:0000269" key="2">
    <source>
    </source>
</evidence>
<evidence type="ECO:0000269" key="3">
    <source>
    </source>
</evidence>
<evidence type="ECO:0000305" key="4"/>
<evidence type="ECO:0007829" key="5">
    <source>
        <dbReference type="PDB" id="5WSK"/>
    </source>
</evidence>
<gene>
    <name type="primary">rbcL</name>
</gene>
<dbReference type="EC" id="4.1.1.39"/>
<dbReference type="EMBL" id="D00206">
    <property type="protein sequence ID" value="BAA00146.1"/>
    <property type="molecule type" value="Genomic_DNA"/>
</dbReference>
<dbReference type="EMBL" id="AY328025">
    <property type="protein sequence ID" value="AAP92166.1"/>
    <property type="molecule type" value="mRNA"/>
</dbReference>
<dbReference type="EMBL" id="AB042240">
    <property type="protein sequence ID" value="BAB47042.1"/>
    <property type="molecule type" value="Genomic_DNA"/>
</dbReference>
<dbReference type="EMBL" id="X62117">
    <property type="protein sequence ID" value="CAA44027.1"/>
    <property type="molecule type" value="Genomic_DNA"/>
</dbReference>
<dbReference type="PIR" id="B32395">
    <property type="entry name" value="RKWTLC"/>
</dbReference>
<dbReference type="RefSeq" id="NP_114267.1">
    <property type="nucleotide sequence ID" value="NC_002762.1"/>
</dbReference>
<dbReference type="PDB" id="5WSK">
    <property type="method" value="X-ray"/>
    <property type="resolution" value="1.78 A"/>
    <property type="chains" value="A/B/C/D=1-477"/>
</dbReference>
<dbReference type="PDBsum" id="5WSK"/>
<dbReference type="SMR" id="P11383"/>
<dbReference type="STRING" id="4565.P11383"/>
<dbReference type="iPTMnet" id="P11383"/>
<dbReference type="PaxDb" id="4565-EPlTAEP00000010047"/>
<dbReference type="EnsemblPlants" id="TraesKARUn01G0026560.1">
    <property type="protein sequence ID" value="cds.TraesKARUn01G0026560.1"/>
    <property type="gene ID" value="TraesKARUn01G0026560"/>
</dbReference>
<dbReference type="EnsemblPlants" id="TraesKARUn01G0027040.1">
    <property type="protein sequence ID" value="cds.TraesKARUn01G0027040.1"/>
    <property type="gene ID" value="TraesKARUn01G0027040"/>
</dbReference>
<dbReference type="EnsemblPlants" id="TraesKARUn01G0027070.1">
    <property type="protein sequence ID" value="cds.TraesKARUn01G0027070.1"/>
    <property type="gene ID" value="TraesKARUn01G0027070"/>
</dbReference>
<dbReference type="EnsemblPlants" id="TraesKARUn01G0027140.1">
    <property type="protein sequence ID" value="cds.TraesKARUn01G0027140.1"/>
    <property type="gene ID" value="TraesKARUn01G0027140"/>
</dbReference>
<dbReference type="EnsemblPlants" id="TraesKARUn01G0028930.1">
    <property type="protein sequence ID" value="cds.TraesKARUn01G0028930.1"/>
    <property type="gene ID" value="TraesKARUn01G0028930"/>
</dbReference>
<dbReference type="EnsemblPlants" id="TraesKARUn01G0029050.1">
    <property type="protein sequence ID" value="cds.TraesKARUn01G0029050.1"/>
    <property type="gene ID" value="TraesKARUn01G0029050"/>
</dbReference>
<dbReference type="EnsemblPlants" id="TraesKARUn01G0029520.1">
    <property type="protein sequence ID" value="cds.TraesKARUn01G0029520.1"/>
    <property type="gene ID" value="TraesKARUn01G0029520"/>
</dbReference>
<dbReference type="EnsemblPlants" id="TraesKARUn01G0029780.1">
    <property type="protein sequence ID" value="cds.TraesKARUn01G0029780.1"/>
    <property type="gene ID" value="TraesKARUn01G0029780"/>
</dbReference>
<dbReference type="EnsemblPlants" id="TraesKARUn01G0030840.1">
    <property type="protein sequence ID" value="cds.TraesKARUn01G0030840.1"/>
    <property type="gene ID" value="TraesKARUn01G0030840"/>
</dbReference>
<dbReference type="EnsemblPlants" id="TraesKARUn01G0030880.1">
    <property type="protein sequence ID" value="cds.TraesKARUn01G0030880.1"/>
    <property type="gene ID" value="TraesKARUn01G0030880"/>
</dbReference>
<dbReference type="EnsemblPlants" id="TraesKARUn01G0031400.1">
    <property type="protein sequence ID" value="cds.TraesKARUn01G0031400.1"/>
    <property type="gene ID" value="TraesKARUn01G0031400"/>
</dbReference>
<dbReference type="EnsemblPlants" id="TraesKARUn01G0031720.1">
    <property type="protein sequence ID" value="cds.TraesKARUn01G0031720.1"/>
    <property type="gene ID" value="TraesKARUn01G0031720"/>
</dbReference>
<dbReference type="EnsemblPlants" id="TraesKARUn01G0031790.1">
    <property type="protein sequence ID" value="cds.TraesKARUn01G0031790.1"/>
    <property type="gene ID" value="TraesKARUn01G0031790"/>
</dbReference>
<dbReference type="EnsemblPlants" id="TraesKARUn01G0031880.1">
    <property type="protein sequence ID" value="cds.TraesKARUn01G0031880.1"/>
    <property type="gene ID" value="TraesKARUn01G0031880"/>
</dbReference>
<dbReference type="EnsemblPlants" id="TraesKARUn01G0031980.1">
    <property type="protein sequence ID" value="cds.TraesKARUn01G0031980.1"/>
    <property type="gene ID" value="TraesKARUn01G0031980"/>
</dbReference>
<dbReference type="EnsemblPlants" id="TraesKARUn01G0032670.1">
    <property type="protein sequence ID" value="cds.TraesKARUn01G0032670.1"/>
    <property type="gene ID" value="TraesKARUn01G0032670"/>
</dbReference>
<dbReference type="EnsemblPlants" id="TraesKARUn01G0032830.1">
    <property type="protein sequence ID" value="cds.TraesKARUn01G0032830.1"/>
    <property type="gene ID" value="TraesKARUn01G0032830"/>
</dbReference>
<dbReference type="EnsemblPlants" id="TraesKARUn01G0033070.1">
    <property type="protein sequence ID" value="cds.TraesKARUn01G0033070.1"/>
    <property type="gene ID" value="TraesKARUn01G0033070"/>
</dbReference>
<dbReference type="EnsemblPlants" id="TraesKARUn01G0033180.1">
    <property type="protein sequence ID" value="cds.TraesKARUn01G0033180.1"/>
    <property type="gene ID" value="TraesKARUn01G0033180"/>
</dbReference>
<dbReference type="EnsemblPlants" id="TraesKARUn01G0033310.1">
    <property type="protein sequence ID" value="cds.TraesKARUn01G0033310.1"/>
    <property type="gene ID" value="TraesKARUn01G0033310"/>
</dbReference>
<dbReference type="EnsemblPlants" id="TraesKARUn01G0033620.1">
    <property type="protein sequence ID" value="cds.TraesKARUn01G0033620.1"/>
    <property type="gene ID" value="TraesKARUn01G0033620"/>
</dbReference>
<dbReference type="EnsemblPlants" id="TraesKARUn01G0033720.1">
    <property type="protein sequence ID" value="cds.TraesKARUn01G0033720.1"/>
    <property type="gene ID" value="TraesKARUn01G0033720"/>
</dbReference>
<dbReference type="EnsemblPlants" id="TraesKARUn01G0034400.1">
    <property type="protein sequence ID" value="cds.TraesKARUn01G0034400.1"/>
    <property type="gene ID" value="TraesKARUn01G0034400"/>
</dbReference>
<dbReference type="EnsemblPlants" id="TraesKARUn01G0034580.1">
    <property type="protein sequence ID" value="cds.TraesKARUn01G0034580.1"/>
    <property type="gene ID" value="TraesKARUn01G0034580"/>
</dbReference>
<dbReference type="EnsemblPlants" id="TraesKARUn01G0034680.1">
    <property type="protein sequence ID" value="cds.TraesKARUn01G0034680.1"/>
    <property type="gene ID" value="TraesKARUn01G0034680"/>
</dbReference>
<dbReference type="EnsemblPlants" id="TraesKARUn01G0034870.1">
    <property type="protein sequence ID" value="cds.TraesKARUn01G0034870.1"/>
    <property type="gene ID" value="TraesKARUn01G0034870"/>
</dbReference>
<dbReference type="EnsemblPlants" id="TraesKARUn01G0035390.1">
    <property type="protein sequence ID" value="cds.TraesKARUn01G0035390.1"/>
    <property type="gene ID" value="TraesKARUn01G0035390"/>
</dbReference>
<dbReference type="EnsemblPlants" id="TraesKARUn01G0035570.1">
    <property type="protein sequence ID" value="cds.TraesKARUn01G0035570.1"/>
    <property type="gene ID" value="TraesKARUn01G0035570"/>
</dbReference>
<dbReference type="EnsemblPlants" id="TraesKARUn01G0035710.1">
    <property type="protein sequence ID" value="cds.TraesKARUn01G0035710.1"/>
    <property type="gene ID" value="TraesKARUn01G0035710"/>
</dbReference>
<dbReference type="EnsemblPlants" id="TraesKARUn01G0036240.1">
    <property type="protein sequence ID" value="cds.TraesKARUn01G0036240.1"/>
    <property type="gene ID" value="TraesKARUn01G0036240"/>
</dbReference>
<dbReference type="EnsemblPlants" id="TraesKARUn01G0036320.1">
    <property type="protein sequence ID" value="cds.TraesKARUn01G0036320.1"/>
    <property type="gene ID" value="TraesKARUn01G0036320"/>
</dbReference>
<dbReference type="EnsemblPlants" id="TraesKARUn01G0036590.1">
    <property type="protein sequence ID" value="cds.TraesKARUn01G0036590.1"/>
    <property type="gene ID" value="TraesKARUn01G0036590"/>
</dbReference>
<dbReference type="EnsemblPlants" id="TraesKARUn01G0036730.1">
    <property type="protein sequence ID" value="cds.TraesKARUn01G0036730.1"/>
    <property type="gene ID" value="TraesKARUn01G0036730"/>
</dbReference>
<dbReference type="EnsemblPlants" id="TraesKARUn01G0036860.1">
    <property type="protein sequence ID" value="cds.TraesKARUn01G0036860.1"/>
    <property type="gene ID" value="TraesKARUn01G0036860"/>
</dbReference>
<dbReference type="EnsemblPlants" id="TraesKARUn01G0037020.1">
    <property type="protein sequence ID" value="cds.TraesKARUn01G0037020.1"/>
    <property type="gene ID" value="TraesKARUn01G0037020"/>
</dbReference>
<dbReference type="EnsemblPlants" id="TraesKARUn01G0057960.1">
    <property type="protein sequence ID" value="cds.TraesKARUn01G0057960.1"/>
    <property type="gene ID" value="TraesKARUn01G0057960"/>
</dbReference>
<dbReference type="EnsemblPlants" id="TraesKARUn01G0060280.1">
    <property type="protein sequence ID" value="cds.TraesKARUn01G0060280.1"/>
    <property type="gene ID" value="TraesKARUn01G0060280"/>
</dbReference>
<dbReference type="EnsemblPlants" id="TraesKARUn01G0060410.1">
    <property type="protein sequence ID" value="cds.TraesKARUn01G0060410.1"/>
    <property type="gene ID" value="TraesKARUn01G0060410"/>
</dbReference>
<dbReference type="EnsemblPlants" id="TraesKARUn01G0060480.1">
    <property type="protein sequence ID" value="cds.TraesKARUn01G0060480.1"/>
    <property type="gene ID" value="TraesKARUn01G0060480"/>
</dbReference>
<dbReference type="EnsemblPlants" id="TraesKARUn01G0061170.1">
    <property type="protein sequence ID" value="cds.TraesKARUn01G0061170.1"/>
    <property type="gene ID" value="TraesKARUn01G0061170"/>
</dbReference>
<dbReference type="EnsemblPlants" id="TraesKARUn01G0064370.1">
    <property type="protein sequence ID" value="cds.TraesKARUn01G0064370.1"/>
    <property type="gene ID" value="TraesKARUn01G0064370"/>
</dbReference>
<dbReference type="EnsemblPlants" id="TraesKARUn01G0064420.1">
    <property type="protein sequence ID" value="cds.TraesKARUn01G0064420.1"/>
    <property type="gene ID" value="TraesKARUn01G0064420"/>
</dbReference>
<dbReference type="EnsemblPlants" id="TraesKARUn01G0065230.1">
    <property type="protein sequence ID" value="cds.TraesKARUn01G0065230.1"/>
    <property type="gene ID" value="TraesKARUn01G0065230"/>
</dbReference>
<dbReference type="EnsemblPlants" id="TraesKARUn01G0065400.1">
    <property type="protein sequence ID" value="cds.TraesKARUn01G0065400.1"/>
    <property type="gene ID" value="TraesKARUn01G0065400"/>
</dbReference>
<dbReference type="EnsemblPlants" id="TraesKARUn01G0065700.1">
    <property type="protein sequence ID" value="cds.TraesKARUn01G0065700.1"/>
    <property type="gene ID" value="TraesKARUn01G0065700"/>
</dbReference>
<dbReference type="EnsemblPlants" id="TraesKARUn01G0065840.1">
    <property type="protein sequence ID" value="cds.TraesKARUn01G0065840.1"/>
    <property type="gene ID" value="TraesKARUn01G0065840"/>
</dbReference>
<dbReference type="EnsemblPlants" id="TraesKARUn01G0066410.1">
    <property type="protein sequence ID" value="cds.TraesKARUn01G0066410.1"/>
    <property type="gene ID" value="TraesKARUn01G0066410"/>
</dbReference>
<dbReference type="EnsemblPlants" id="TraesKARUn01G0066760.1">
    <property type="protein sequence ID" value="cds.TraesKARUn01G0066760.1"/>
    <property type="gene ID" value="TraesKARUn01G0066760"/>
</dbReference>
<dbReference type="EnsemblPlants" id="TraesKARUn01G0066920.1">
    <property type="protein sequence ID" value="cds.TraesKARUn01G0066920.1"/>
    <property type="gene ID" value="TraesKARUn01G0066920"/>
</dbReference>
<dbReference type="EnsemblPlants" id="TraesKARUn01G0067080.1">
    <property type="protein sequence ID" value="cds.TraesKARUn01G0067080.1"/>
    <property type="gene ID" value="TraesKARUn01G0067080"/>
</dbReference>
<dbReference type="EnsemblPlants" id="TraesKARUn01G0067210.1">
    <property type="protein sequence ID" value="cds.TraesKARUn01G0067210.1"/>
    <property type="gene ID" value="TraesKARUn01G0067210"/>
</dbReference>
<dbReference type="EnsemblPlants" id="TraesKARUn01G0067260.1">
    <property type="protein sequence ID" value="cds.TraesKARUn01G0067260.1"/>
    <property type="gene ID" value="TraesKARUn01G0067260"/>
</dbReference>
<dbReference type="EnsemblPlants" id="TraesKARUn01G0067480.1">
    <property type="protein sequence ID" value="cds.TraesKARUn01G0067480.1"/>
    <property type="gene ID" value="TraesKARUn01G0067480"/>
</dbReference>
<dbReference type="EnsemblPlants" id="TraesKARUn01G0067560.1">
    <property type="protein sequence ID" value="cds.TraesKARUn01G0067560.1"/>
    <property type="gene ID" value="TraesKARUn01G0067560"/>
</dbReference>
<dbReference type="EnsemblPlants" id="TraesKARUn01G0068110.1">
    <property type="protein sequence ID" value="cds.TraesKARUn01G0068110.1"/>
    <property type="gene ID" value="TraesKARUn01G0068110"/>
</dbReference>
<dbReference type="EnsemblPlants" id="TraesKARUn01G0068160.1">
    <property type="protein sequence ID" value="cds.TraesKARUn01G0068160.1"/>
    <property type="gene ID" value="TraesKARUn01G0068160"/>
</dbReference>
<dbReference type="EnsemblPlants" id="TraesKARUn01G0068380.1">
    <property type="protein sequence ID" value="cds.TraesKARUn01G0068380.1"/>
    <property type="gene ID" value="TraesKARUn01G0068380"/>
</dbReference>
<dbReference type="EnsemblPlants" id="TraesKARUn01G0068520.1">
    <property type="protein sequence ID" value="cds.TraesKARUn01G0068520.1"/>
    <property type="gene ID" value="TraesKARUn01G0068520"/>
</dbReference>
<dbReference type="EnsemblPlants" id="TraesKARUn01G0068700.1">
    <property type="protein sequence ID" value="cds.TraesKARUn01G0068700.1"/>
    <property type="gene ID" value="TraesKARUn01G0068700"/>
</dbReference>
<dbReference type="EnsemblPlants" id="TraesKARUn01G0068750.1">
    <property type="protein sequence ID" value="cds.TraesKARUn01G0068750.1"/>
    <property type="gene ID" value="TraesKARUn01G0068750"/>
</dbReference>
<dbReference type="EnsemblPlants" id="TraesKARUn01G0069200.1">
    <property type="protein sequence ID" value="cds.TraesKARUn01G0069200.1"/>
    <property type="gene ID" value="TraesKARUn01G0069200"/>
</dbReference>
<dbReference type="EnsemblPlants" id="TraesKARUn01G0069400.1">
    <property type="protein sequence ID" value="cds.TraesKARUn01G0069400.1"/>
    <property type="gene ID" value="TraesKARUn01G0069400"/>
</dbReference>
<dbReference type="EnsemblPlants" id="TraesKARUn01G0069500.1">
    <property type="protein sequence ID" value="cds.TraesKARUn01G0069500.1"/>
    <property type="gene ID" value="TraesKARUn01G0069500"/>
</dbReference>
<dbReference type="EnsemblPlants" id="TraesKARUn01G0069550.1">
    <property type="protein sequence ID" value="cds.TraesKARUn01G0069550.1"/>
    <property type="gene ID" value="TraesKARUn01G0069550"/>
</dbReference>
<dbReference type="EnsemblPlants" id="TraesKARUn01G0069700.1">
    <property type="protein sequence ID" value="cds.TraesKARUn01G0069700.1"/>
    <property type="gene ID" value="TraesKARUn01G0069700"/>
</dbReference>
<dbReference type="EnsemblPlants" id="TraesKARUn01G0071360.1">
    <property type="protein sequence ID" value="cds.TraesKARUn01G0071360.1"/>
    <property type="gene ID" value="TraesKARUn01G0071360"/>
</dbReference>
<dbReference type="EnsemblPlants" id="TraesKARUn01G0071420.1">
    <property type="protein sequence ID" value="cds.TraesKARUn01G0071420.1"/>
    <property type="gene ID" value="TraesKARUn01G0071420"/>
</dbReference>
<dbReference type="EnsemblPlants" id="TraesKARUn01G0071540.1">
    <property type="protein sequence ID" value="cds.TraesKARUn01G0071540.1"/>
    <property type="gene ID" value="TraesKARUn01G0071540"/>
</dbReference>
<dbReference type="EnsemblPlants" id="TraesKARUn01G0071720.1">
    <property type="protein sequence ID" value="cds.TraesKARUn01G0071720.1"/>
    <property type="gene ID" value="TraesKARUn01G0071720"/>
</dbReference>
<dbReference type="EnsemblPlants" id="TraesKARUn01G0072130.1">
    <property type="protein sequence ID" value="cds.TraesKARUn01G0072130.1"/>
    <property type="gene ID" value="TraesKARUn01G0072130"/>
</dbReference>
<dbReference type="EnsemblPlants" id="TraesKARUn01G0072340.1">
    <property type="protein sequence ID" value="cds.TraesKARUn01G0072340.1"/>
    <property type="gene ID" value="TraesKARUn01G0072340"/>
</dbReference>
<dbReference type="EnsemblPlants" id="TraesKARUn01G0072700.1">
    <property type="protein sequence ID" value="cds.TraesKARUn01G0072700.1"/>
    <property type="gene ID" value="TraesKARUn01G0072700"/>
</dbReference>
<dbReference type="EnsemblPlants" id="TraesKARUn01G0072870.1">
    <property type="protein sequence ID" value="cds.TraesKARUn01G0072870.1"/>
    <property type="gene ID" value="TraesKARUn01G0072870"/>
</dbReference>
<dbReference type="EnsemblPlants" id="TraesKARUn01G0073280.1">
    <property type="protein sequence ID" value="cds.TraesKARUn01G0073280.1"/>
    <property type="gene ID" value="TraesKARUn01G0073280"/>
</dbReference>
<dbReference type="EnsemblPlants" id="TraesKARUn01G0073570.1">
    <property type="protein sequence ID" value="cds.TraesKARUn01G0073570.1"/>
    <property type="gene ID" value="TraesKARUn01G0073570"/>
</dbReference>
<dbReference type="EnsemblPlants" id="TraesKARUn01G0073810.1">
    <property type="protein sequence ID" value="cds.TraesKARUn01G0073810.1"/>
    <property type="gene ID" value="TraesKARUn01G0073810"/>
</dbReference>
<dbReference type="EnsemblPlants" id="TraesKARUn01G0075400.1">
    <property type="protein sequence ID" value="cds.TraesKARUn01G0075400.1"/>
    <property type="gene ID" value="TraesKARUn01G0075400"/>
</dbReference>
<dbReference type="EnsemblPlants" id="TraesKARUn01G0075440.1">
    <property type="protein sequence ID" value="cds.TraesKARUn01G0075440.1"/>
    <property type="gene ID" value="TraesKARUn01G0075440"/>
</dbReference>
<dbReference type="EnsemblPlants" id="TraesKARUn01G0075790.1">
    <property type="protein sequence ID" value="cds.TraesKARUn01G0075790.1"/>
    <property type="gene ID" value="TraesKARUn01G0075790"/>
</dbReference>
<dbReference type="EnsemblPlants" id="TraesKARUn01G0076870.1">
    <property type="protein sequence ID" value="cds.TraesKARUn01G0076870.1"/>
    <property type="gene ID" value="TraesKARUn01G0076870"/>
</dbReference>
<dbReference type="EnsemblPlants" id="TraesKARUn01G0076940.1">
    <property type="protein sequence ID" value="cds.TraesKARUn01G0076940.1"/>
    <property type="gene ID" value="TraesKARUn01G0076940"/>
</dbReference>
<dbReference type="EnsemblPlants" id="TraesKARUn01G0077340.1">
    <property type="protein sequence ID" value="cds.TraesKARUn01G0077340.1"/>
    <property type="gene ID" value="TraesKARUn01G0077340"/>
</dbReference>
<dbReference type="EnsemblPlants" id="TraesKARUn01G0077510.1">
    <property type="protein sequence ID" value="cds.TraesKARUn01G0077510.1"/>
    <property type="gene ID" value="TraesKARUn01G0077510"/>
</dbReference>
<dbReference type="EnsemblPlants" id="TraesKARUn01G0077600.1">
    <property type="protein sequence ID" value="cds.TraesKARUn01G0077600.1"/>
    <property type="gene ID" value="TraesKARUn01G0077600"/>
</dbReference>
<dbReference type="EnsemblPlants" id="TraesKARUn01G0077970.1">
    <property type="protein sequence ID" value="cds.TraesKARUn01G0077970.1"/>
    <property type="gene ID" value="TraesKARUn01G0077970"/>
</dbReference>
<dbReference type="EnsemblPlants" id="TraesKARUn01G0078130.1">
    <property type="protein sequence ID" value="cds.TraesKARUn01G0078130.1"/>
    <property type="gene ID" value="TraesKARUn01G0078130"/>
</dbReference>
<dbReference type="EnsemblPlants" id="TraesKARUn01G0078270.1">
    <property type="protein sequence ID" value="cds.TraesKARUn01G0078270.1"/>
    <property type="gene ID" value="TraesKARUn01G0078270"/>
</dbReference>
<dbReference type="EnsemblPlants" id="TraesKARUn01G0078480.1">
    <property type="protein sequence ID" value="cds.TraesKARUn01G0078480.1"/>
    <property type="gene ID" value="TraesKARUn01G0078480"/>
</dbReference>
<dbReference type="EnsemblPlants" id="TraesKARUn01G0078690.1">
    <property type="protein sequence ID" value="cds.TraesKARUn01G0078690.1"/>
    <property type="gene ID" value="TraesKARUn01G0078690"/>
</dbReference>
<dbReference type="EnsemblPlants" id="TraesKARUn01G0078920.1">
    <property type="protein sequence ID" value="cds.TraesKARUn01G0078920.1"/>
    <property type="gene ID" value="TraesKARUn01G0078920"/>
</dbReference>
<dbReference type="EnsemblPlants" id="TraesKARUn01G0079010.1">
    <property type="protein sequence ID" value="cds.TraesKARUn01G0079010.1"/>
    <property type="gene ID" value="TraesKARUn01G0079010"/>
</dbReference>
<dbReference type="EnsemblPlants" id="TraesKARUn01G0079250.1">
    <property type="protein sequence ID" value="cds.TraesKARUn01G0079250.1"/>
    <property type="gene ID" value="TraesKARUn01G0079250"/>
</dbReference>
<dbReference type="EnsemblPlants" id="TraesKARUn01G0079490.1">
    <property type="protein sequence ID" value="cds.TraesKARUn01G0079490.1"/>
    <property type="gene ID" value="TraesKARUn01G0079490"/>
</dbReference>
<dbReference type="EnsemblPlants" id="TraesKARUn01G0079570.1">
    <property type="protein sequence ID" value="cds.TraesKARUn01G0079570.1"/>
    <property type="gene ID" value="TraesKARUn01G0079570"/>
</dbReference>
<dbReference type="EnsemblPlants" id="TraesKARUn01G0080000.1">
    <property type="protein sequence ID" value="cds.TraesKARUn01G0080000.1"/>
    <property type="gene ID" value="TraesKARUn01G0080000"/>
</dbReference>
<dbReference type="EnsemblPlants" id="TraesKARUn01G0080250.1">
    <property type="protein sequence ID" value="cds.TraesKARUn01G0080250.1"/>
    <property type="gene ID" value="TraesKARUn01G0080250"/>
</dbReference>
<dbReference type="EnsemblPlants" id="TraesKARUn01G0080370.1">
    <property type="protein sequence ID" value="cds.TraesKARUn01G0080370.1"/>
    <property type="gene ID" value="TraesKARUn01G0080370"/>
</dbReference>
<dbReference type="EnsemblPlants" id="TraesKARUn01G0080560.1">
    <property type="protein sequence ID" value="cds.TraesKARUn01G0080560.1"/>
    <property type="gene ID" value="TraesKARUn01G0080560"/>
</dbReference>
<dbReference type="EnsemblPlants" id="TraesKARUn01G0080740.1">
    <property type="protein sequence ID" value="cds.TraesKARUn01G0080740.1"/>
    <property type="gene ID" value="TraesKARUn01G0080740"/>
</dbReference>
<dbReference type="EnsemblPlants" id="TraesKARUn01G0080890.1">
    <property type="protein sequence ID" value="cds.TraesKARUn01G0080890.1"/>
    <property type="gene ID" value="TraesKARUn01G0080890"/>
</dbReference>
<dbReference type="EnsemblPlants" id="TraesKARUn01G0081060.1">
    <property type="protein sequence ID" value="cds.TraesKARUn01G0081060.1"/>
    <property type="gene ID" value="TraesKARUn01G0081060"/>
</dbReference>
<dbReference type="EnsemblPlants" id="TraesKARUn01G0081170.1">
    <property type="protein sequence ID" value="cds.TraesKARUn01G0081170.1"/>
    <property type="gene ID" value="TraesKARUn01G0081170"/>
</dbReference>
<dbReference type="EnsemblPlants" id="TraesKARUn01G0081420.1">
    <property type="protein sequence ID" value="cds.TraesKARUn01G0081420.1"/>
    <property type="gene ID" value="TraesKARUn01G0081420"/>
</dbReference>
<dbReference type="EnsemblPlants" id="TraesKARUn01G0081510.1">
    <property type="protein sequence ID" value="cds.TraesKARUn01G0081510.1"/>
    <property type="gene ID" value="TraesKARUn01G0081510"/>
</dbReference>
<dbReference type="EnsemblPlants" id="TraesKARUn01G0081540.1">
    <property type="protein sequence ID" value="cds.TraesKARUn01G0081540.1"/>
    <property type="gene ID" value="TraesKARUn01G0081540"/>
</dbReference>
<dbReference type="EnsemblPlants" id="TraesKARUn01G0081760.1">
    <property type="protein sequence ID" value="cds.TraesKARUn01G0081760.1"/>
    <property type="gene ID" value="TraesKARUn01G0081760"/>
</dbReference>
<dbReference type="EnsemblPlants" id="TraesKARUn01G0081810.1">
    <property type="protein sequence ID" value="cds.TraesKARUn01G0081810.1"/>
    <property type="gene ID" value="TraesKARUn01G0081810"/>
</dbReference>
<dbReference type="EnsemblPlants" id="TraesKARUn01G0082040.1">
    <property type="protein sequence ID" value="cds.TraesKARUn01G0082040.1"/>
    <property type="gene ID" value="TraesKARUn01G0082040"/>
</dbReference>
<dbReference type="EnsemblPlants" id="TraesKARUn01G0082240.1">
    <property type="protein sequence ID" value="cds.TraesKARUn01G0082240.1"/>
    <property type="gene ID" value="TraesKARUn01G0082240"/>
</dbReference>
<dbReference type="EnsemblPlants" id="TraesKARUn01G0082520.1">
    <property type="protein sequence ID" value="cds.TraesKARUn01G0082520.1"/>
    <property type="gene ID" value="TraesKARUn01G0082520"/>
</dbReference>
<dbReference type="EnsemblPlants" id="TraesKARUn01G0082630.1">
    <property type="protein sequence ID" value="cds.TraesKARUn01G0082630.1"/>
    <property type="gene ID" value="TraesKARUn01G0082630"/>
</dbReference>
<dbReference type="EnsemblPlants" id="TraesKARUn01G0082780.1">
    <property type="protein sequence ID" value="cds.TraesKARUn01G0082780.1"/>
    <property type="gene ID" value="TraesKARUn01G0082780"/>
</dbReference>
<dbReference type="EnsemblPlants" id="TraesKARUn01G0082970.1">
    <property type="protein sequence ID" value="cds.TraesKARUn01G0082970.1"/>
    <property type="gene ID" value="TraesKARUn01G0082970"/>
</dbReference>
<dbReference type="EnsemblPlants" id="TraesKARUn01G0083140.1">
    <property type="protein sequence ID" value="cds.TraesKARUn01G0083140.1"/>
    <property type="gene ID" value="TraesKARUn01G0083140"/>
</dbReference>
<dbReference type="EnsemblPlants" id="TraesKARUn01G0083200.1">
    <property type="protein sequence ID" value="cds.TraesKARUn01G0083200.1"/>
    <property type="gene ID" value="TraesKARUn01G0083200"/>
</dbReference>
<dbReference type="EnsemblPlants" id="TraesKARUn01G0083370.1">
    <property type="protein sequence ID" value="cds.TraesKARUn01G0083370.1"/>
    <property type="gene ID" value="TraesKARUn01G0083370"/>
</dbReference>
<dbReference type="EnsemblPlants" id="TraesKARUn01G0083460.1">
    <property type="protein sequence ID" value="cds.TraesKARUn01G0083460.1"/>
    <property type="gene ID" value="TraesKARUn01G0083460"/>
</dbReference>
<dbReference type="EnsemblPlants" id="TraesKARUn01G0083490.1">
    <property type="protein sequence ID" value="cds.TraesKARUn01G0083490.1"/>
    <property type="gene ID" value="TraesKARUn01G0083490"/>
</dbReference>
<dbReference type="EnsemblPlants" id="TraesKARUn01G0083820.1">
    <property type="protein sequence ID" value="cds.TraesKARUn01G0083820.1"/>
    <property type="gene ID" value="TraesKARUn01G0083820"/>
</dbReference>
<dbReference type="EnsemblPlants" id="TraesKARUn01G0084060.1">
    <property type="protein sequence ID" value="cds.TraesKARUn01G0084060.1"/>
    <property type="gene ID" value="TraesKARUn01G0084060"/>
</dbReference>
<dbReference type="EnsemblPlants" id="TraesKARUn01G0084130.1">
    <property type="protein sequence ID" value="cds.TraesKARUn01G0084130.1"/>
    <property type="gene ID" value="TraesKARUn01G0084130"/>
</dbReference>
<dbReference type="EnsemblPlants" id="TraesKARUn01G0084930.1">
    <property type="protein sequence ID" value="cds.TraesKARUn01G0084930.1"/>
    <property type="gene ID" value="TraesKARUn01G0084930"/>
</dbReference>
<dbReference type="EnsemblPlants" id="TraesKARUn01G0085300.1">
    <property type="protein sequence ID" value="cds.TraesKARUn01G0085300.1"/>
    <property type="gene ID" value="TraesKARUn01G0085300"/>
</dbReference>
<dbReference type="EnsemblPlants" id="TraesKARUn01G0085400.1">
    <property type="protein sequence ID" value="cds.TraesKARUn01G0085400.1"/>
    <property type="gene ID" value="TraesKARUn01G0085400"/>
</dbReference>
<dbReference type="EnsemblPlants" id="TraesKARUn01G0086040.1">
    <property type="protein sequence ID" value="cds.TraesKARUn01G0086040.1"/>
    <property type="gene ID" value="TraesKARUn01G0086040"/>
</dbReference>
<dbReference type="EnsemblPlants" id="TraesKARUn01G0086210.1">
    <property type="protein sequence ID" value="cds.TraesKARUn01G0086210.1"/>
    <property type="gene ID" value="TraesKARUn01G0086210"/>
</dbReference>
<dbReference type="EnsemblPlants" id="TraesKARUn01G0086380.1">
    <property type="protein sequence ID" value="cds.TraesKARUn01G0086380.1"/>
    <property type="gene ID" value="TraesKARUn01G0086380"/>
</dbReference>
<dbReference type="EnsemblPlants" id="TraesKARUn01G0086760.1">
    <property type="protein sequence ID" value="cds.TraesKARUn01G0086760.1"/>
    <property type="gene ID" value="TraesKARUn01G0086760"/>
</dbReference>
<dbReference type="EnsemblPlants" id="TraesKARUn01G0087250.1">
    <property type="protein sequence ID" value="cds.TraesKARUn01G0087250.1"/>
    <property type="gene ID" value="TraesKARUn01G0087250"/>
</dbReference>
<dbReference type="EnsemblPlants" id="TraesKARUn01G0087940.1">
    <property type="protein sequence ID" value="cds.TraesKARUn01G0087940.1"/>
    <property type="gene ID" value="TraesKARUn01G0087940"/>
</dbReference>
<dbReference type="EnsemblPlants" id="TraesKARUn01G0088080.1">
    <property type="protein sequence ID" value="cds.TraesKARUn01G0088080.1"/>
    <property type="gene ID" value="TraesKARUn01G0088080"/>
</dbReference>
<dbReference type="EnsemblPlants" id="TraesKARUn01G0088220.1">
    <property type="protein sequence ID" value="cds.TraesKARUn01G0088220.1"/>
    <property type="gene ID" value="TraesKARUn01G0088220"/>
</dbReference>
<dbReference type="EnsemblPlants" id="TraesKARUn01G0088370.1">
    <property type="protein sequence ID" value="cds.TraesKARUn01G0088370.1"/>
    <property type="gene ID" value="TraesKARUn01G0088370"/>
</dbReference>
<dbReference type="EnsemblPlants" id="TraesKARUn01G0088800.1">
    <property type="protein sequence ID" value="cds.TraesKARUn01G0088800.1"/>
    <property type="gene ID" value="TraesKARUn01G0088800"/>
</dbReference>
<dbReference type="EnsemblPlants" id="TraesKARUn01G0088880.1">
    <property type="protein sequence ID" value="cds.TraesKARUn01G0088880.1"/>
    <property type="gene ID" value="TraesKARUn01G0088880"/>
</dbReference>
<dbReference type="EnsemblPlants" id="TraesKARUn01G0089150.1">
    <property type="protein sequence ID" value="cds.TraesKARUn01G0089150.1"/>
    <property type="gene ID" value="TraesKARUn01G0089150"/>
</dbReference>
<dbReference type="EnsemblPlants" id="TraesKARUn01G0089240.1">
    <property type="protein sequence ID" value="cds.TraesKARUn01G0089240.1"/>
    <property type="gene ID" value="TraesKARUn01G0089240"/>
</dbReference>
<dbReference type="EnsemblPlants" id="TraesKARUn01G0089360.1">
    <property type="protein sequence ID" value="cds.TraesKARUn01G0089360.1"/>
    <property type="gene ID" value="TraesKARUn01G0089360"/>
</dbReference>
<dbReference type="EnsemblPlants" id="TraesKARUn01G0089630.1">
    <property type="protein sequence ID" value="cds.TraesKARUn01G0089630.1"/>
    <property type="gene ID" value="TraesKARUn01G0089630"/>
</dbReference>
<dbReference type="EnsemblPlants" id="TraesKARUn01G0089880.1">
    <property type="protein sequence ID" value="cds.TraesKARUn01G0089880.1"/>
    <property type="gene ID" value="TraesKARUn01G0089880"/>
</dbReference>
<dbReference type="EnsemblPlants" id="TraesKARUn01G0089980.1">
    <property type="protein sequence ID" value="cds.TraesKARUn01G0089980.1"/>
    <property type="gene ID" value="TraesKARUn01G0089980"/>
</dbReference>
<dbReference type="EnsemblPlants" id="TraesKARUn01G0090060.1">
    <property type="protein sequence ID" value="cds.TraesKARUn01G0090060.1"/>
    <property type="gene ID" value="TraesKARUn01G0090060"/>
</dbReference>
<dbReference type="EnsemblPlants" id="TraesKARUn01G0090160.1">
    <property type="protein sequence ID" value="cds.TraesKARUn01G0090160.1"/>
    <property type="gene ID" value="TraesKARUn01G0090160"/>
</dbReference>
<dbReference type="EnsemblPlants" id="TraesKARUn01G0090270.1">
    <property type="protein sequence ID" value="cds.TraesKARUn01G0090270.1"/>
    <property type="gene ID" value="TraesKARUn01G0090270"/>
</dbReference>
<dbReference type="EnsemblPlants" id="TraesKARUn01G0090870.1">
    <property type="protein sequence ID" value="cds.TraesKARUn01G0090870.1"/>
    <property type="gene ID" value="TraesKARUn01G0090870"/>
</dbReference>
<dbReference type="EnsemblPlants" id="TraesKARUn01G0091250.1">
    <property type="protein sequence ID" value="cds.TraesKARUn01G0091250.1"/>
    <property type="gene ID" value="TraesKARUn01G0091250"/>
</dbReference>
<dbReference type="EnsemblPlants" id="TraesKARUn01G0091500.1">
    <property type="protein sequence ID" value="cds.TraesKARUn01G0091500.1"/>
    <property type="gene ID" value="TraesKARUn01G0091500"/>
</dbReference>
<dbReference type="EnsemblPlants" id="TraesKARUn01G0091580.1">
    <property type="protein sequence ID" value="cds.TraesKARUn01G0091580.1"/>
    <property type="gene ID" value="TraesKARUn01G0091580"/>
</dbReference>
<dbReference type="EnsemblPlants" id="TraesKARUn01G0091680.1">
    <property type="protein sequence ID" value="cds.TraesKARUn01G0091680.1"/>
    <property type="gene ID" value="TraesKARUn01G0091680"/>
</dbReference>
<dbReference type="EnsemblPlants" id="TraesKARUn01G0091710.1">
    <property type="protein sequence ID" value="cds.TraesKARUn01G0091710.1"/>
    <property type="gene ID" value="TraesKARUn01G0091710"/>
</dbReference>
<dbReference type="EnsemblPlants" id="TraesKARUn01G0092020.1">
    <property type="protein sequence ID" value="cds.TraesKARUn01G0092020.1"/>
    <property type="gene ID" value="TraesKARUn01G0092020"/>
</dbReference>
<dbReference type="EnsemblPlants" id="TraesKARUn01G0092360.1">
    <property type="protein sequence ID" value="cds.TraesKARUn01G0092360.1"/>
    <property type="gene ID" value="TraesKARUn01G0092360"/>
</dbReference>
<dbReference type="EnsemblPlants" id="TraesKARUn01G0092950.1">
    <property type="protein sequence ID" value="cds.TraesKARUn01G0092950.1"/>
    <property type="gene ID" value="TraesKARUn01G0092950"/>
</dbReference>
<dbReference type="EnsemblPlants" id="TraesKARUn01G0093080.1">
    <property type="protein sequence ID" value="cds.TraesKARUn01G0093080.1"/>
    <property type="gene ID" value="TraesKARUn01G0093080"/>
</dbReference>
<dbReference type="EnsemblPlants" id="TraesKARUn01G0093420.1">
    <property type="protein sequence ID" value="cds.TraesKARUn01G0093420.1"/>
    <property type="gene ID" value="TraesKARUn01G0093420"/>
</dbReference>
<dbReference type="EnsemblPlants" id="TraesKARUn01G0093460.1">
    <property type="protein sequence ID" value="cds.TraesKARUn01G0093460.1"/>
    <property type="gene ID" value="TraesKARUn01G0093460"/>
</dbReference>
<dbReference type="EnsemblPlants" id="TraesKARUn01G0093500.1">
    <property type="protein sequence ID" value="cds.TraesKARUn01G0093500.1"/>
    <property type="gene ID" value="TraesKARUn01G0093500"/>
</dbReference>
<dbReference type="EnsemblPlants" id="TraesKARUn01G0093780.1">
    <property type="protein sequence ID" value="cds.TraesKARUn01G0093780.1"/>
    <property type="gene ID" value="TraesKARUn01G0093780"/>
</dbReference>
<dbReference type="EnsemblPlants" id="TraesKARUn01G0093800.1">
    <property type="protein sequence ID" value="cds.TraesKARUn01G0093800.1"/>
    <property type="gene ID" value="TraesKARUn01G0093800"/>
</dbReference>
<dbReference type="EnsemblPlants" id="TraesKARUn01G0094030.1">
    <property type="protein sequence ID" value="cds.TraesKARUn01G0094030.1"/>
    <property type="gene ID" value="TraesKARUn01G0094030"/>
</dbReference>
<dbReference type="EnsemblPlants" id="TraesKARUn01G0094230.1">
    <property type="protein sequence ID" value="cds.TraesKARUn01G0094230.1"/>
    <property type="gene ID" value="TraesKARUn01G0094230"/>
</dbReference>
<dbReference type="EnsemblPlants" id="TraesKARUn01G0094360.1">
    <property type="protein sequence ID" value="cds.TraesKARUn01G0094360.1"/>
    <property type="gene ID" value="TraesKARUn01G0094360"/>
</dbReference>
<dbReference type="EnsemblPlants" id="TraesKARUn01G0094450.1">
    <property type="protein sequence ID" value="cds.TraesKARUn01G0094450.1"/>
    <property type="gene ID" value="TraesKARUn01G0094450"/>
</dbReference>
<dbReference type="EnsemblPlants" id="TraesKARUn01G0094750.1">
    <property type="protein sequence ID" value="cds.TraesKARUn01G0094750.1"/>
    <property type="gene ID" value="TraesKARUn01G0094750"/>
</dbReference>
<dbReference type="EnsemblPlants" id="TraesKARUn01G0094850.1">
    <property type="protein sequence ID" value="cds.TraesKARUn01G0094850.1"/>
    <property type="gene ID" value="TraesKARUn01G0094850"/>
</dbReference>
<dbReference type="EnsemblPlants" id="TraesKARUn01G0095080.1">
    <property type="protein sequence ID" value="cds.TraesKARUn01G0095080.1"/>
    <property type="gene ID" value="TraesKARUn01G0095080"/>
</dbReference>
<dbReference type="EnsemblPlants" id="TraesKARUn01G0095100.1">
    <property type="protein sequence ID" value="cds.TraesKARUn01G0095100.1"/>
    <property type="gene ID" value="TraesKARUn01G0095100"/>
</dbReference>
<dbReference type="EnsemblPlants" id="TraesKARUn01G0095150.1">
    <property type="protein sequence ID" value="cds.TraesKARUn01G0095150.1"/>
    <property type="gene ID" value="TraesKARUn01G0095150"/>
</dbReference>
<dbReference type="EnsemblPlants" id="TraesKARUn01G0095680.1">
    <property type="protein sequence ID" value="cds.TraesKARUn01G0095680.1"/>
    <property type="gene ID" value="TraesKARUn01G0095680"/>
</dbReference>
<dbReference type="EnsemblPlants" id="TraesKARUn01G0095790.1">
    <property type="protein sequence ID" value="cds.TraesKARUn01G0095790.1"/>
    <property type="gene ID" value="TraesKARUn01G0095790"/>
</dbReference>
<dbReference type="EnsemblPlants" id="TraesKARUn01G0095930.1">
    <property type="protein sequence ID" value="cds.TraesKARUn01G0095930.1"/>
    <property type="gene ID" value="TraesKARUn01G0095930"/>
</dbReference>
<dbReference type="EnsemblPlants" id="TraesKARUn01G0096250.1">
    <property type="protein sequence ID" value="cds.TraesKARUn01G0096250.1"/>
    <property type="gene ID" value="TraesKARUn01G0096250"/>
</dbReference>
<dbReference type="EnsemblPlants" id="TraesKARUn01G0096380.1">
    <property type="protein sequence ID" value="cds.TraesKARUn01G0096380.1"/>
    <property type="gene ID" value="TraesKARUn01G0096380"/>
</dbReference>
<dbReference type="EnsemblPlants" id="TraesKARUn01G0096410.1">
    <property type="protein sequence ID" value="cds.TraesKARUn01G0096410.1"/>
    <property type="gene ID" value="TraesKARUn01G0096410"/>
</dbReference>
<dbReference type="EnsemblPlants" id="TraesKARUn01G0096490.1">
    <property type="protein sequence ID" value="cds.TraesKARUn01G0096490.1"/>
    <property type="gene ID" value="TraesKARUn01G0096490"/>
</dbReference>
<dbReference type="EnsemblPlants" id="TraesKARUn01G0096730.1">
    <property type="protein sequence ID" value="cds.TraesKARUn01G0096730.1"/>
    <property type="gene ID" value="TraesKARUn01G0096730"/>
</dbReference>
<dbReference type="EnsemblPlants" id="TraesKARUn01G0096830.1">
    <property type="protein sequence ID" value="cds.TraesKARUn01G0096830.1"/>
    <property type="gene ID" value="TraesKARUn01G0096830"/>
</dbReference>
<dbReference type="EnsemblPlants" id="TraesKARUn01G0097020.1">
    <property type="protein sequence ID" value="cds.TraesKARUn01G0097020.1"/>
    <property type="gene ID" value="TraesKARUn01G0097020"/>
</dbReference>
<dbReference type="EnsemblPlants" id="TraesKARUn01G0097140.1">
    <property type="protein sequence ID" value="cds.TraesKARUn01G0097140.1"/>
    <property type="gene ID" value="TraesKARUn01G0097140"/>
</dbReference>
<dbReference type="EnsemblPlants" id="TraesKARUn01G0097190.1">
    <property type="protein sequence ID" value="cds.TraesKARUn01G0097190.1"/>
    <property type="gene ID" value="TraesKARUn01G0097190"/>
</dbReference>
<dbReference type="EnsemblPlants" id="TraesKARUn01G0097550.1">
    <property type="protein sequence ID" value="cds.TraesKARUn01G0097550.1"/>
    <property type="gene ID" value="TraesKARUn01G0097550"/>
</dbReference>
<dbReference type="EnsemblPlants" id="TraesKARUn01G0097760.1">
    <property type="protein sequence ID" value="cds.TraesKARUn01G0097760.1"/>
    <property type="gene ID" value="TraesKARUn01G0097760"/>
</dbReference>
<dbReference type="EnsemblPlants" id="TraesKARUn01G0098050.1">
    <property type="protein sequence ID" value="cds.TraesKARUn01G0098050.1"/>
    <property type="gene ID" value="TraesKARUn01G0098050"/>
</dbReference>
<dbReference type="EnsemblPlants" id="TraesKARUn01G0098290.1">
    <property type="protein sequence ID" value="cds.TraesKARUn01G0098290.1"/>
    <property type="gene ID" value="TraesKARUn01G0098290"/>
</dbReference>
<dbReference type="EnsemblPlants" id="TraesKARUn01G0098450.1">
    <property type="protein sequence ID" value="cds.TraesKARUn01G0098450.1"/>
    <property type="gene ID" value="TraesKARUn01G0098450"/>
</dbReference>
<dbReference type="EnsemblPlants" id="TraesKARUn01G0098470.1">
    <property type="protein sequence ID" value="cds.TraesKARUn01G0098470.1"/>
    <property type="gene ID" value="TraesKARUn01G0098470"/>
</dbReference>
<dbReference type="EnsemblPlants" id="TraesKARUn01G0098670.1">
    <property type="protein sequence ID" value="cds.TraesKARUn01G0098670.1"/>
    <property type="gene ID" value="TraesKARUn01G0098670"/>
</dbReference>
<dbReference type="EnsemblPlants" id="TraesKARUn01G0099330.1">
    <property type="protein sequence ID" value="cds.TraesKARUn01G0099330.1"/>
    <property type="gene ID" value="TraesKARUn01G0099330"/>
</dbReference>
<dbReference type="EnsemblPlants" id="TraesKARUn01G0099780.1">
    <property type="protein sequence ID" value="cds.TraesKARUn01G0099780.1"/>
    <property type="gene ID" value="TraesKARUn01G0099780"/>
</dbReference>
<dbReference type="EnsemblPlants" id="TraesKARUn01G0099920.1">
    <property type="protein sequence ID" value="cds.TraesKARUn01G0099920.1"/>
    <property type="gene ID" value="TraesKARUn01G0099920"/>
</dbReference>
<dbReference type="EnsemblPlants" id="TraesKARUn01G0099980.1">
    <property type="protein sequence ID" value="cds.TraesKARUn01G0099980.1"/>
    <property type="gene ID" value="TraesKARUn01G0099980"/>
</dbReference>
<dbReference type="EnsemblPlants" id="TraesKARUn01G0100030.1">
    <property type="protein sequence ID" value="cds.TraesKARUn01G0100030.1"/>
    <property type="gene ID" value="TraesKARUn01G0100030"/>
</dbReference>
<dbReference type="EnsemblPlants" id="TraesKARUn01G0100200.1">
    <property type="protein sequence ID" value="cds.TraesKARUn01G0100200.1"/>
    <property type="gene ID" value="TraesKARUn01G0100200"/>
</dbReference>
<dbReference type="EnsemblPlants" id="TraesKARUn01G0100280.1">
    <property type="protein sequence ID" value="cds.TraesKARUn01G0100280.1"/>
    <property type="gene ID" value="TraesKARUn01G0100280"/>
</dbReference>
<dbReference type="EnsemblPlants" id="TraesKARUn01G0100340.1">
    <property type="protein sequence ID" value="cds.TraesKARUn01G0100340.1"/>
    <property type="gene ID" value="TraesKARUn01G0100340"/>
</dbReference>
<dbReference type="EnsemblPlants" id="TraesKARUn01G0100360.1">
    <property type="protein sequence ID" value="cds.TraesKARUn01G0100360.1"/>
    <property type="gene ID" value="TraesKARUn01G0100360"/>
</dbReference>
<dbReference type="EnsemblPlants" id="TraesKARUn01G0100660.1">
    <property type="protein sequence ID" value="cds.TraesKARUn01G0100660.1"/>
    <property type="gene ID" value="TraesKARUn01G0100660"/>
</dbReference>
<dbReference type="EnsemblPlants" id="TraesKARUn01G0100870.1">
    <property type="protein sequence ID" value="cds.TraesKARUn01G0100870.1"/>
    <property type="gene ID" value="TraesKARUn01G0100870"/>
</dbReference>
<dbReference type="EnsemblPlants" id="TraesKARUn01G0101630.1">
    <property type="protein sequence ID" value="cds.TraesKARUn01G0101630.1"/>
    <property type="gene ID" value="TraesKARUn01G0101630"/>
</dbReference>
<dbReference type="EnsemblPlants" id="TraesKARUn01G0101750.1">
    <property type="protein sequence ID" value="cds.TraesKARUn01G0101750.1"/>
    <property type="gene ID" value="TraesKARUn01G0101750"/>
</dbReference>
<dbReference type="EnsemblPlants" id="TraesKARUn01G0101830.1">
    <property type="protein sequence ID" value="cds.TraesKARUn01G0101830.1"/>
    <property type="gene ID" value="TraesKARUn01G0101830"/>
</dbReference>
<dbReference type="EnsemblPlants" id="TraesKARUn01G0102060.1">
    <property type="protein sequence ID" value="cds.TraesKARUn01G0102060.1"/>
    <property type="gene ID" value="TraesKARUn01G0102060"/>
</dbReference>
<dbReference type="EnsemblPlants" id="TraesKARUn01G0102370.1">
    <property type="protein sequence ID" value="cds.TraesKARUn01G0102370.1"/>
    <property type="gene ID" value="TraesKARUn01G0102370"/>
</dbReference>
<dbReference type="EnsemblPlants" id="TraesKARUn01G0102380.1">
    <property type="protein sequence ID" value="cds.TraesKARUn01G0102380.1"/>
    <property type="gene ID" value="TraesKARUn01G0102380"/>
</dbReference>
<dbReference type="EnsemblPlants" id="TraesKARUn01G0102810.1">
    <property type="protein sequence ID" value="cds.TraesKARUn01G0102810.1"/>
    <property type="gene ID" value="TraesKARUn01G0102810"/>
</dbReference>
<dbReference type="EnsemblPlants" id="TraesKARUn01G0102940.1">
    <property type="protein sequence ID" value="cds.TraesKARUn01G0102940.1"/>
    <property type="gene ID" value="TraesKARUn01G0102940"/>
</dbReference>
<dbReference type="EnsemblPlants" id="TraesKARUn01G0103030.1">
    <property type="protein sequence ID" value="cds.TraesKARUn01G0103030.1"/>
    <property type="gene ID" value="TraesKARUn01G0103030"/>
</dbReference>
<dbReference type="EnsemblPlants" id="TraesKARUn01G0103620.1">
    <property type="protein sequence ID" value="cds.TraesKARUn01G0103620.1"/>
    <property type="gene ID" value="TraesKARUn01G0103620"/>
</dbReference>
<dbReference type="EnsemblPlants" id="TraesKARUn01G0103850.1">
    <property type="protein sequence ID" value="cds.TraesKARUn01G0103850.1"/>
    <property type="gene ID" value="TraesKARUn01G0103850"/>
</dbReference>
<dbReference type="EnsemblPlants" id="TraesKARUn01G0103890.1">
    <property type="protein sequence ID" value="cds.TraesKARUn01G0103890.1"/>
    <property type="gene ID" value="TraesKARUn01G0103890"/>
</dbReference>
<dbReference type="EnsemblPlants" id="TraesKARUn01G0104170.1">
    <property type="protein sequence ID" value="cds.TraesKARUn01G0104170.1"/>
    <property type="gene ID" value="TraesKARUn01G0104170"/>
</dbReference>
<dbReference type="EnsemblPlants" id="TraesKARUn01G0104370.1">
    <property type="protein sequence ID" value="cds.TraesKARUn01G0104370.1"/>
    <property type="gene ID" value="TraesKARUn01G0104370"/>
</dbReference>
<dbReference type="EnsemblPlants" id="TraesKARUn01G0105950.1">
    <property type="protein sequence ID" value="cds.TraesKARUn01G0105950.1"/>
    <property type="gene ID" value="TraesKARUn01G0105950"/>
</dbReference>
<dbReference type="EnsemblPlants" id="TraesKARUn01G0105980.1">
    <property type="protein sequence ID" value="cds.TraesKARUn01G0105980.1"/>
    <property type="gene ID" value="TraesKARUn01G0105980"/>
</dbReference>
<dbReference type="EnsemblPlants" id="TraesKARUn01G0106100.1">
    <property type="protein sequence ID" value="cds.TraesKARUn01G0106100.1"/>
    <property type="gene ID" value="TraesKARUn01G0106100"/>
</dbReference>
<dbReference type="EnsemblPlants" id="TraesKARUn01G0106120.1">
    <property type="protein sequence ID" value="cds.TraesKARUn01G0106120.1"/>
    <property type="gene ID" value="TraesKARUn01G0106120"/>
</dbReference>
<dbReference type="EnsemblPlants" id="TraesKARUn01G0106140.1">
    <property type="protein sequence ID" value="cds.TraesKARUn01G0106140.1"/>
    <property type="gene ID" value="TraesKARUn01G0106140"/>
</dbReference>
<dbReference type="EnsemblPlants" id="TraesKARUn01G0106350.1">
    <property type="protein sequence ID" value="cds.TraesKARUn01G0106350.1"/>
    <property type="gene ID" value="TraesKARUn01G0106350"/>
</dbReference>
<dbReference type="EnsemblPlants" id="TraesKARUn01G0106930.1">
    <property type="protein sequence ID" value="cds.TraesKARUn01G0106930.1"/>
    <property type="gene ID" value="TraesKARUn01G0106930"/>
</dbReference>
<dbReference type="EnsemblPlants" id="TraesKARUn01G0106980.1">
    <property type="protein sequence ID" value="cds.TraesKARUn01G0106980.1"/>
    <property type="gene ID" value="TraesKARUn01G0106980"/>
</dbReference>
<dbReference type="EnsemblPlants" id="TraesKARUn01G0107190.1">
    <property type="protein sequence ID" value="cds.TraesKARUn01G0107190.1"/>
    <property type="gene ID" value="TraesKARUn01G0107190"/>
</dbReference>
<dbReference type="EnsemblPlants" id="TraesKARUn01G0107280.1">
    <property type="protein sequence ID" value="cds.TraesKARUn01G0107280.1"/>
    <property type="gene ID" value="TraesKARUn01G0107280"/>
</dbReference>
<dbReference type="EnsemblPlants" id="TraesKARUn01G0107410.1">
    <property type="protein sequence ID" value="cds.TraesKARUn01G0107410.1"/>
    <property type="gene ID" value="TraesKARUn01G0107410"/>
</dbReference>
<dbReference type="EnsemblPlants" id="TraesKARUn01G0107440.1">
    <property type="protein sequence ID" value="cds.TraesKARUn01G0107440.1"/>
    <property type="gene ID" value="TraesKARUn01G0107440"/>
</dbReference>
<dbReference type="EnsemblPlants" id="TraesKARUn01G0107500.1">
    <property type="protein sequence ID" value="cds.TraesKARUn01G0107500.1"/>
    <property type="gene ID" value="TraesKARUn01G0107500"/>
</dbReference>
<dbReference type="EnsemblPlants" id="TraesKARUn01G0107540.1">
    <property type="protein sequence ID" value="cds.TraesKARUn01G0107540.1"/>
    <property type="gene ID" value="TraesKARUn01G0107540"/>
</dbReference>
<dbReference type="EnsemblPlants" id="TraesKARUn01G0107620.1">
    <property type="protein sequence ID" value="cds.TraesKARUn01G0107620.1"/>
    <property type="gene ID" value="TraesKARUn01G0107620"/>
</dbReference>
<dbReference type="EnsemblPlants" id="TraesKARUn01G0107650.1">
    <property type="protein sequence ID" value="cds.TraesKARUn01G0107650.1"/>
    <property type="gene ID" value="TraesKARUn01G0107650"/>
</dbReference>
<dbReference type="EnsemblPlants" id="TraesKARUn01G0107990.1">
    <property type="protein sequence ID" value="cds.TraesKARUn01G0107990.1"/>
    <property type="gene ID" value="TraesKARUn01G0107990"/>
</dbReference>
<dbReference type="EnsemblPlants" id="TraesKARUn01G0108330.1">
    <property type="protein sequence ID" value="cds.TraesKARUn01G0108330.1"/>
    <property type="gene ID" value="TraesKARUn01G0108330"/>
</dbReference>
<dbReference type="EnsemblPlants" id="TraesKARUn01G0108800.1">
    <property type="protein sequence ID" value="cds.TraesKARUn01G0108800.1"/>
    <property type="gene ID" value="TraesKARUn01G0108800"/>
</dbReference>
<dbReference type="EnsemblPlants" id="TraesKARUn01G0108900.1">
    <property type="protein sequence ID" value="cds.TraesKARUn01G0108900.1"/>
    <property type="gene ID" value="TraesKARUn01G0108900"/>
</dbReference>
<dbReference type="EnsemblPlants" id="TraesKARUn01G0109060.1">
    <property type="protein sequence ID" value="cds.TraesKARUn01G0109060.1"/>
    <property type="gene ID" value="TraesKARUn01G0109060"/>
</dbReference>
<dbReference type="EnsemblPlants" id="TraesKARUn01G0109360.1">
    <property type="protein sequence ID" value="cds.TraesKARUn01G0109360.1"/>
    <property type="gene ID" value="TraesKARUn01G0109360"/>
</dbReference>
<dbReference type="EnsemblPlants" id="TraesKARUn01G0109450.1">
    <property type="protein sequence ID" value="cds.TraesKARUn01G0109450.1"/>
    <property type="gene ID" value="TraesKARUn01G0109450"/>
</dbReference>
<dbReference type="EnsemblPlants" id="TraesKARUn01G0109630.1">
    <property type="protein sequence ID" value="cds.TraesKARUn01G0109630.1"/>
    <property type="gene ID" value="TraesKARUn01G0109630"/>
</dbReference>
<dbReference type="EnsemblPlants" id="TraesKARUn01G0109790.1">
    <property type="protein sequence ID" value="cds.TraesKARUn01G0109790.1"/>
    <property type="gene ID" value="TraesKARUn01G0109790"/>
</dbReference>
<dbReference type="EnsemblPlants" id="TraesKARUn01G0109990.1">
    <property type="protein sequence ID" value="cds.TraesKARUn01G0109990.1"/>
    <property type="gene ID" value="TraesKARUn01G0109990"/>
</dbReference>
<dbReference type="EnsemblPlants" id="TraesKARUn01G0110050.1">
    <property type="protein sequence ID" value="cds.TraesKARUn01G0110050.1"/>
    <property type="gene ID" value="TraesKARUn01G0110050"/>
</dbReference>
<dbReference type="EnsemblPlants" id="TraesKARUn01G0110110.1">
    <property type="protein sequence ID" value="cds.TraesKARUn01G0110110.1"/>
    <property type="gene ID" value="TraesKARUn01G0110110"/>
</dbReference>
<dbReference type="EnsemblPlants" id="TraesKARUn01G0110300.1">
    <property type="protein sequence ID" value="cds.TraesKARUn01G0110300.1"/>
    <property type="gene ID" value="TraesKARUn01G0110300"/>
</dbReference>
<dbReference type="EnsemblPlants" id="TraesKARUn01G0110430.1">
    <property type="protein sequence ID" value="cds.TraesKARUn01G0110430.1"/>
    <property type="gene ID" value="TraesKARUn01G0110430"/>
</dbReference>
<dbReference type="EnsemblPlants" id="TraesKARUn01G0110520.1">
    <property type="protein sequence ID" value="cds.TraesKARUn01G0110520.1"/>
    <property type="gene ID" value="TraesKARUn01G0110520"/>
</dbReference>
<dbReference type="EnsemblPlants" id="TraesKARUn01G0110560.1">
    <property type="protein sequence ID" value="cds.TraesKARUn01G0110560.1"/>
    <property type="gene ID" value="TraesKARUn01G0110560"/>
</dbReference>
<dbReference type="EnsemblPlants" id="TraesKARUn01G0110990.1">
    <property type="protein sequence ID" value="cds.TraesKARUn01G0110990.1"/>
    <property type="gene ID" value="TraesKARUn01G0110990"/>
</dbReference>
<dbReference type="EnsemblPlants" id="TraesKARUn01G0111010.1">
    <property type="protein sequence ID" value="cds.TraesKARUn01G0111010.1"/>
    <property type="gene ID" value="TraesKARUn01G0111010"/>
</dbReference>
<dbReference type="EnsemblPlants" id="TraesKARUn01G0111280.1">
    <property type="protein sequence ID" value="cds.TraesKARUn01G0111280.1"/>
    <property type="gene ID" value="TraesKARUn01G0111280"/>
</dbReference>
<dbReference type="EnsemblPlants" id="TraesKARUn01G0111450.1">
    <property type="protein sequence ID" value="cds.TraesKARUn01G0111450.1"/>
    <property type="gene ID" value="TraesKARUn01G0111450"/>
</dbReference>
<dbReference type="EnsemblPlants" id="TraesKARUn01G0111500.1">
    <property type="protein sequence ID" value="cds.TraesKARUn01G0111500.1"/>
    <property type="gene ID" value="TraesKARUn01G0111500"/>
</dbReference>
<dbReference type="EnsemblPlants" id="TraesKARUn01G0111730.1">
    <property type="protein sequence ID" value="cds.TraesKARUn01G0111730.1"/>
    <property type="gene ID" value="TraesKARUn01G0111730"/>
</dbReference>
<dbReference type="EnsemblPlants" id="TraesKARUn01G0111770.1">
    <property type="protein sequence ID" value="cds.TraesKARUn01G0111770.1"/>
    <property type="gene ID" value="TraesKARUn01G0111770"/>
</dbReference>
<dbReference type="EnsemblPlants" id="TraesKARUn01G0111920.1">
    <property type="protein sequence ID" value="cds.TraesKARUn01G0111920.1"/>
    <property type="gene ID" value="TraesKARUn01G0111920"/>
</dbReference>
<dbReference type="EnsemblPlants" id="TraesKARUn01G0112080.1">
    <property type="protein sequence ID" value="cds.TraesKARUn01G0112080.1"/>
    <property type="gene ID" value="TraesKARUn01G0112080"/>
</dbReference>
<dbReference type="EnsemblPlants" id="TraesKARUn01G0112150.1">
    <property type="protein sequence ID" value="cds.TraesKARUn01G0112150.1"/>
    <property type="gene ID" value="TraesKARUn01G0112150"/>
</dbReference>
<dbReference type="EnsemblPlants" id="TraesKARUn01G0112340.1">
    <property type="protein sequence ID" value="cds.TraesKARUn01G0112340.1"/>
    <property type="gene ID" value="TraesKARUn01G0112340"/>
</dbReference>
<dbReference type="EnsemblPlants" id="TraesKARUn01G0112400.1">
    <property type="protein sequence ID" value="cds.TraesKARUn01G0112400.1"/>
    <property type="gene ID" value="TraesKARUn01G0112400"/>
</dbReference>
<dbReference type="EnsemblPlants" id="TraesKARUn01G0112690.1">
    <property type="protein sequence ID" value="cds.TraesKARUn01G0112690.1"/>
    <property type="gene ID" value="TraesKARUn01G0112690"/>
</dbReference>
<dbReference type="EnsemblPlants" id="TraesKARUn01G0112790.1">
    <property type="protein sequence ID" value="cds.TraesKARUn01G0112790.1"/>
    <property type="gene ID" value="TraesKARUn01G0112790"/>
</dbReference>
<dbReference type="EnsemblPlants" id="TraesKARUn01G0112830.1">
    <property type="protein sequence ID" value="cds.TraesKARUn01G0112830.1"/>
    <property type="gene ID" value="TraesKARUn01G0112830"/>
</dbReference>
<dbReference type="EnsemblPlants" id="TraesKARUn01G0113140.1">
    <property type="protein sequence ID" value="cds.TraesKARUn01G0113140.1"/>
    <property type="gene ID" value="TraesKARUn01G0113140"/>
</dbReference>
<dbReference type="EnsemblPlants" id="TraesKARUn01G0113210.1">
    <property type="protein sequence ID" value="cds.TraesKARUn01G0113210.1"/>
    <property type="gene ID" value="TraesKARUn01G0113210"/>
</dbReference>
<dbReference type="EnsemblPlants" id="TraesKARUn01G0113280.1">
    <property type="protein sequence ID" value="cds.TraesKARUn01G0113280.1"/>
    <property type="gene ID" value="TraesKARUn01G0113280"/>
</dbReference>
<dbReference type="EnsemblPlants" id="TraesKARUn01G0113350.1">
    <property type="protein sequence ID" value="cds.TraesKARUn01G0113350.1"/>
    <property type="gene ID" value="TraesKARUn01G0113350"/>
</dbReference>
<dbReference type="EnsemblPlants" id="TraesKARUn01G0113500.1">
    <property type="protein sequence ID" value="cds.TraesKARUn01G0113500.1"/>
    <property type="gene ID" value="TraesKARUn01G0113500"/>
</dbReference>
<dbReference type="EnsemblPlants" id="TraesKARUn01G0113720.1">
    <property type="protein sequence ID" value="cds.TraesKARUn01G0113720.1"/>
    <property type="gene ID" value="TraesKARUn01G0113720"/>
</dbReference>
<dbReference type="EnsemblPlants" id="TraesKARUn01G0114170.1">
    <property type="protein sequence ID" value="cds.TraesKARUn01G0114170.1"/>
    <property type="gene ID" value="TraesKARUn01G0114170"/>
</dbReference>
<dbReference type="EnsemblPlants" id="TraesKARUn01G0114240.1">
    <property type="protein sequence ID" value="cds.TraesKARUn01G0114240.1"/>
    <property type="gene ID" value="TraesKARUn01G0114240"/>
</dbReference>
<dbReference type="EnsemblPlants" id="TraesKARUn01G0114270.1">
    <property type="protein sequence ID" value="cds.TraesKARUn01G0114270.1"/>
    <property type="gene ID" value="TraesKARUn01G0114270"/>
</dbReference>
<dbReference type="EnsemblPlants" id="TraesKARUn01G0114370.1">
    <property type="protein sequence ID" value="cds.TraesKARUn01G0114370.1"/>
    <property type="gene ID" value="TraesKARUn01G0114370"/>
</dbReference>
<dbReference type="EnsemblPlants" id="TraesKARUn01G0114380.1">
    <property type="protein sequence ID" value="cds.TraesKARUn01G0114380.1"/>
    <property type="gene ID" value="TraesKARUn01G0114380"/>
</dbReference>
<dbReference type="EnsemblPlants" id="TraesKARUn01G0114430.1">
    <property type="protein sequence ID" value="cds.TraesKARUn01G0114430.1"/>
    <property type="gene ID" value="TraesKARUn01G0114430"/>
</dbReference>
<dbReference type="EnsemblPlants" id="TraesKARUn01G0114790.1">
    <property type="protein sequence ID" value="cds.TraesKARUn01G0114790.1"/>
    <property type="gene ID" value="TraesKARUn01G0114790"/>
</dbReference>
<dbReference type="EnsemblPlants" id="TraesKARUn01G0114940.1">
    <property type="protein sequence ID" value="cds.TraesKARUn01G0114940.1"/>
    <property type="gene ID" value="TraesKARUn01G0114940"/>
</dbReference>
<dbReference type="EnsemblPlants" id="TraesKARUn01G0115060.1">
    <property type="protein sequence ID" value="cds.TraesKARUn01G0115060.1"/>
    <property type="gene ID" value="TraesKARUn01G0115060"/>
</dbReference>
<dbReference type="EnsemblPlants" id="TraesKARUn01G0115380.1">
    <property type="protein sequence ID" value="cds.TraesKARUn01G0115380.1"/>
    <property type="gene ID" value="TraesKARUn01G0115380"/>
</dbReference>
<dbReference type="EnsemblPlants" id="TraesKARUn01G0115570.1">
    <property type="protein sequence ID" value="cds.TraesKARUn01G0115570.1"/>
    <property type="gene ID" value="TraesKARUn01G0115570"/>
</dbReference>
<dbReference type="EnsemblPlants" id="TraesKARUn01G0115670.1">
    <property type="protein sequence ID" value="cds.TraesKARUn01G0115670.1"/>
    <property type="gene ID" value="TraesKARUn01G0115670"/>
</dbReference>
<dbReference type="EnsemblPlants" id="TraesKARUn01G0115750.1">
    <property type="protein sequence ID" value="cds.TraesKARUn01G0115750.1"/>
    <property type="gene ID" value="TraesKARUn01G0115750"/>
</dbReference>
<dbReference type="EnsemblPlants" id="TraesKARUn01G0115830.1">
    <property type="protein sequence ID" value="cds.TraesKARUn01G0115830.1"/>
    <property type="gene ID" value="TraesKARUn01G0115830"/>
</dbReference>
<dbReference type="EnsemblPlants" id="TraesKARUn01G0115970.1">
    <property type="protein sequence ID" value="cds.TraesKARUn01G0115970.1"/>
    <property type="gene ID" value="TraesKARUn01G0115970"/>
</dbReference>
<dbReference type="EnsemblPlants" id="TraesKARUn01G0116080.1">
    <property type="protein sequence ID" value="cds.TraesKARUn01G0116080.1"/>
    <property type="gene ID" value="TraesKARUn01G0116080"/>
</dbReference>
<dbReference type="EnsemblPlants" id="TraesKARUn01G0116280.1">
    <property type="protein sequence ID" value="cds.TraesKARUn01G0116280.1"/>
    <property type="gene ID" value="TraesKARUn01G0116280"/>
</dbReference>
<dbReference type="EnsemblPlants" id="TraesKARUn01G0116320.1">
    <property type="protein sequence ID" value="cds.TraesKARUn01G0116320.1"/>
    <property type="gene ID" value="TraesKARUn01G0116320"/>
</dbReference>
<dbReference type="EnsemblPlants" id="TraesKARUn01G0116620.1">
    <property type="protein sequence ID" value="cds.TraesKARUn01G0116620.1"/>
    <property type="gene ID" value="TraesKARUn01G0116620"/>
</dbReference>
<dbReference type="EnsemblPlants" id="TraesKARUn01G0116750.1">
    <property type="protein sequence ID" value="cds.TraesKARUn01G0116750.1"/>
    <property type="gene ID" value="TraesKARUn01G0116750"/>
</dbReference>
<dbReference type="EnsemblPlants" id="TraesKARUn01G0116790.1">
    <property type="protein sequence ID" value="cds.TraesKARUn01G0116790.1"/>
    <property type="gene ID" value="TraesKARUn01G0116790"/>
</dbReference>
<dbReference type="EnsemblPlants" id="TraesKARUn01G0116900.1">
    <property type="protein sequence ID" value="cds.TraesKARUn01G0116900.1"/>
    <property type="gene ID" value="TraesKARUn01G0116900"/>
</dbReference>
<dbReference type="EnsemblPlants" id="TraesKARUn01G0116960.1">
    <property type="protein sequence ID" value="cds.TraesKARUn01G0116960.1"/>
    <property type="gene ID" value="TraesKARUn01G0116960"/>
</dbReference>
<dbReference type="EnsemblPlants" id="TraesKARUn01G0117200.1">
    <property type="protein sequence ID" value="cds.TraesKARUn01G0117200.1"/>
    <property type="gene ID" value="TraesKARUn01G0117200"/>
</dbReference>
<dbReference type="EnsemblPlants" id="TraesKARUn01G0117340.1">
    <property type="protein sequence ID" value="cds.TraesKARUn01G0117340.1"/>
    <property type="gene ID" value="TraesKARUn01G0117340"/>
</dbReference>
<dbReference type="EnsemblPlants" id="TraesKARUn01G0117650.1">
    <property type="protein sequence ID" value="cds.TraesKARUn01G0117650.1"/>
    <property type="gene ID" value="TraesKARUn01G0117650"/>
</dbReference>
<dbReference type="EnsemblPlants" id="TraesKARUn01G0117800.1">
    <property type="protein sequence ID" value="cds.TraesKARUn01G0117800.1"/>
    <property type="gene ID" value="TraesKARUn01G0117800"/>
</dbReference>
<dbReference type="EnsemblPlants" id="TraesKARUn01G0117990.1">
    <property type="protein sequence ID" value="cds.TraesKARUn01G0117990.1"/>
    <property type="gene ID" value="TraesKARUn01G0117990"/>
</dbReference>
<dbReference type="EnsemblPlants" id="TraesKARUn01G0118360.1">
    <property type="protein sequence ID" value="cds.TraesKARUn01G0118360.1"/>
    <property type="gene ID" value="TraesKARUn01G0118360"/>
</dbReference>
<dbReference type="EnsemblPlants" id="TraesKARUn01G0119160.1">
    <property type="protein sequence ID" value="cds.TraesKARUn01G0119160.1"/>
    <property type="gene ID" value="TraesKARUn01G0119160"/>
</dbReference>
<dbReference type="EnsemblPlants" id="TraesKARUn01G0119750.1">
    <property type="protein sequence ID" value="cds.TraesKARUn01G0119750.1"/>
    <property type="gene ID" value="TraesKARUn01G0119750"/>
</dbReference>
<dbReference type="EnsemblPlants" id="TraesKARUn01G0119890.1">
    <property type="protein sequence ID" value="cds.TraesKARUn01G0119890.1"/>
    <property type="gene ID" value="TraesKARUn01G0119890"/>
</dbReference>
<dbReference type="EnsemblPlants" id="TraesKARUn01G0119980.1">
    <property type="protein sequence ID" value="cds.TraesKARUn01G0119980.1"/>
    <property type="gene ID" value="TraesKARUn01G0119980"/>
</dbReference>
<dbReference type="EnsemblPlants" id="TraesKARUn01G0120100.1">
    <property type="protein sequence ID" value="cds.TraesKARUn01G0120100.1"/>
    <property type="gene ID" value="TraesKARUn01G0120100"/>
</dbReference>
<dbReference type="EnsemblPlants" id="TraesKARUn01G0120160.1">
    <property type="protein sequence ID" value="cds.TraesKARUn01G0120160.1"/>
    <property type="gene ID" value="TraesKARUn01G0120160"/>
</dbReference>
<dbReference type="EnsemblPlants" id="TraesKARUn01G0120280.1">
    <property type="protein sequence ID" value="cds.TraesKARUn01G0120280.1"/>
    <property type="gene ID" value="TraesKARUn01G0120280"/>
</dbReference>
<dbReference type="EnsemblPlants" id="TraesKARUn01G0120360.1">
    <property type="protein sequence ID" value="cds.TraesKARUn01G0120360.1"/>
    <property type="gene ID" value="TraesKARUn01G0120360"/>
</dbReference>
<dbReference type="EnsemblPlants" id="TraesKARUn01G0120370.1">
    <property type="protein sequence ID" value="cds.TraesKARUn01G0120370.1"/>
    <property type="gene ID" value="TraesKARUn01G0120370"/>
</dbReference>
<dbReference type="EnsemblPlants" id="TraesKARUn01G0120450.1">
    <property type="protein sequence ID" value="cds.TraesKARUn01G0120450.1"/>
    <property type="gene ID" value="TraesKARUn01G0120450"/>
</dbReference>
<dbReference type="EnsemblPlants" id="TraesKARUn01G0120830.1">
    <property type="protein sequence ID" value="cds.TraesKARUn01G0120830.1"/>
    <property type="gene ID" value="TraesKARUn01G0120830"/>
</dbReference>
<dbReference type="EnsemblPlants" id="TraesKARUn01G0120900.1">
    <property type="protein sequence ID" value="cds.TraesKARUn01G0120900.1"/>
    <property type="gene ID" value="TraesKARUn01G0120900"/>
</dbReference>
<dbReference type="EnsemblPlants" id="TraesKARUn01G0121010.1">
    <property type="protein sequence ID" value="cds.TraesKARUn01G0121010.1"/>
    <property type="gene ID" value="TraesKARUn01G0121010"/>
</dbReference>
<dbReference type="EnsemblPlants" id="TraesKARUn01G0121110.1">
    <property type="protein sequence ID" value="cds.TraesKARUn01G0121110.1"/>
    <property type="gene ID" value="TraesKARUn01G0121110"/>
</dbReference>
<dbReference type="EnsemblPlants" id="TraesKARUn01G0121280.1">
    <property type="protein sequence ID" value="cds.TraesKARUn01G0121280.1"/>
    <property type="gene ID" value="TraesKARUn01G0121280"/>
</dbReference>
<dbReference type="EnsemblPlants" id="TraesKARUn01G0121610.1">
    <property type="protein sequence ID" value="cds.TraesKARUn01G0121610.1"/>
    <property type="gene ID" value="TraesKARUn01G0121610"/>
</dbReference>
<dbReference type="EnsemblPlants" id="TraesKARUn01G0121740.1">
    <property type="protein sequence ID" value="cds.TraesKARUn01G0121740.1"/>
    <property type="gene ID" value="TraesKARUn01G0121740"/>
</dbReference>
<dbReference type="EnsemblPlants" id="TraesKARUn01G0121880.1">
    <property type="protein sequence ID" value="cds.TraesKARUn01G0121880.1"/>
    <property type="gene ID" value="TraesKARUn01G0121880"/>
</dbReference>
<dbReference type="EnsemblPlants" id="TraesKARUn01G0121960.1">
    <property type="protein sequence ID" value="cds.TraesKARUn01G0121960.1"/>
    <property type="gene ID" value="TraesKARUn01G0121960"/>
</dbReference>
<dbReference type="EnsemblPlants" id="TraesKARUn01G0122100.1">
    <property type="protein sequence ID" value="cds.TraesKARUn01G0122100.1"/>
    <property type="gene ID" value="TraesKARUn01G0122100"/>
</dbReference>
<dbReference type="EnsemblPlants" id="TraesKARUn01G0122170.1">
    <property type="protein sequence ID" value="cds.TraesKARUn01G0122170.1"/>
    <property type="gene ID" value="TraesKARUn01G0122170"/>
</dbReference>
<dbReference type="EnsemblPlants" id="TraesKARUn01G0122300.1">
    <property type="protein sequence ID" value="cds.TraesKARUn01G0122300.1"/>
    <property type="gene ID" value="TraesKARUn01G0122300"/>
</dbReference>
<dbReference type="EnsemblPlants" id="TraesKARUn01G0122350.1">
    <property type="protein sequence ID" value="cds.TraesKARUn01G0122350.1"/>
    <property type="gene ID" value="TraesKARUn01G0122350"/>
</dbReference>
<dbReference type="EnsemblPlants" id="TraesKARUn01G0122570.1">
    <property type="protein sequence ID" value="cds.TraesKARUn01G0122570.1"/>
    <property type="gene ID" value="TraesKARUn01G0122570"/>
</dbReference>
<dbReference type="EnsemblPlants" id="TraesKARUn01G0122950.1">
    <property type="protein sequence ID" value="cds.TraesKARUn01G0122950.1"/>
    <property type="gene ID" value="TraesKARUn01G0122950"/>
</dbReference>
<dbReference type="EnsemblPlants" id="TraesKARUn01G0122990.1">
    <property type="protein sequence ID" value="cds.TraesKARUn01G0122990.1"/>
    <property type="gene ID" value="TraesKARUn01G0122990"/>
</dbReference>
<dbReference type="EnsemblPlants" id="TraesKARUn01G0123040.1">
    <property type="protein sequence ID" value="cds.TraesKARUn01G0123040.1"/>
    <property type="gene ID" value="TraesKARUn01G0123040"/>
</dbReference>
<dbReference type="EnsemblPlants" id="TraesKARUn01G0123060.1">
    <property type="protein sequence ID" value="cds.TraesKARUn01G0123060.1"/>
    <property type="gene ID" value="TraesKARUn01G0123060"/>
</dbReference>
<dbReference type="EnsemblPlants" id="TraesKARUn01G0123140.1">
    <property type="protein sequence ID" value="cds.TraesKARUn01G0123140.1"/>
    <property type="gene ID" value="TraesKARUn01G0123140"/>
</dbReference>
<dbReference type="EnsemblPlants" id="TraesKARUn01G0123210.1">
    <property type="protein sequence ID" value="cds.TraesKARUn01G0123210.1"/>
    <property type="gene ID" value="TraesKARUn01G0123210"/>
</dbReference>
<dbReference type="EnsemblPlants" id="TraesKARUn01G0123220.1">
    <property type="protein sequence ID" value="cds.TraesKARUn01G0123220.1"/>
    <property type="gene ID" value="TraesKARUn01G0123220"/>
</dbReference>
<dbReference type="EnsemblPlants" id="TraesKARUn01G0123270.1">
    <property type="protein sequence ID" value="cds.TraesKARUn01G0123270.1"/>
    <property type="gene ID" value="TraesKARUn01G0123270"/>
</dbReference>
<dbReference type="EnsemblPlants" id="TraesKARUn01G0123340.1">
    <property type="protein sequence ID" value="cds.TraesKARUn01G0123340.1"/>
    <property type="gene ID" value="TraesKARUn01G0123340"/>
</dbReference>
<dbReference type="EnsemblPlants" id="TraesKARUn01G0123580.1">
    <property type="protein sequence ID" value="cds.TraesKARUn01G0123580.1"/>
    <property type="gene ID" value="TraesKARUn01G0123580"/>
</dbReference>
<dbReference type="EnsemblPlants" id="TraesKARUn01G0123830.1">
    <property type="protein sequence ID" value="cds.TraesKARUn01G0123830.1"/>
    <property type="gene ID" value="TraesKARUn01G0123830"/>
</dbReference>
<dbReference type="EnsemblPlants" id="TraesKARUn01G0124350.1">
    <property type="protein sequence ID" value="cds.TraesKARUn01G0124350.1"/>
    <property type="gene ID" value="TraesKARUn01G0124350"/>
</dbReference>
<dbReference type="EnsemblPlants" id="TraesKARUn01G0124700.1">
    <property type="protein sequence ID" value="cds.TraesKARUn01G0124700.1"/>
    <property type="gene ID" value="TraesKARUn01G0124700"/>
</dbReference>
<dbReference type="EnsemblPlants" id="TraesKARUn01G0124730.1">
    <property type="protein sequence ID" value="cds.TraesKARUn01G0124730.1"/>
    <property type="gene ID" value="TraesKARUn01G0124730"/>
</dbReference>
<dbReference type="EnsemblPlants" id="TraesKARUn01G0124810.1">
    <property type="protein sequence ID" value="cds.TraesKARUn01G0124810.1"/>
    <property type="gene ID" value="TraesKARUn01G0124810"/>
</dbReference>
<dbReference type="EnsemblPlants" id="TraesKARUn01G0124930.1">
    <property type="protein sequence ID" value="cds.TraesKARUn01G0124930.1"/>
    <property type="gene ID" value="TraesKARUn01G0124930"/>
</dbReference>
<dbReference type="EnsemblPlants" id="TraesKARUn01G0125180.1">
    <property type="protein sequence ID" value="cds.TraesKARUn01G0125180.1"/>
    <property type="gene ID" value="TraesKARUn01G0125180"/>
</dbReference>
<dbReference type="EnsemblPlants" id="TraesKARUn01G0125380.1">
    <property type="protein sequence ID" value="cds.TraesKARUn01G0125380.1"/>
    <property type="gene ID" value="TraesKARUn01G0125380"/>
</dbReference>
<dbReference type="EnsemblPlants" id="TraesKARUn01G0125410.1">
    <property type="protein sequence ID" value="cds.TraesKARUn01G0125410.1"/>
    <property type="gene ID" value="TraesKARUn01G0125410"/>
</dbReference>
<dbReference type="EnsemblPlants" id="TraesKARUn01G0125770.1">
    <property type="protein sequence ID" value="cds.TraesKARUn01G0125770.1"/>
    <property type="gene ID" value="TraesKARUn01G0125770"/>
</dbReference>
<dbReference type="EnsemblPlants" id="TraesKARUn01G0125830.1">
    <property type="protein sequence ID" value="cds.TraesKARUn01G0125830.1"/>
    <property type="gene ID" value="TraesKARUn01G0125830"/>
</dbReference>
<dbReference type="EnsemblPlants" id="TraesKARUn01G0126000.1">
    <property type="protein sequence ID" value="cds.TraesKARUn01G0126000.1"/>
    <property type="gene ID" value="TraesKARUn01G0126000"/>
</dbReference>
<dbReference type="EnsemblPlants" id="TraesKARUn01G0126040.1">
    <property type="protein sequence ID" value="cds.TraesKARUn01G0126040.1"/>
    <property type="gene ID" value="TraesKARUn01G0126040"/>
</dbReference>
<dbReference type="EnsemblPlants" id="TraesKARUn01G0126460.1">
    <property type="protein sequence ID" value="cds.TraesKARUn01G0126460.1"/>
    <property type="gene ID" value="TraesKARUn01G0126460"/>
</dbReference>
<dbReference type="EnsemblPlants" id="TraesKARUn01G0126690.1">
    <property type="protein sequence ID" value="cds.TraesKARUn01G0126690.1"/>
    <property type="gene ID" value="TraesKARUn01G0126690"/>
</dbReference>
<dbReference type="EnsemblPlants" id="TraesKARUn01G0126850.1">
    <property type="protein sequence ID" value="cds.TraesKARUn01G0126850.1"/>
    <property type="gene ID" value="TraesKARUn01G0126850"/>
</dbReference>
<dbReference type="EnsemblPlants" id="TraesKARUn01G0126920.1">
    <property type="protein sequence ID" value="cds.TraesKARUn01G0126920.1"/>
    <property type="gene ID" value="TraesKARUn01G0126920"/>
</dbReference>
<dbReference type="EnsemblPlants" id="TraesKARUn01G0127330.1">
    <property type="protein sequence ID" value="cds.TraesKARUn01G0127330.1"/>
    <property type="gene ID" value="TraesKARUn01G0127330"/>
</dbReference>
<dbReference type="EnsemblPlants" id="TraesKARUn01G0127480.1">
    <property type="protein sequence ID" value="cds.TraesKARUn01G0127480.1"/>
    <property type="gene ID" value="TraesKARUn01G0127480"/>
</dbReference>
<dbReference type="EnsemblPlants" id="TraesKARUn01G0127750.1">
    <property type="protein sequence ID" value="cds.TraesKARUn01G0127750.1"/>
    <property type="gene ID" value="TraesKARUn01G0127750"/>
</dbReference>
<dbReference type="EnsemblPlants" id="TraesKARUn01G0127920.1">
    <property type="protein sequence ID" value="cds.TraesKARUn01G0127920.1"/>
    <property type="gene ID" value="TraesKARUn01G0127920"/>
</dbReference>
<dbReference type="EnsemblPlants" id="TraesKARUn01G0128030.1">
    <property type="protein sequence ID" value="cds.TraesKARUn01G0128030.1"/>
    <property type="gene ID" value="TraesKARUn01G0128030"/>
</dbReference>
<dbReference type="EnsemblPlants" id="TraesKARUn01G0128060.1">
    <property type="protein sequence ID" value="cds.TraesKARUn01G0128060.1"/>
    <property type="gene ID" value="TraesKARUn01G0128060"/>
</dbReference>
<dbReference type="EnsemblPlants" id="TraesKARUn01G0128080.1">
    <property type="protein sequence ID" value="cds.TraesKARUn01G0128080.1"/>
    <property type="gene ID" value="TraesKARUn01G0128080"/>
</dbReference>
<dbReference type="EnsemblPlants" id="TraesKARUn01G0128110.1">
    <property type="protein sequence ID" value="cds.TraesKARUn01G0128110.1"/>
    <property type="gene ID" value="TraesKARUn01G0128110"/>
</dbReference>
<dbReference type="EnsemblPlants" id="TraesKARUn01G0128210.1">
    <property type="protein sequence ID" value="cds.TraesKARUn01G0128210.1"/>
    <property type="gene ID" value="TraesKARUn01G0128210"/>
</dbReference>
<dbReference type="EnsemblPlants" id="TraesKARUn01G0128470.1">
    <property type="protein sequence ID" value="cds.TraesKARUn01G0128470.1"/>
    <property type="gene ID" value="TraesKARUn01G0128470"/>
</dbReference>
<dbReference type="EnsemblPlants" id="TraesKARUn01G0128660.1">
    <property type="protein sequence ID" value="cds.TraesKARUn01G0128660.1"/>
    <property type="gene ID" value="TraesKARUn01G0128660"/>
</dbReference>
<dbReference type="EnsemblPlants" id="TraesKARUn01G0128850.1">
    <property type="protein sequence ID" value="cds.TraesKARUn01G0128850.1"/>
    <property type="gene ID" value="TraesKARUn01G0128850"/>
</dbReference>
<dbReference type="EnsemblPlants" id="TraesKARUn01G0129000.1">
    <property type="protein sequence ID" value="cds.TraesKARUn01G0129000.1"/>
    <property type="gene ID" value="TraesKARUn01G0129000"/>
</dbReference>
<dbReference type="EnsemblPlants" id="TraesKARUn01G0129300.1">
    <property type="protein sequence ID" value="cds.TraesKARUn01G0129300.1"/>
    <property type="gene ID" value="TraesKARUn01G0129300"/>
</dbReference>
<dbReference type="EnsemblPlants" id="TraesKARUn01G0129340.1">
    <property type="protein sequence ID" value="cds.TraesKARUn01G0129340.1"/>
    <property type="gene ID" value="TraesKARUn01G0129340"/>
</dbReference>
<dbReference type="EnsemblPlants" id="TraesKARUn01G0129820.1">
    <property type="protein sequence ID" value="cds.TraesKARUn01G0129820.1"/>
    <property type="gene ID" value="TraesKARUn01G0129820"/>
</dbReference>
<dbReference type="EnsemblPlants" id="TraesKARUn01G0129990.1">
    <property type="protein sequence ID" value="cds.TraesKARUn01G0129990.1"/>
    <property type="gene ID" value="TraesKARUn01G0129990"/>
</dbReference>
<dbReference type="EnsemblPlants" id="TraesKARUn01G0130030.1">
    <property type="protein sequence ID" value="cds.TraesKARUn01G0130030.1"/>
    <property type="gene ID" value="TraesKARUn01G0130030"/>
</dbReference>
<dbReference type="EnsemblPlants" id="TraesKARUn01G0130220.1">
    <property type="protein sequence ID" value="cds.TraesKARUn01G0130220.1"/>
    <property type="gene ID" value="TraesKARUn01G0130220"/>
</dbReference>
<dbReference type="EnsemblPlants" id="TraesKARUn01G0130570.1">
    <property type="protein sequence ID" value="cds.TraesKARUn01G0130570.1"/>
    <property type="gene ID" value="TraesKARUn01G0130570"/>
</dbReference>
<dbReference type="EnsemblPlants" id="TraesKARUn01G0130700.1">
    <property type="protein sequence ID" value="cds.TraesKARUn01G0130700.1"/>
    <property type="gene ID" value="TraesKARUn01G0130700"/>
</dbReference>
<dbReference type="EnsemblPlants" id="TraesKARUn01G0130740.1">
    <property type="protein sequence ID" value="cds.TraesKARUn01G0130740.1"/>
    <property type="gene ID" value="TraesKARUn01G0130740"/>
</dbReference>
<dbReference type="EnsemblPlants" id="TraesKARUn01G0130960.1">
    <property type="protein sequence ID" value="cds.TraesKARUn01G0130960.1"/>
    <property type="gene ID" value="TraesKARUn01G0130960"/>
</dbReference>
<dbReference type="EnsemblPlants" id="TraesKARUn01G0131080.1">
    <property type="protein sequence ID" value="cds.TraesKARUn01G0131080.1"/>
    <property type="gene ID" value="TraesKARUn01G0131080"/>
</dbReference>
<dbReference type="EnsemblPlants" id="TraesKARUn01G0131950.1">
    <property type="protein sequence ID" value="cds.TraesKARUn01G0131950.1"/>
    <property type="gene ID" value="TraesKARUn01G0131950"/>
</dbReference>
<dbReference type="EnsemblPlants" id="TraesKARUn01G0131970.1">
    <property type="protein sequence ID" value="cds.TraesKARUn01G0131970.1"/>
    <property type="gene ID" value="TraesKARUn01G0131970"/>
</dbReference>
<dbReference type="EnsemblPlants" id="TraesKARUn01G0132030.1">
    <property type="protein sequence ID" value="cds.TraesKARUn01G0132030.1"/>
    <property type="gene ID" value="TraesKARUn01G0132030"/>
</dbReference>
<dbReference type="EnsemblPlants" id="TraesKARUn01G0132400.1">
    <property type="protein sequence ID" value="cds.TraesKARUn01G0132400.1"/>
    <property type="gene ID" value="TraesKARUn01G0132400"/>
</dbReference>
<dbReference type="EnsemblPlants" id="TraesKARUn01G0132460.1">
    <property type="protein sequence ID" value="cds.TraesKARUn01G0132460.1"/>
    <property type="gene ID" value="TraesKARUn01G0132460"/>
</dbReference>
<dbReference type="EnsemblPlants" id="TraesKARUn01G0132520.1">
    <property type="protein sequence ID" value="cds.TraesKARUn01G0132520.1"/>
    <property type="gene ID" value="TraesKARUn01G0132520"/>
</dbReference>
<dbReference type="EnsemblPlants" id="TraesKARUn01G0132660.1">
    <property type="protein sequence ID" value="cds.TraesKARUn01G0132660.1"/>
    <property type="gene ID" value="TraesKARUn01G0132660"/>
</dbReference>
<dbReference type="EnsemblPlants" id="TraesKARUn01G0132670.1">
    <property type="protein sequence ID" value="cds.TraesKARUn01G0132670.1"/>
    <property type="gene ID" value="TraesKARUn01G0132670"/>
</dbReference>
<dbReference type="EnsemblPlants" id="TraesKARUn01G0132940.1">
    <property type="protein sequence ID" value="cds.TraesKARUn01G0132940.1"/>
    <property type="gene ID" value="TraesKARUn01G0132940"/>
</dbReference>
<dbReference type="EnsemblPlants" id="TraesKARUn01G0133050.1">
    <property type="protein sequence ID" value="cds.TraesKARUn01G0133050.1"/>
    <property type="gene ID" value="TraesKARUn01G0133050"/>
</dbReference>
<dbReference type="EnsemblPlants" id="TraesKARUn01G0133220.1">
    <property type="protein sequence ID" value="cds.TraesKARUn01G0133220.1"/>
    <property type="gene ID" value="TraesKARUn01G0133220"/>
</dbReference>
<dbReference type="EnsemblPlants" id="TraesKARUn01G0133320.1">
    <property type="protein sequence ID" value="cds.TraesKARUn01G0133320.1"/>
    <property type="gene ID" value="TraesKARUn01G0133320"/>
</dbReference>
<dbReference type="EnsemblPlants" id="TraesKARUn01G0133390.1">
    <property type="protein sequence ID" value="cds.TraesKARUn01G0133390.1"/>
    <property type="gene ID" value="TraesKARUn01G0133390"/>
</dbReference>
<dbReference type="EnsemblPlants" id="TraesKARUn01G0133580.1">
    <property type="protein sequence ID" value="cds.TraesKARUn01G0133580.1"/>
    <property type="gene ID" value="TraesKARUn01G0133580"/>
</dbReference>
<dbReference type="EnsemblPlants" id="TraesKARUn01G0133730.1">
    <property type="protein sequence ID" value="cds.TraesKARUn01G0133730.1"/>
    <property type="gene ID" value="TraesKARUn01G0133730"/>
</dbReference>
<dbReference type="EnsemblPlants" id="TraesKARUn01G0134050.1">
    <property type="protein sequence ID" value="cds.TraesKARUn01G0134050.1"/>
    <property type="gene ID" value="TraesKARUn01G0134050"/>
</dbReference>
<dbReference type="EnsemblPlants" id="TraesKARUn01G0134090.1">
    <property type="protein sequence ID" value="cds.TraesKARUn01G0134090.1"/>
    <property type="gene ID" value="TraesKARUn01G0134090"/>
</dbReference>
<dbReference type="EnsemblPlants" id="TraesKARUn01G0134230.1">
    <property type="protein sequence ID" value="cds.TraesKARUn01G0134230.1"/>
    <property type="gene ID" value="TraesKARUn01G0134230"/>
</dbReference>
<dbReference type="EnsemblPlants" id="TraesKARUn01G0134320.1">
    <property type="protein sequence ID" value="cds.TraesKARUn01G0134320.1"/>
    <property type="gene ID" value="TraesKARUn01G0134320"/>
</dbReference>
<dbReference type="EnsemblPlants" id="TraesKARUn01G0134600.1">
    <property type="protein sequence ID" value="cds.TraesKARUn01G0134600.1"/>
    <property type="gene ID" value="TraesKARUn01G0134600"/>
</dbReference>
<dbReference type="EnsemblPlants" id="TraesKARUn01G0134620.1">
    <property type="protein sequence ID" value="cds.TraesKARUn01G0134620.1"/>
    <property type="gene ID" value="TraesKARUn01G0134620"/>
</dbReference>
<dbReference type="EnsemblPlants" id="TraesKARUn01G0134740.1">
    <property type="protein sequence ID" value="cds.TraesKARUn01G0134740.1"/>
    <property type="gene ID" value="TraesKARUn01G0134740"/>
</dbReference>
<dbReference type="EnsemblPlants" id="TraesKARUn01G0134890.1">
    <property type="protein sequence ID" value="cds.TraesKARUn01G0134890.1"/>
    <property type="gene ID" value="TraesKARUn01G0134890"/>
</dbReference>
<dbReference type="EnsemblPlants" id="TraesKARUn01G0134980.1">
    <property type="protein sequence ID" value="cds.TraesKARUn01G0134980.1"/>
    <property type="gene ID" value="TraesKARUn01G0134980"/>
</dbReference>
<dbReference type="EnsemblPlants" id="TraesKARUn01G0135000.1">
    <property type="protein sequence ID" value="cds.TraesKARUn01G0135000.1"/>
    <property type="gene ID" value="TraesKARUn01G0135000"/>
</dbReference>
<dbReference type="EnsemblPlants" id="TraesKARUn01G0135070.1">
    <property type="protein sequence ID" value="cds.TraesKARUn01G0135070.1"/>
    <property type="gene ID" value="TraesKARUn01G0135070"/>
</dbReference>
<dbReference type="EnsemblPlants" id="TraesKARUn01G0135270.1">
    <property type="protein sequence ID" value="cds.TraesKARUn01G0135270.1"/>
    <property type="gene ID" value="TraesKARUn01G0135270"/>
</dbReference>
<dbReference type="EnsemblPlants" id="TraesKARUn01G0135360.1">
    <property type="protein sequence ID" value="cds.TraesKARUn01G0135360.1"/>
    <property type="gene ID" value="TraesKARUn01G0135360"/>
</dbReference>
<dbReference type="EnsemblPlants" id="TraesKARUn01G0135490.1">
    <property type="protein sequence ID" value="cds.TraesKARUn01G0135490.1"/>
    <property type="gene ID" value="TraesKARUn01G0135490"/>
</dbReference>
<dbReference type="EnsemblPlants" id="TraesKARUn01G0135750.1">
    <property type="protein sequence ID" value="cds.TraesKARUn01G0135750.1"/>
    <property type="gene ID" value="TraesKARUn01G0135750"/>
</dbReference>
<dbReference type="EnsemblPlants" id="TraesKARUn01G0135780.1">
    <property type="protein sequence ID" value="cds.TraesKARUn01G0135780.1"/>
    <property type="gene ID" value="TraesKARUn01G0135780"/>
</dbReference>
<dbReference type="EnsemblPlants" id="TraesKARUn01G0135910.1">
    <property type="protein sequence ID" value="cds.TraesKARUn01G0135910.1"/>
    <property type="gene ID" value="TraesKARUn01G0135910"/>
</dbReference>
<dbReference type="EnsemblPlants" id="TraesKARUn01G0136020.1">
    <property type="protein sequence ID" value="cds.TraesKARUn01G0136020.1"/>
    <property type="gene ID" value="TraesKARUn01G0136020"/>
</dbReference>
<dbReference type="EnsemblPlants" id="TraesKARUn01G0136180.1">
    <property type="protein sequence ID" value="cds.TraesKARUn01G0136180.1"/>
    <property type="gene ID" value="TraesKARUn01G0136180"/>
</dbReference>
<dbReference type="EnsemblPlants" id="TraesKARUn01G0136330.1">
    <property type="protein sequence ID" value="cds.TraesKARUn01G0136330.1"/>
    <property type="gene ID" value="TraesKARUn01G0136330"/>
</dbReference>
<dbReference type="EnsemblPlants" id="TraesKARUn01G0136410.1">
    <property type="protein sequence ID" value="cds.TraesKARUn01G0136410.1"/>
    <property type="gene ID" value="TraesKARUn01G0136410"/>
</dbReference>
<dbReference type="EnsemblPlants" id="TraesKARUn01G0136550.1">
    <property type="protein sequence ID" value="cds.TraesKARUn01G0136550.1"/>
    <property type="gene ID" value="TraesKARUn01G0136550"/>
</dbReference>
<dbReference type="EnsemblPlants" id="TraesKARUn01G0136760.1">
    <property type="protein sequence ID" value="cds.TraesKARUn01G0136760.1"/>
    <property type="gene ID" value="TraesKARUn01G0136760"/>
</dbReference>
<dbReference type="EnsemblPlants" id="TraesKARUn01G0137110.1">
    <property type="protein sequence ID" value="cds.TraesKARUn01G0137110.1"/>
    <property type="gene ID" value="TraesKARUn01G0137110"/>
</dbReference>
<dbReference type="EnsemblPlants" id="TraesKARUn01G0137140.1">
    <property type="protein sequence ID" value="cds.TraesKARUn01G0137140.1"/>
    <property type="gene ID" value="TraesKARUn01G0137140"/>
</dbReference>
<dbReference type="EnsemblPlants" id="TraesKARUn01G0137610.1">
    <property type="protein sequence ID" value="cds.TraesKARUn01G0137610.1"/>
    <property type="gene ID" value="TraesKARUn01G0137610"/>
</dbReference>
<dbReference type="EnsemblPlants" id="TraesKARUn01G0137820.1">
    <property type="protein sequence ID" value="cds.TraesKARUn01G0137820.1"/>
    <property type="gene ID" value="TraesKARUn01G0137820"/>
</dbReference>
<dbReference type="EnsemblPlants" id="TraesKARUn01G0137890.1">
    <property type="protein sequence ID" value="cds.TraesKARUn01G0137890.1"/>
    <property type="gene ID" value="TraesKARUn01G0137890"/>
</dbReference>
<dbReference type="EnsemblPlants" id="TraesKARUn01G0138160.1">
    <property type="protein sequence ID" value="cds.TraesKARUn01G0138160.1"/>
    <property type="gene ID" value="TraesKARUn01G0138160"/>
</dbReference>
<dbReference type="EnsemblPlants" id="TraesKARUn01G0138230.1">
    <property type="protein sequence ID" value="cds.TraesKARUn01G0138230.1"/>
    <property type="gene ID" value="TraesKARUn01G0138230"/>
</dbReference>
<dbReference type="EnsemblPlants" id="TraesKARUn01G0138860.1">
    <property type="protein sequence ID" value="cds.TraesKARUn01G0138860.1"/>
    <property type="gene ID" value="TraesKARUn01G0138860"/>
</dbReference>
<dbReference type="EnsemblPlants" id="TraesKARUn01G0138870.1">
    <property type="protein sequence ID" value="cds.TraesKARUn01G0138870.1"/>
    <property type="gene ID" value="TraesKARUn01G0138870"/>
</dbReference>
<dbReference type="EnsemblPlants" id="TraesKARUn01G0139100.1">
    <property type="protein sequence ID" value="cds.TraesKARUn01G0139100.1"/>
    <property type="gene ID" value="TraesKARUn01G0139100"/>
</dbReference>
<dbReference type="EnsemblPlants" id="TraesKARUn01G0139130.1">
    <property type="protein sequence ID" value="cds.TraesKARUn01G0139130.1"/>
    <property type="gene ID" value="TraesKARUn01G0139130"/>
</dbReference>
<dbReference type="EnsemblPlants" id="TraesKARUn01G0139440.1">
    <property type="protein sequence ID" value="cds.TraesKARUn01G0139440.1"/>
    <property type="gene ID" value="TraesKARUn01G0139440"/>
</dbReference>
<dbReference type="EnsemblPlants" id="TraesKARUn01G0139470.1">
    <property type="protein sequence ID" value="cds.TraesKARUn01G0139470.1"/>
    <property type="gene ID" value="TraesKARUn01G0139470"/>
</dbReference>
<dbReference type="EnsemblPlants" id="TraesKARUn01G0140000.1">
    <property type="protein sequence ID" value="cds.TraesKARUn01G0140000.1"/>
    <property type="gene ID" value="TraesKARUn01G0140000"/>
</dbReference>
<dbReference type="EnsemblPlants" id="TraesKARUn01G0140690.1">
    <property type="protein sequence ID" value="cds.TraesKARUn01G0140690.1"/>
    <property type="gene ID" value="TraesKARUn01G0140690"/>
</dbReference>
<dbReference type="EnsemblPlants" id="TraesKARUn01G0141050.1">
    <property type="protein sequence ID" value="cds.TraesKARUn01G0141050.1"/>
    <property type="gene ID" value="TraesKARUn01G0141050"/>
</dbReference>
<dbReference type="EnsemblPlants" id="TraesKARUn01G0141100.1">
    <property type="protein sequence ID" value="cds.TraesKARUn01G0141100.1"/>
    <property type="gene ID" value="TraesKARUn01G0141100"/>
</dbReference>
<dbReference type="EnsemblPlants" id="TraesKARUn01G0141200.1">
    <property type="protein sequence ID" value="cds.TraesKARUn01G0141200.1"/>
    <property type="gene ID" value="TraesKARUn01G0141200"/>
</dbReference>
<dbReference type="EnsemblPlants" id="TraesKARUn01G0141280.1">
    <property type="protein sequence ID" value="cds.TraesKARUn01G0141280.1"/>
    <property type="gene ID" value="TraesKARUn01G0141280"/>
</dbReference>
<dbReference type="EnsemblPlants" id="TraesKARUn01G0141300.1">
    <property type="protein sequence ID" value="cds.TraesKARUn01G0141300.1"/>
    <property type="gene ID" value="TraesKARUn01G0141300"/>
</dbReference>
<dbReference type="EnsemblPlants" id="TraesKARUn01G0141450.1">
    <property type="protein sequence ID" value="cds.TraesKARUn01G0141450.1"/>
    <property type="gene ID" value="TraesKARUn01G0141450"/>
</dbReference>
<dbReference type="EnsemblPlants" id="TraesKARUn01G0141940.1">
    <property type="protein sequence ID" value="cds.TraesKARUn01G0141940.1"/>
    <property type="gene ID" value="TraesKARUn01G0141940"/>
</dbReference>
<dbReference type="EnsemblPlants" id="TraesKARUn01G0142020.1">
    <property type="protein sequence ID" value="cds.TraesKARUn01G0142020.1"/>
    <property type="gene ID" value="TraesKARUn01G0142020"/>
</dbReference>
<dbReference type="EnsemblPlants" id="TraesKARUn01G0142110.1">
    <property type="protein sequence ID" value="cds.TraesKARUn01G0142110.1"/>
    <property type="gene ID" value="TraesKARUn01G0142110"/>
</dbReference>
<dbReference type="EnsemblPlants" id="TraesKARUn01G0142190.1">
    <property type="protein sequence ID" value="cds.TraesKARUn01G0142190.1"/>
    <property type="gene ID" value="TraesKARUn01G0142190"/>
</dbReference>
<dbReference type="EnsemblPlants" id="TraesKARUn01G0142410.1">
    <property type="protein sequence ID" value="cds.TraesKARUn01G0142410.1"/>
    <property type="gene ID" value="TraesKARUn01G0142410"/>
</dbReference>
<dbReference type="EnsemblPlants" id="TraesKARUn01G0142450.1">
    <property type="protein sequence ID" value="cds.TraesKARUn01G0142450.1"/>
    <property type="gene ID" value="TraesKARUn01G0142450"/>
</dbReference>
<dbReference type="EnsemblPlants" id="TraesKARUn01G0142620.1">
    <property type="protein sequence ID" value="cds.TraesKARUn01G0142620.1"/>
    <property type="gene ID" value="TraesKARUn01G0142620"/>
</dbReference>
<dbReference type="EnsemblPlants" id="TraesKARUn01G0142730.1">
    <property type="protein sequence ID" value="cds.TraesKARUn01G0142730.1"/>
    <property type="gene ID" value="TraesKARUn01G0142730"/>
</dbReference>
<dbReference type="EnsemblPlants" id="TraesKARUn01G0142740.1">
    <property type="protein sequence ID" value="cds.TraesKARUn01G0142740.1"/>
    <property type="gene ID" value="TraesKARUn01G0142740"/>
</dbReference>
<dbReference type="EnsemblPlants" id="TraesKARUn01G0142870.1">
    <property type="protein sequence ID" value="cds.TraesKARUn01G0142870.1"/>
    <property type="gene ID" value="TraesKARUn01G0142870"/>
</dbReference>
<dbReference type="EnsemblPlants" id="TraesKARUn01G0142900.1">
    <property type="protein sequence ID" value="cds.TraesKARUn01G0142900.1"/>
    <property type="gene ID" value="TraesKARUn01G0142900"/>
</dbReference>
<dbReference type="EnsemblPlants" id="TraesKARUn01G0143130.1">
    <property type="protein sequence ID" value="cds.TraesKARUn01G0143130.1"/>
    <property type="gene ID" value="TraesKARUn01G0143130"/>
</dbReference>
<dbReference type="EnsemblPlants" id="TraesKARUn01G0143200.1">
    <property type="protein sequence ID" value="cds.TraesKARUn01G0143200.1"/>
    <property type="gene ID" value="TraesKARUn01G0143200"/>
</dbReference>
<dbReference type="EnsemblPlants" id="TraesKARUn01G0143290.1">
    <property type="protein sequence ID" value="cds.TraesKARUn01G0143290.1"/>
    <property type="gene ID" value="TraesKARUn01G0143290"/>
</dbReference>
<dbReference type="EnsemblPlants" id="TraesKARUn01G0143310.1">
    <property type="protein sequence ID" value="cds.TraesKARUn01G0143310.1"/>
    <property type="gene ID" value="TraesKARUn01G0143310"/>
</dbReference>
<dbReference type="EnsemblPlants" id="TraesKARUn01G0143420.1">
    <property type="protein sequence ID" value="cds.TraesKARUn01G0143420.1"/>
    <property type="gene ID" value="TraesKARUn01G0143420"/>
</dbReference>
<dbReference type="EnsemblPlants" id="TraesKARUn01G0143500.1">
    <property type="protein sequence ID" value="cds.TraesKARUn01G0143500.1"/>
    <property type="gene ID" value="TraesKARUn01G0143500"/>
</dbReference>
<dbReference type="EnsemblPlants" id="TraesKARUn01G0143590.1">
    <property type="protein sequence ID" value="cds.TraesKARUn01G0143590.1"/>
    <property type="gene ID" value="TraesKARUn01G0143590"/>
</dbReference>
<dbReference type="EnsemblPlants" id="TraesKARUn01G0143630.1">
    <property type="protein sequence ID" value="cds.TraesKARUn01G0143630.1"/>
    <property type="gene ID" value="TraesKARUn01G0143630"/>
</dbReference>
<dbReference type="EnsemblPlants" id="TraesKARUn01G0143650.1">
    <property type="protein sequence ID" value="cds.TraesKARUn01G0143650.1"/>
    <property type="gene ID" value="TraesKARUn01G0143650"/>
</dbReference>
<dbReference type="EnsemblPlants" id="TraesKARUn01G0144120.1">
    <property type="protein sequence ID" value="cds.TraesKARUn01G0144120.1"/>
    <property type="gene ID" value="TraesKARUn01G0144120"/>
</dbReference>
<dbReference type="EnsemblPlants" id="TraesKARUn01G0144360.1">
    <property type="protein sequence ID" value="cds.TraesKARUn01G0144360.1"/>
    <property type="gene ID" value="TraesKARUn01G0144360"/>
</dbReference>
<dbReference type="EnsemblPlants" id="TraesKARUn01G0144420.1">
    <property type="protein sequence ID" value="cds.TraesKARUn01G0144420.1"/>
    <property type="gene ID" value="TraesKARUn01G0144420"/>
</dbReference>
<dbReference type="EnsemblPlants" id="TraesKARUn01G0144460.1">
    <property type="protein sequence ID" value="cds.TraesKARUn01G0144460.1"/>
    <property type="gene ID" value="TraesKARUn01G0144460"/>
</dbReference>
<dbReference type="EnsemblPlants" id="TraesKARUn01G0144720.1">
    <property type="protein sequence ID" value="cds.TraesKARUn01G0144720.1"/>
    <property type="gene ID" value="TraesKARUn01G0144720"/>
</dbReference>
<dbReference type="EnsemblPlants" id="TraesKARUn01G0144750.1">
    <property type="protein sequence ID" value="cds.TraesKARUn01G0144750.1"/>
    <property type="gene ID" value="TraesKARUn01G0144750"/>
</dbReference>
<dbReference type="EnsemblPlants" id="TraesKARUn01G0144920.1">
    <property type="protein sequence ID" value="cds.TraesKARUn01G0144920.1"/>
    <property type="gene ID" value="TraesKARUn01G0144920"/>
</dbReference>
<dbReference type="EnsemblPlants" id="TraesKARUn01G0145090.1">
    <property type="protein sequence ID" value="cds.TraesKARUn01G0145090.1"/>
    <property type="gene ID" value="TraesKARUn01G0145090"/>
</dbReference>
<dbReference type="EnsemblPlants" id="TraesKARUn01G0145160.1">
    <property type="protein sequence ID" value="cds.TraesKARUn01G0145160.1"/>
    <property type="gene ID" value="TraesKARUn01G0145160"/>
</dbReference>
<dbReference type="EnsemblPlants" id="TraesKARUn01G0145400.1">
    <property type="protein sequence ID" value="cds.TraesKARUn01G0145400.1"/>
    <property type="gene ID" value="TraesKARUn01G0145400"/>
</dbReference>
<dbReference type="EnsemblPlants" id="TraesKARUn01G0145450.1">
    <property type="protein sequence ID" value="cds.TraesKARUn01G0145450.1"/>
    <property type="gene ID" value="TraesKARUn01G0145450"/>
</dbReference>
<dbReference type="EnsemblPlants" id="TraesKARUn01G0145640.1">
    <property type="protein sequence ID" value="cds.TraesKARUn01G0145640.1"/>
    <property type="gene ID" value="TraesKARUn01G0145640"/>
</dbReference>
<dbReference type="EnsemblPlants" id="TraesKARUn01G0145680.1">
    <property type="protein sequence ID" value="cds.TraesKARUn01G0145680.1"/>
    <property type="gene ID" value="TraesKARUn01G0145680"/>
</dbReference>
<dbReference type="EnsemblPlants" id="TraesKARUn01G0145710.1">
    <property type="protein sequence ID" value="cds.TraesKARUn01G0145710.1"/>
    <property type="gene ID" value="TraesKARUn01G0145710"/>
</dbReference>
<dbReference type="EnsemblPlants" id="TraesKARUn01G0145800.1">
    <property type="protein sequence ID" value="cds.TraesKARUn01G0145800.1"/>
    <property type="gene ID" value="TraesKARUn01G0145800"/>
</dbReference>
<dbReference type="EnsemblPlants" id="TraesKARUn01G0145910.1">
    <property type="protein sequence ID" value="cds.TraesKARUn01G0145910.1"/>
    <property type="gene ID" value="TraesKARUn01G0145910"/>
</dbReference>
<dbReference type="EnsemblPlants" id="TraesKARUn01G0145970.1">
    <property type="protein sequence ID" value="cds.TraesKARUn01G0145970.1"/>
    <property type="gene ID" value="TraesKARUn01G0145970"/>
</dbReference>
<dbReference type="EnsemblPlants" id="TraesKARUn01G0145980.1">
    <property type="protein sequence ID" value="cds.TraesKARUn01G0145980.1"/>
    <property type="gene ID" value="TraesKARUn01G0145980"/>
</dbReference>
<dbReference type="EnsemblPlants" id="TraesKARUn01G0146060.1">
    <property type="protein sequence ID" value="cds.TraesKARUn01G0146060.1"/>
    <property type="gene ID" value="TraesKARUn01G0146060"/>
</dbReference>
<dbReference type="EnsemblPlants" id="TraesKARUn01G0146220.1">
    <property type="protein sequence ID" value="cds.TraesKARUn01G0146220.1"/>
    <property type="gene ID" value="TraesKARUn01G0146220"/>
</dbReference>
<dbReference type="EnsemblPlants" id="TraesKARUn01G0146390.1">
    <property type="protein sequence ID" value="cds.TraesKARUn01G0146390.1"/>
    <property type="gene ID" value="TraesKARUn01G0146390"/>
</dbReference>
<dbReference type="EnsemblPlants" id="TraesKARUn01G0146550.1">
    <property type="protein sequence ID" value="cds.TraesKARUn01G0146550.1"/>
    <property type="gene ID" value="TraesKARUn01G0146550"/>
</dbReference>
<dbReference type="EnsemblPlants" id="TraesKARUn01G0146710.1">
    <property type="protein sequence ID" value="cds.TraesKARUn01G0146710.1"/>
    <property type="gene ID" value="TraesKARUn01G0146710"/>
</dbReference>
<dbReference type="EnsemblPlants" id="TraesKARUn01G0146850.1">
    <property type="protein sequence ID" value="cds.TraesKARUn01G0146850.1"/>
    <property type="gene ID" value="TraesKARUn01G0146850"/>
</dbReference>
<dbReference type="EnsemblPlants" id="TraesKARUn01G0146860.1">
    <property type="protein sequence ID" value="cds.TraesKARUn01G0146860.1"/>
    <property type="gene ID" value="TraesKARUn01G0146860"/>
</dbReference>
<dbReference type="EnsemblPlants" id="TraesKARUn01G0147130.1">
    <property type="protein sequence ID" value="cds.TraesKARUn01G0147130.1"/>
    <property type="gene ID" value="TraesKARUn01G0147130"/>
</dbReference>
<dbReference type="EnsemblPlants" id="TraesKARUn01G0147320.1">
    <property type="protein sequence ID" value="cds.TraesKARUn01G0147320.1"/>
    <property type="gene ID" value="TraesKARUn01G0147320"/>
</dbReference>
<dbReference type="EnsemblPlants" id="TraesKARUn01G0147570.1">
    <property type="protein sequence ID" value="cds.TraesKARUn01G0147570.1"/>
    <property type="gene ID" value="TraesKARUn01G0147570"/>
</dbReference>
<dbReference type="EnsemblPlants" id="TraesKARUn01G0147700.1">
    <property type="protein sequence ID" value="cds.TraesKARUn01G0147700.1"/>
    <property type="gene ID" value="TraesKARUn01G0147700"/>
</dbReference>
<dbReference type="EnsemblPlants" id="TraesKARUn01G0147740.1">
    <property type="protein sequence ID" value="cds.TraesKARUn01G0147740.1"/>
    <property type="gene ID" value="TraesKARUn01G0147740"/>
</dbReference>
<dbReference type="EnsemblPlants" id="TraesKARUn01G0147770.1">
    <property type="protein sequence ID" value="cds.TraesKARUn01G0147770.1"/>
    <property type="gene ID" value="TraesKARUn01G0147770"/>
</dbReference>
<dbReference type="EnsemblPlants" id="TraesKARUn01G0148170.1">
    <property type="protein sequence ID" value="cds.TraesKARUn01G0148170.1"/>
    <property type="gene ID" value="TraesKARUn01G0148170"/>
</dbReference>
<dbReference type="EnsemblPlants" id="TraesKARUn01G0148250.1">
    <property type="protein sequence ID" value="cds.TraesKARUn01G0148250.1"/>
    <property type="gene ID" value="TraesKARUn01G0148250"/>
</dbReference>
<dbReference type="EnsemblPlants" id="TraesKARUn01G0148300.1">
    <property type="protein sequence ID" value="cds.TraesKARUn01G0148300.1"/>
    <property type="gene ID" value="TraesKARUn01G0148300"/>
</dbReference>
<dbReference type="EnsemblPlants" id="TraesKARUn01G0148450.1">
    <property type="protein sequence ID" value="cds.TraesKARUn01G0148450.1"/>
    <property type="gene ID" value="TraesKARUn01G0148450"/>
</dbReference>
<dbReference type="EnsemblPlants" id="TraesKARUn01G0148930.1">
    <property type="protein sequence ID" value="cds.TraesKARUn01G0148930.1"/>
    <property type="gene ID" value="TraesKARUn01G0148930"/>
</dbReference>
<dbReference type="EnsemblPlants" id="TraesKARUn01G0149120.1">
    <property type="protein sequence ID" value="cds.TraesKARUn01G0149120.1"/>
    <property type="gene ID" value="TraesKARUn01G0149120"/>
</dbReference>
<dbReference type="EnsemblPlants" id="TraesKARUn01G0149360.1">
    <property type="protein sequence ID" value="cds.TraesKARUn01G0149360.1"/>
    <property type="gene ID" value="TraesKARUn01G0149360"/>
</dbReference>
<dbReference type="EnsemblPlants" id="TraesKARUn01G0149590.1">
    <property type="protein sequence ID" value="cds.TraesKARUn01G0149590.1"/>
    <property type="gene ID" value="TraesKARUn01G0149590"/>
</dbReference>
<dbReference type="EnsemblPlants" id="TraesKARUn01G0149670.1">
    <property type="protein sequence ID" value="cds.TraesKARUn01G0149670.1"/>
    <property type="gene ID" value="TraesKARUn01G0149670"/>
</dbReference>
<dbReference type="EnsemblPlants" id="TraesKARUn01G0149740.1">
    <property type="protein sequence ID" value="cds.TraesKARUn01G0149740.1"/>
    <property type="gene ID" value="TraesKARUn01G0149740"/>
</dbReference>
<dbReference type="EnsemblPlants" id="TraesKARUn01G0149770.1">
    <property type="protein sequence ID" value="cds.TraesKARUn01G0149770.1"/>
    <property type="gene ID" value="TraesKARUn01G0149770"/>
</dbReference>
<dbReference type="EnsemblPlants" id="TraesKARUn01G0149910.1">
    <property type="protein sequence ID" value="cds.TraesKARUn01G0149910.1"/>
    <property type="gene ID" value="TraesKARUn01G0149910"/>
</dbReference>
<dbReference type="EnsemblPlants" id="TraesKARUn01G0150250.1">
    <property type="protein sequence ID" value="cds.TraesKARUn01G0150250.1"/>
    <property type="gene ID" value="TraesKARUn01G0150250"/>
</dbReference>
<dbReference type="EnsemblPlants" id="TraesKARUn01G0150440.1">
    <property type="protein sequence ID" value="cds.TraesKARUn01G0150440.1"/>
    <property type="gene ID" value="TraesKARUn01G0150440"/>
</dbReference>
<dbReference type="EnsemblPlants" id="TraesKARUn01G0151600.1">
    <property type="protein sequence ID" value="cds.TraesKARUn01G0151600.1"/>
    <property type="gene ID" value="TraesKARUn01G0151600"/>
</dbReference>
<dbReference type="EnsemblPlants" id="TraesKARUn01G0151880.1">
    <property type="protein sequence ID" value="cds.TraesKARUn01G0151880.1"/>
    <property type="gene ID" value="TraesKARUn01G0151880"/>
</dbReference>
<dbReference type="EnsemblPlants" id="TraesKARUn01G0151940.1">
    <property type="protein sequence ID" value="cds.TraesKARUn01G0151940.1"/>
    <property type="gene ID" value="TraesKARUn01G0151940"/>
</dbReference>
<dbReference type="EnsemblPlants" id="TraesKARUn01G0152040.1">
    <property type="protein sequence ID" value="cds.TraesKARUn01G0152040.1"/>
    <property type="gene ID" value="TraesKARUn01G0152040"/>
</dbReference>
<dbReference type="EnsemblPlants" id="TraesKARUn01G0152100.1">
    <property type="protein sequence ID" value="cds.TraesKARUn01G0152100.1"/>
    <property type="gene ID" value="TraesKARUn01G0152100"/>
</dbReference>
<dbReference type="EnsemblPlants" id="TraesKARUn01G0152120.1">
    <property type="protein sequence ID" value="cds.TraesKARUn01G0152120.1"/>
    <property type="gene ID" value="TraesKARUn01G0152120"/>
</dbReference>
<dbReference type="EnsemblPlants" id="TraesKARUn01G0152190.1">
    <property type="protein sequence ID" value="cds.TraesKARUn01G0152190.1"/>
    <property type="gene ID" value="TraesKARUn01G0152190"/>
</dbReference>
<dbReference type="EnsemblPlants" id="TraesKARUn01G0152660.1">
    <property type="protein sequence ID" value="cds.TraesKARUn01G0152660.1"/>
    <property type="gene ID" value="TraesKARUn01G0152660"/>
</dbReference>
<dbReference type="EnsemblPlants" id="TraesKARUn01G0152700.1">
    <property type="protein sequence ID" value="cds.TraesKARUn01G0152700.1"/>
    <property type="gene ID" value="TraesKARUn01G0152700"/>
</dbReference>
<dbReference type="EnsemblPlants" id="TraesKARUn01G0152990.1">
    <property type="protein sequence ID" value="cds.TraesKARUn01G0152990.1"/>
    <property type="gene ID" value="TraesKARUn01G0152990"/>
</dbReference>
<dbReference type="EnsemblPlants" id="TraesKARUn01G0153020.1">
    <property type="protein sequence ID" value="cds.TraesKARUn01G0153020.1"/>
    <property type="gene ID" value="TraesKARUn01G0153020"/>
</dbReference>
<dbReference type="EnsemblPlants" id="TraesKARUn01G0153060.1">
    <property type="protein sequence ID" value="cds.TraesKARUn01G0153060.1"/>
    <property type="gene ID" value="TraesKARUn01G0153060"/>
</dbReference>
<dbReference type="EnsemblPlants" id="TraesKARUn01G0153080.1">
    <property type="protein sequence ID" value="cds.TraesKARUn01G0153080.1"/>
    <property type="gene ID" value="TraesKARUn01G0153080"/>
</dbReference>
<dbReference type="EnsemblPlants" id="TraesKARUn01G0153270.1">
    <property type="protein sequence ID" value="cds.TraesKARUn01G0153270.1"/>
    <property type="gene ID" value="TraesKARUn01G0153270"/>
</dbReference>
<dbReference type="EnsemblPlants" id="TraesKARUn01G0153340.1">
    <property type="protein sequence ID" value="cds.TraesKARUn01G0153340.1"/>
    <property type="gene ID" value="TraesKARUn01G0153340"/>
</dbReference>
<dbReference type="EnsemblPlants" id="TraesKARUn01G0153690.1">
    <property type="protein sequence ID" value="cds.TraesKARUn01G0153690.1"/>
    <property type="gene ID" value="TraesKARUn01G0153690"/>
</dbReference>
<dbReference type="EnsemblPlants" id="TraesKARUn01G0153830.1">
    <property type="protein sequence ID" value="cds.TraesKARUn01G0153830.1"/>
    <property type="gene ID" value="TraesKARUn01G0153830"/>
</dbReference>
<dbReference type="EnsemblPlants" id="TraesKARUn01G0153870.1">
    <property type="protein sequence ID" value="cds.TraesKARUn01G0153870.1"/>
    <property type="gene ID" value="TraesKARUn01G0153870"/>
</dbReference>
<dbReference type="EnsemblPlants" id="TraesKARUn01G0153980.1">
    <property type="protein sequence ID" value="cds.TraesKARUn01G0153980.1"/>
    <property type="gene ID" value="TraesKARUn01G0153980"/>
</dbReference>
<dbReference type="EnsemblPlants" id="TraesKARUn01G0154230.1">
    <property type="protein sequence ID" value="cds.TraesKARUn01G0154230.1"/>
    <property type="gene ID" value="TraesKARUn01G0154230"/>
</dbReference>
<dbReference type="EnsemblPlants" id="TraesKARUn01G0154280.1">
    <property type="protein sequence ID" value="cds.TraesKARUn01G0154280.1"/>
    <property type="gene ID" value="TraesKARUn01G0154280"/>
</dbReference>
<dbReference type="EnsemblPlants" id="TraesKARUn01G0154410.1">
    <property type="protein sequence ID" value="cds.TraesKARUn01G0154410.1"/>
    <property type="gene ID" value="TraesKARUn01G0154410"/>
</dbReference>
<dbReference type="EnsemblPlants" id="TraesKARUn01G0154600.1">
    <property type="protein sequence ID" value="cds.TraesKARUn01G0154600.1"/>
    <property type="gene ID" value="TraesKARUn01G0154600"/>
</dbReference>
<dbReference type="EnsemblPlants" id="TraesKARUn01G0154740.1">
    <property type="protein sequence ID" value="cds.TraesKARUn01G0154740.1"/>
    <property type="gene ID" value="TraesKARUn01G0154740"/>
</dbReference>
<dbReference type="EnsemblPlants" id="TraesKARUn01G0154860.1">
    <property type="protein sequence ID" value="cds.TraesKARUn01G0154860.1"/>
    <property type="gene ID" value="TraesKARUn01G0154860"/>
</dbReference>
<dbReference type="EnsemblPlants" id="TraesKARUn01G0155030.1">
    <property type="protein sequence ID" value="cds.TraesKARUn01G0155030.1"/>
    <property type="gene ID" value="TraesKARUn01G0155030"/>
</dbReference>
<dbReference type="EnsemblPlants" id="TraesKARUn01G0155220.1">
    <property type="protein sequence ID" value="cds.TraesKARUn01G0155220.1"/>
    <property type="gene ID" value="TraesKARUn01G0155220"/>
</dbReference>
<dbReference type="EnsemblPlants" id="TraesKARUn01G0155550.1">
    <property type="protein sequence ID" value="cds.TraesKARUn01G0155550.1"/>
    <property type="gene ID" value="TraesKARUn01G0155550"/>
</dbReference>
<dbReference type="EnsemblPlants" id="TraesKARUn01G0155610.1">
    <property type="protein sequence ID" value="cds.TraesKARUn01G0155610.1"/>
    <property type="gene ID" value="TraesKARUn01G0155610"/>
</dbReference>
<dbReference type="EnsemblPlants" id="TraesKARUn01G0156040.1">
    <property type="protein sequence ID" value="cds.TraesKARUn01G0156040.1"/>
    <property type="gene ID" value="TraesKARUn01G0156040"/>
</dbReference>
<dbReference type="EnsemblPlants" id="TraesKARUn01G0156370.1">
    <property type="protein sequence ID" value="cds.TraesKARUn01G0156370.1"/>
    <property type="gene ID" value="TraesKARUn01G0156370"/>
</dbReference>
<dbReference type="EnsemblPlants" id="TraesKARUn01G0156490.1">
    <property type="protein sequence ID" value="cds.TraesKARUn01G0156490.1"/>
    <property type="gene ID" value="TraesKARUn01G0156490"/>
</dbReference>
<dbReference type="EnsemblPlants" id="TraesKARUn01G0156540.1">
    <property type="protein sequence ID" value="cds.TraesKARUn01G0156540.1"/>
    <property type="gene ID" value="TraesKARUn01G0156540"/>
</dbReference>
<dbReference type="EnsemblPlants" id="TraesKARUn01G0156940.1">
    <property type="protein sequence ID" value="cds.TraesKARUn01G0156940.1"/>
    <property type="gene ID" value="TraesKARUn01G0156940"/>
</dbReference>
<dbReference type="EnsemblPlants" id="TraesKARUn01G0156970.1">
    <property type="protein sequence ID" value="cds.TraesKARUn01G0156970.1"/>
    <property type="gene ID" value="TraesKARUn01G0156970"/>
</dbReference>
<dbReference type="EnsemblPlants" id="TraesKARUn01G0157310.1">
    <property type="protein sequence ID" value="cds.TraesKARUn01G0157310.1"/>
    <property type="gene ID" value="TraesKARUn01G0157310"/>
</dbReference>
<dbReference type="EnsemblPlants" id="TraesKARUn01G0157490.1">
    <property type="protein sequence ID" value="cds.TraesKARUn01G0157490.1"/>
    <property type="gene ID" value="TraesKARUn01G0157490"/>
</dbReference>
<dbReference type="EnsemblPlants" id="TraesKARUn01G0157640.1">
    <property type="protein sequence ID" value="cds.TraesKARUn01G0157640.1"/>
    <property type="gene ID" value="TraesKARUn01G0157640"/>
</dbReference>
<dbReference type="EnsemblPlants" id="TraesKARUn01G0157700.1">
    <property type="protein sequence ID" value="cds.TraesKARUn01G0157700.1"/>
    <property type="gene ID" value="TraesKARUn01G0157700"/>
</dbReference>
<dbReference type="EnsemblPlants" id="TraesKARUn01G0157750.1">
    <property type="protein sequence ID" value="cds.TraesKARUn01G0157750.1"/>
    <property type="gene ID" value="TraesKARUn01G0157750"/>
</dbReference>
<dbReference type="EnsemblPlants" id="TraesKARUn01G0158080.1">
    <property type="protein sequence ID" value="cds.TraesKARUn01G0158080.1"/>
    <property type="gene ID" value="TraesKARUn01G0158080"/>
</dbReference>
<dbReference type="EnsemblPlants" id="TraesKARUn01G0158320.1">
    <property type="protein sequence ID" value="cds.TraesKARUn01G0158320.1"/>
    <property type="gene ID" value="TraesKARUn01G0158320"/>
</dbReference>
<dbReference type="EnsemblPlants" id="TraesKARUn01G0158820.1">
    <property type="protein sequence ID" value="cds.TraesKARUn01G0158820.1"/>
    <property type="gene ID" value="TraesKARUn01G0158820"/>
</dbReference>
<dbReference type="EnsemblPlants" id="TraesKARUn01G0158950.1">
    <property type="protein sequence ID" value="cds.TraesKARUn01G0158950.1"/>
    <property type="gene ID" value="TraesKARUn01G0158950"/>
</dbReference>
<dbReference type="EnsemblPlants" id="TraesKARUn01G0159030.1">
    <property type="protein sequence ID" value="cds.TraesKARUn01G0159030.1"/>
    <property type="gene ID" value="TraesKARUn01G0159030"/>
</dbReference>
<dbReference type="EnsemblPlants" id="TraesKARUn01G0159170.1">
    <property type="protein sequence ID" value="cds.TraesKARUn01G0159170.1"/>
    <property type="gene ID" value="TraesKARUn01G0159170"/>
</dbReference>
<dbReference type="EnsemblPlants" id="TraesKARUn01G0159430.1">
    <property type="protein sequence ID" value="cds.TraesKARUn01G0159430.1"/>
    <property type="gene ID" value="TraesKARUn01G0159430"/>
</dbReference>
<dbReference type="EnsemblPlants" id="TraesKARUn01G0159500.1">
    <property type="protein sequence ID" value="cds.TraesKARUn01G0159500.1"/>
    <property type="gene ID" value="TraesKARUn01G0159500"/>
</dbReference>
<dbReference type="EnsemblPlants" id="TraesKARUn01G0160040.1">
    <property type="protein sequence ID" value="cds.TraesKARUn01G0160040.1"/>
    <property type="gene ID" value="TraesKARUn01G0160040"/>
</dbReference>
<dbReference type="EnsemblPlants" id="TraesKARUn01G0160060.1">
    <property type="protein sequence ID" value="cds.TraesKARUn01G0160060.1"/>
    <property type="gene ID" value="TraesKARUn01G0160060"/>
</dbReference>
<dbReference type="EnsemblPlants" id="TraesKARUn01G0160160.1">
    <property type="protein sequence ID" value="cds.TraesKARUn01G0160160.1"/>
    <property type="gene ID" value="TraesKARUn01G0160160"/>
</dbReference>
<dbReference type="EnsemblPlants" id="TraesKARUn01G0160180.1">
    <property type="protein sequence ID" value="cds.TraesKARUn01G0160180.1"/>
    <property type="gene ID" value="TraesKARUn01G0160180"/>
</dbReference>
<dbReference type="EnsemblPlants" id="TraesKARUn01G0160700.1">
    <property type="protein sequence ID" value="cds.TraesKARUn01G0160700.1"/>
    <property type="gene ID" value="TraesKARUn01G0160700"/>
</dbReference>
<dbReference type="EnsemblPlants" id="TraesKARUn01G0162430.1">
    <property type="protein sequence ID" value="cds.TraesKARUn01G0162430.1"/>
    <property type="gene ID" value="TraesKARUn01G0162430"/>
</dbReference>
<dbReference type="EnsemblPlants" id="TraesKARUn01G0162900.1">
    <property type="protein sequence ID" value="cds.TraesKARUn01G0162900.1"/>
    <property type="gene ID" value="TraesKARUn01G0162900"/>
</dbReference>
<dbReference type="EnsemblPlants" id="TraesKARUn01G0163010.1">
    <property type="protein sequence ID" value="cds.TraesKARUn01G0163010.1"/>
    <property type="gene ID" value="TraesKARUn01G0163010"/>
</dbReference>
<dbReference type="EnsemblPlants" id="TraesKARUn01G0163230.1">
    <property type="protein sequence ID" value="cds.TraesKARUn01G0163230.1"/>
    <property type="gene ID" value="TraesKARUn01G0163230"/>
</dbReference>
<dbReference type="EnsemblPlants" id="TraesKARUn01G0163270.1">
    <property type="protein sequence ID" value="cds.TraesKARUn01G0163270.1"/>
    <property type="gene ID" value="TraesKARUn01G0163270"/>
</dbReference>
<dbReference type="EnsemblPlants" id="TraesKARUn01G0164090.1">
    <property type="protein sequence ID" value="cds.TraesKARUn01G0164090.1"/>
    <property type="gene ID" value="TraesKARUn01G0164090"/>
</dbReference>
<dbReference type="EnsemblPlants" id="TraesKARUn01G0164220.1">
    <property type="protein sequence ID" value="cds.TraesKARUn01G0164220.1"/>
    <property type="gene ID" value="TraesKARUn01G0164220"/>
</dbReference>
<dbReference type="EnsemblPlants" id="TraesKARUn01G0164280.1">
    <property type="protein sequence ID" value="cds.TraesKARUn01G0164280.1"/>
    <property type="gene ID" value="TraesKARUn01G0164280"/>
</dbReference>
<dbReference type="EnsemblPlants" id="TraesKARUn01G0164320.1">
    <property type="protein sequence ID" value="cds.TraesKARUn01G0164320.1"/>
    <property type="gene ID" value="TraesKARUn01G0164320"/>
</dbReference>
<dbReference type="EnsemblPlants" id="TraesKARUn01G0164370.1">
    <property type="protein sequence ID" value="cds.TraesKARUn01G0164370.1"/>
    <property type="gene ID" value="TraesKARUn01G0164370"/>
</dbReference>
<dbReference type="EnsemblPlants" id="TraesKARUn01G0164440.1">
    <property type="protein sequence ID" value="cds.TraesKARUn01G0164440.1"/>
    <property type="gene ID" value="TraesKARUn01G0164440"/>
</dbReference>
<dbReference type="EnsemblPlants" id="TraesKARUn01G0164680.1">
    <property type="protein sequence ID" value="cds.TraesKARUn01G0164680.1"/>
    <property type="gene ID" value="TraesKARUn01G0164680"/>
</dbReference>
<dbReference type="EnsemblPlants" id="TraesKARUn01G0164740.1">
    <property type="protein sequence ID" value="cds.TraesKARUn01G0164740.1"/>
    <property type="gene ID" value="TraesKARUn01G0164740"/>
</dbReference>
<dbReference type="EnsemblPlants" id="TraesKARUn01G0164800.1">
    <property type="protein sequence ID" value="cds.TraesKARUn01G0164800.1"/>
    <property type="gene ID" value="TraesKARUn01G0164800"/>
</dbReference>
<dbReference type="EnsemblPlants" id="TraesKARUn01G0164970.1">
    <property type="protein sequence ID" value="cds.TraesKARUn01G0164970.1"/>
    <property type="gene ID" value="TraesKARUn01G0164970"/>
</dbReference>
<dbReference type="EnsemblPlants" id="TraesKARUn01G0166660.1">
    <property type="protein sequence ID" value="cds.TraesKARUn01G0166660.1"/>
    <property type="gene ID" value="TraesKARUn01G0166660"/>
</dbReference>
<dbReference type="EnsemblPlants" id="TraesKARUn01G0166750.1">
    <property type="protein sequence ID" value="cds.TraesKARUn01G0166750.1"/>
    <property type="gene ID" value="TraesKARUn01G0166750"/>
</dbReference>
<dbReference type="EnsemblPlants" id="TraesKARUn01G0166950.1">
    <property type="protein sequence ID" value="cds.TraesKARUn01G0166950.1"/>
    <property type="gene ID" value="TraesKARUn01G0166950"/>
</dbReference>
<dbReference type="EnsemblPlants" id="TraesKARUn01G0167070.1">
    <property type="protein sequence ID" value="cds.TraesKARUn01G0167070.1"/>
    <property type="gene ID" value="TraesKARUn01G0167070"/>
</dbReference>
<dbReference type="EnsemblPlants" id="TraesKARUn01G0167490.1">
    <property type="protein sequence ID" value="cds.TraesKARUn01G0167490.1"/>
    <property type="gene ID" value="TraesKARUn01G0167490"/>
</dbReference>
<dbReference type="EnsemblPlants" id="TraesKARUn01G0167590.1">
    <property type="protein sequence ID" value="cds.TraesKARUn01G0167590.1"/>
    <property type="gene ID" value="TraesKARUn01G0167590"/>
</dbReference>
<dbReference type="EnsemblPlants" id="TraesKARUn01G0167730.1">
    <property type="protein sequence ID" value="cds.TraesKARUn01G0167730.1"/>
    <property type="gene ID" value="TraesKARUn01G0167730"/>
</dbReference>
<dbReference type="EnsemblPlants" id="TraesKARUn01G0167750.1">
    <property type="protein sequence ID" value="cds.TraesKARUn01G0167750.1"/>
    <property type="gene ID" value="TraesKARUn01G0167750"/>
</dbReference>
<dbReference type="EnsemblPlants" id="TraesKARUn01G0168070.1">
    <property type="protein sequence ID" value="cds.TraesKARUn01G0168070.1"/>
    <property type="gene ID" value="TraesKARUn01G0168070"/>
</dbReference>
<dbReference type="EnsemblPlants" id="TraesKARUn01G0168470.1">
    <property type="protein sequence ID" value="cds.TraesKARUn01G0168470.1"/>
    <property type="gene ID" value="TraesKARUn01G0168470"/>
</dbReference>
<dbReference type="EnsemblPlants" id="TraesKARUn01G0168560.1">
    <property type="protein sequence ID" value="cds.TraesKARUn01G0168560.1"/>
    <property type="gene ID" value="TraesKARUn01G0168560"/>
</dbReference>
<dbReference type="EnsemblPlants" id="TraesKARUn01G0168600.1">
    <property type="protein sequence ID" value="cds.TraesKARUn01G0168600.1"/>
    <property type="gene ID" value="TraesKARUn01G0168600"/>
</dbReference>
<dbReference type="EnsemblPlants" id="TraesKARUn01G0168650.1">
    <property type="protein sequence ID" value="cds.TraesKARUn01G0168650.1"/>
    <property type="gene ID" value="TraesKARUn01G0168650"/>
</dbReference>
<dbReference type="EnsemblPlants" id="TraesKARUn01G0168790.1">
    <property type="protein sequence ID" value="cds.TraesKARUn01G0168790.1"/>
    <property type="gene ID" value="TraesKARUn01G0168790"/>
</dbReference>
<dbReference type="EnsemblPlants" id="TraesKARUn01G0169040.1">
    <property type="protein sequence ID" value="cds.TraesKARUn01G0169040.1"/>
    <property type="gene ID" value="TraesKARUn01G0169040"/>
</dbReference>
<dbReference type="EnsemblPlants" id="TraesKARUn01G0169100.1">
    <property type="protein sequence ID" value="cds.TraesKARUn01G0169100.1"/>
    <property type="gene ID" value="TraesKARUn01G0169100"/>
</dbReference>
<dbReference type="EnsemblPlants" id="TraesKARUn01G0169120.1">
    <property type="protein sequence ID" value="cds.TraesKARUn01G0169120.1"/>
    <property type="gene ID" value="TraesKARUn01G0169120"/>
</dbReference>
<dbReference type="EnsemblPlants" id="TraesKARUn01G0169210.1">
    <property type="protein sequence ID" value="cds.TraesKARUn01G0169210.1"/>
    <property type="gene ID" value="TraesKARUn01G0169210"/>
</dbReference>
<dbReference type="EnsemblPlants" id="TraesKARUn01G0169250.1">
    <property type="protein sequence ID" value="cds.TraesKARUn01G0169250.1"/>
    <property type="gene ID" value="TraesKARUn01G0169250"/>
</dbReference>
<dbReference type="EnsemblPlants" id="TraesKARUn01G0169310.1">
    <property type="protein sequence ID" value="cds.TraesKARUn01G0169310.1"/>
    <property type="gene ID" value="TraesKARUn01G0169310"/>
</dbReference>
<dbReference type="EnsemblPlants" id="TraesKARUn01G0169340.1">
    <property type="protein sequence ID" value="cds.TraesKARUn01G0169340.1"/>
    <property type="gene ID" value="TraesKARUn01G0169340"/>
</dbReference>
<dbReference type="EnsemblPlants" id="TraesKARUn01G0169460.1">
    <property type="protein sequence ID" value="cds.TraesKARUn01G0169460.1"/>
    <property type="gene ID" value="TraesKARUn01G0169460"/>
</dbReference>
<dbReference type="EnsemblPlants" id="TraesKARUn01G0169850.1">
    <property type="protein sequence ID" value="cds.TraesKARUn01G0169850.1"/>
    <property type="gene ID" value="TraesKARUn01G0169850"/>
</dbReference>
<dbReference type="EnsemblPlants" id="TraesKARUn01G0169900.1">
    <property type="protein sequence ID" value="cds.TraesKARUn01G0169900.1"/>
    <property type="gene ID" value="TraesKARUn01G0169900"/>
</dbReference>
<dbReference type="EnsemblPlants" id="TraesKARUn01G0170050.1">
    <property type="protein sequence ID" value="cds.TraesKARUn01G0170050.1"/>
    <property type="gene ID" value="TraesKARUn01G0170050"/>
</dbReference>
<dbReference type="EnsemblPlants" id="TraesKARUn01G0171630.1">
    <property type="protein sequence ID" value="cds.TraesKARUn01G0171630.1"/>
    <property type="gene ID" value="TraesKARUn01G0171630"/>
</dbReference>
<dbReference type="EnsemblPlants" id="TraesKARUn01G0171780.1">
    <property type="protein sequence ID" value="cds.TraesKARUn01G0171780.1"/>
    <property type="gene ID" value="TraesKARUn01G0171780"/>
</dbReference>
<dbReference type="EnsemblPlants" id="TraesKARUn01G0172310.1">
    <property type="protein sequence ID" value="cds.TraesKARUn01G0172310.1"/>
    <property type="gene ID" value="TraesKARUn01G0172310"/>
</dbReference>
<dbReference type="EnsemblPlants" id="TraesKARUn01G0172410.1">
    <property type="protein sequence ID" value="cds.TraesKARUn01G0172410.1"/>
    <property type="gene ID" value="TraesKARUn01G0172410"/>
</dbReference>
<dbReference type="EnsemblPlants" id="TraesKARUn01G0172730.1">
    <property type="protein sequence ID" value="cds.TraesKARUn01G0172730.1"/>
    <property type="gene ID" value="TraesKARUn01G0172730"/>
</dbReference>
<dbReference type="EnsemblPlants" id="TraesKARUn01G0173010.1">
    <property type="protein sequence ID" value="cds.TraesKARUn01G0173010.1"/>
    <property type="gene ID" value="TraesKARUn01G0173010"/>
</dbReference>
<dbReference type="EnsemblPlants" id="TraesKARUn01G0173130.1">
    <property type="protein sequence ID" value="cds.TraesKARUn01G0173130.1"/>
    <property type="gene ID" value="TraesKARUn01G0173130"/>
</dbReference>
<dbReference type="EnsemblPlants" id="TraesKARUn01G0173440.1">
    <property type="protein sequence ID" value="cds.TraesKARUn01G0173440.1"/>
    <property type="gene ID" value="TraesKARUn01G0173440"/>
</dbReference>
<dbReference type="EnsemblPlants" id="TraesKARUn01G0174190.1">
    <property type="protein sequence ID" value="cds.TraesKARUn01G0174190.1"/>
    <property type="gene ID" value="TraesKARUn01G0174190"/>
</dbReference>
<dbReference type="EnsemblPlants" id="TraesKARUn01G0174310.1">
    <property type="protein sequence ID" value="cds.TraesKARUn01G0174310.1"/>
    <property type="gene ID" value="TraesKARUn01G0174310"/>
</dbReference>
<dbReference type="EnsemblPlants" id="TraesKARUn01G0174400.1">
    <property type="protein sequence ID" value="cds.TraesKARUn01G0174400.1"/>
    <property type="gene ID" value="TraesKARUn01G0174400"/>
</dbReference>
<dbReference type="EnsemblPlants" id="TraesKARUn01G0174620.1">
    <property type="protein sequence ID" value="cds.TraesKARUn01G0174620.1"/>
    <property type="gene ID" value="TraesKARUn01G0174620"/>
</dbReference>
<dbReference type="EnsemblPlants" id="TraesKARUn01G0174690.1">
    <property type="protein sequence ID" value="cds.TraesKARUn01G0174690.1"/>
    <property type="gene ID" value="TraesKARUn01G0174690"/>
</dbReference>
<dbReference type="EnsemblPlants" id="TraesKARUn01G0174970.1">
    <property type="protein sequence ID" value="cds.TraesKARUn01G0174970.1"/>
    <property type="gene ID" value="TraesKARUn01G0174970"/>
</dbReference>
<dbReference type="EnsemblPlants" id="TraesKARUn01G0175120.1">
    <property type="protein sequence ID" value="cds.TraesKARUn01G0175120.1"/>
    <property type="gene ID" value="TraesKARUn01G0175120"/>
</dbReference>
<dbReference type="EnsemblPlants" id="TraesKARUn01G0176210.1">
    <property type="protein sequence ID" value="cds.TraesKARUn01G0176210.1"/>
    <property type="gene ID" value="TraesKARUn01G0176210"/>
</dbReference>
<dbReference type="EnsemblPlants" id="TraesKARUn01G0176270.1">
    <property type="protein sequence ID" value="cds.TraesKARUn01G0176270.1"/>
    <property type="gene ID" value="TraesKARUn01G0176270"/>
</dbReference>
<dbReference type="EnsemblPlants" id="TraesKARUn01G0176480.1">
    <property type="protein sequence ID" value="cds.TraesKARUn01G0176480.1"/>
    <property type="gene ID" value="TraesKARUn01G0176480"/>
</dbReference>
<dbReference type="EnsemblPlants" id="TraesKARUn01G0177480.1">
    <property type="protein sequence ID" value="cds.TraesKARUn01G0177480.1"/>
    <property type="gene ID" value="TraesKARUn01G0177480"/>
</dbReference>
<dbReference type="EnsemblPlants" id="TraesKARUn01G0177760.1">
    <property type="protein sequence ID" value="cds.TraesKARUn01G0177760.1"/>
    <property type="gene ID" value="TraesKARUn01G0177760"/>
</dbReference>
<dbReference type="EnsemblPlants" id="TraesKARUn01G0178230.1">
    <property type="protein sequence ID" value="cds.TraesKARUn01G0178230.1"/>
    <property type="gene ID" value="TraesKARUn01G0178230"/>
</dbReference>
<dbReference type="EnsemblPlants" id="TraesKARUn01G0178780.1">
    <property type="protein sequence ID" value="cds.TraesKARUn01G0178780.1"/>
    <property type="gene ID" value="TraesKARUn01G0178780"/>
</dbReference>
<dbReference type="EnsemblPlants" id="TraesKARUn01G0179050.1">
    <property type="protein sequence ID" value="cds.TraesKARUn01G0179050.1"/>
    <property type="gene ID" value="TraesKARUn01G0179050"/>
</dbReference>
<dbReference type="EnsemblPlants" id="TraesKARUn01G0179120.1">
    <property type="protein sequence ID" value="cds.TraesKARUn01G0179120.1"/>
    <property type="gene ID" value="TraesKARUn01G0179120"/>
</dbReference>
<dbReference type="EnsemblPlants" id="TraesKARUn01G0179470.1">
    <property type="protein sequence ID" value="cds.TraesKARUn01G0179470.1"/>
    <property type="gene ID" value="TraesKARUn01G0179470"/>
</dbReference>
<dbReference type="EnsemblPlants" id="TraesKARUn01G0179780.1">
    <property type="protein sequence ID" value="cds.TraesKARUn01G0179780.1"/>
    <property type="gene ID" value="TraesKARUn01G0179780"/>
</dbReference>
<dbReference type="EnsemblPlants" id="TraesKARUn01G0180020.1">
    <property type="protein sequence ID" value="cds.TraesKARUn01G0180020.1"/>
    <property type="gene ID" value="TraesKARUn01G0180020"/>
</dbReference>
<dbReference type="EnsemblPlants" id="TraesKARUn01G0180180.1">
    <property type="protein sequence ID" value="cds.TraesKARUn01G0180180.1"/>
    <property type="gene ID" value="TraesKARUn01G0180180"/>
</dbReference>
<dbReference type="EnsemblPlants" id="TraesKARUn01G0181310.1">
    <property type="protein sequence ID" value="cds.TraesKARUn01G0181310.1"/>
    <property type="gene ID" value="TraesKARUn01G0181310"/>
</dbReference>
<dbReference type="EnsemblPlants" id="TraesKARUn01G0181550.1">
    <property type="protein sequence ID" value="cds.TraesKARUn01G0181550.1"/>
    <property type="gene ID" value="TraesKARUn01G0181550"/>
</dbReference>
<dbReference type="EnsemblPlants" id="TraesKARUn01G0181970.1">
    <property type="protein sequence ID" value="cds.TraesKARUn01G0181970.1"/>
    <property type="gene ID" value="TraesKARUn01G0181970"/>
</dbReference>
<dbReference type="EnsemblPlants" id="TraesKARUn01G0182660.1">
    <property type="protein sequence ID" value="cds.TraesKARUn01G0182660.1"/>
    <property type="gene ID" value="TraesKARUn01G0182660"/>
</dbReference>
<dbReference type="EnsemblPlants" id="TraesKARUn01G0182940.1">
    <property type="protein sequence ID" value="cds.TraesKARUn01G0182940.1"/>
    <property type="gene ID" value="TraesKARUn01G0182940"/>
</dbReference>
<dbReference type="EnsemblPlants" id="TraesKARUn01G0183410.1">
    <property type="protein sequence ID" value="cds.TraesKARUn01G0183410.1"/>
    <property type="gene ID" value="TraesKARUn01G0183410"/>
</dbReference>
<dbReference type="EnsemblPlants" id="TraesKARUn01G0183500.1">
    <property type="protein sequence ID" value="cds.TraesKARUn01G0183500.1"/>
    <property type="gene ID" value="TraesKARUn01G0183500"/>
</dbReference>
<dbReference type="EnsemblPlants" id="TraesKARUn01G0183550.1">
    <property type="protein sequence ID" value="cds.TraesKARUn01G0183550.1"/>
    <property type="gene ID" value="TraesKARUn01G0183550"/>
</dbReference>
<dbReference type="EnsemblPlants" id="TraesKARUn01G0183560.1">
    <property type="protein sequence ID" value="cds.TraesKARUn01G0183560.1"/>
    <property type="gene ID" value="TraesKARUn01G0183560"/>
</dbReference>
<dbReference type="EnsemblPlants" id="TraesKARUn01G0183780.1">
    <property type="protein sequence ID" value="cds.TraesKARUn01G0183780.1"/>
    <property type="gene ID" value="TraesKARUn01G0183780"/>
</dbReference>
<dbReference type="EnsemblPlants" id="TraesKARUn01G0184060.1">
    <property type="protein sequence ID" value="cds.TraesKARUn01G0184060.1"/>
    <property type="gene ID" value="TraesKARUn01G0184060"/>
</dbReference>
<dbReference type="EnsemblPlants" id="TraesKARUn01G0184140.1">
    <property type="protein sequence ID" value="cds.TraesKARUn01G0184140.1"/>
    <property type="gene ID" value="TraesKARUn01G0184140"/>
</dbReference>
<dbReference type="EnsemblPlants" id="TraesKARUn01G0184970.1">
    <property type="protein sequence ID" value="cds.TraesKARUn01G0184970.1"/>
    <property type="gene ID" value="TraesKARUn01G0184970"/>
</dbReference>
<dbReference type="EnsemblPlants" id="TraesKARUn01G0185060.1">
    <property type="protein sequence ID" value="cds.TraesKARUn01G0185060.1"/>
    <property type="gene ID" value="TraesKARUn01G0185060"/>
</dbReference>
<dbReference type="EnsemblPlants" id="TraesKARUn01G0185330.1">
    <property type="protein sequence ID" value="cds.TraesKARUn01G0185330.1"/>
    <property type="gene ID" value="TraesKARUn01G0185330"/>
</dbReference>
<dbReference type="EnsemblPlants" id="TraesKARUn01G0185430.1">
    <property type="protein sequence ID" value="cds.TraesKARUn01G0185430.1"/>
    <property type="gene ID" value="TraesKARUn01G0185430"/>
</dbReference>
<dbReference type="EnsemblPlants" id="TraesKARUn01G0185560.1">
    <property type="protein sequence ID" value="cds.TraesKARUn01G0185560.1"/>
    <property type="gene ID" value="TraesKARUn01G0185560"/>
</dbReference>
<dbReference type="EnsemblPlants" id="TraesKARUn01G0185970.1">
    <property type="protein sequence ID" value="cds.TraesKARUn01G0185970.1"/>
    <property type="gene ID" value="TraesKARUn01G0185970"/>
</dbReference>
<dbReference type="EnsemblPlants" id="TraesKARUn01G0186020.1">
    <property type="protein sequence ID" value="cds.TraesKARUn01G0186020.1"/>
    <property type="gene ID" value="TraesKARUn01G0186020"/>
</dbReference>
<dbReference type="EnsemblPlants" id="TraesKARUn01G0186520.1">
    <property type="protein sequence ID" value="cds.TraesKARUn01G0186520.1"/>
    <property type="gene ID" value="TraesKARUn01G0186520"/>
</dbReference>
<dbReference type="EnsemblPlants" id="TraesKARUn01G0187060.1">
    <property type="protein sequence ID" value="cds.TraesKARUn01G0187060.1"/>
    <property type="gene ID" value="TraesKARUn01G0187060"/>
</dbReference>
<dbReference type="EnsemblPlants" id="TraesKARUn01G0187100.1">
    <property type="protein sequence ID" value="cds.TraesKARUn01G0187100.1"/>
    <property type="gene ID" value="TraesKARUn01G0187100"/>
</dbReference>
<dbReference type="EnsemblPlants" id="TraesKARUn01G0187200.1">
    <property type="protein sequence ID" value="cds.TraesKARUn01G0187200.1"/>
    <property type="gene ID" value="TraesKARUn01G0187200"/>
</dbReference>
<dbReference type="EnsemblPlants" id="TraesKARUn01G0187380.1">
    <property type="protein sequence ID" value="cds.TraesKARUn01G0187380.1"/>
    <property type="gene ID" value="TraesKARUn01G0187380"/>
</dbReference>
<dbReference type="EnsemblPlants" id="TraesKARUn01G0187470.1">
    <property type="protein sequence ID" value="cds.TraesKARUn01G0187470.1"/>
    <property type="gene ID" value="TraesKARUn01G0187470"/>
</dbReference>
<dbReference type="EnsemblPlants" id="TraesKARUn01G0188150.1">
    <property type="protein sequence ID" value="cds.TraesKARUn01G0188150.1"/>
    <property type="gene ID" value="TraesKARUn01G0188150"/>
</dbReference>
<dbReference type="EnsemblPlants" id="TraesKARUn01G0188740.1">
    <property type="protein sequence ID" value="cds.TraesKARUn01G0188740.1"/>
    <property type="gene ID" value="TraesKARUn01G0188740"/>
</dbReference>
<dbReference type="EnsemblPlants" id="TraesKARUn01G0188870.1">
    <property type="protein sequence ID" value="cds.TraesKARUn01G0188870.1"/>
    <property type="gene ID" value="TraesKARUn01G0188870"/>
</dbReference>
<dbReference type="EnsemblPlants" id="TraesKARUn01G0189010.1">
    <property type="protein sequence ID" value="cds.TraesKARUn01G0189010.1"/>
    <property type="gene ID" value="TraesKARUn01G0189010"/>
</dbReference>
<dbReference type="EnsemblPlants" id="TraesKARUn01G0189560.1">
    <property type="protein sequence ID" value="cds.TraesKARUn01G0189560.1"/>
    <property type="gene ID" value="TraesKARUn01G0189560"/>
</dbReference>
<dbReference type="EnsemblPlants" id="TraesKARUn01G0189700.1">
    <property type="protein sequence ID" value="cds.TraesKARUn01G0189700.1"/>
    <property type="gene ID" value="TraesKARUn01G0189700"/>
</dbReference>
<dbReference type="EnsemblPlants" id="TraesKARUn01G0189830.1">
    <property type="protein sequence ID" value="cds.TraesKARUn01G0189830.1"/>
    <property type="gene ID" value="TraesKARUn01G0189830"/>
</dbReference>
<dbReference type="EnsemblPlants" id="TraesKARUn01G0191560.1">
    <property type="protein sequence ID" value="cds.TraesKARUn01G0191560.1"/>
    <property type="gene ID" value="TraesKARUn01G0191560"/>
</dbReference>
<dbReference type="EnsemblPlants" id="TraesKARUn01G0191690.1">
    <property type="protein sequence ID" value="cds.TraesKARUn01G0191690.1"/>
    <property type="gene ID" value="TraesKARUn01G0191690"/>
</dbReference>
<dbReference type="EnsemblPlants" id="TraesKARUn01G0191740.1">
    <property type="protein sequence ID" value="cds.TraesKARUn01G0191740.1"/>
    <property type="gene ID" value="TraesKARUn01G0191740"/>
</dbReference>
<dbReference type="EnsemblPlants" id="TraesKARUn01G0192010.1">
    <property type="protein sequence ID" value="cds.TraesKARUn01G0192010.1"/>
    <property type="gene ID" value="TraesKARUn01G0192010"/>
</dbReference>
<dbReference type="EnsemblPlants" id="TraesKARUn01G0192600.1">
    <property type="protein sequence ID" value="cds.TraesKARUn01G0192600.1"/>
    <property type="gene ID" value="TraesKARUn01G0192600"/>
</dbReference>
<dbReference type="EnsemblPlants" id="TraesKARUn01G0193800.1">
    <property type="protein sequence ID" value="cds.TraesKARUn01G0193800.1"/>
    <property type="gene ID" value="TraesKARUn01G0193800"/>
</dbReference>
<dbReference type="EnsemblPlants" id="TraesKARUn01G0193900.1">
    <property type="protein sequence ID" value="cds.TraesKARUn01G0193900.1"/>
    <property type="gene ID" value="TraesKARUn01G0193900"/>
</dbReference>
<dbReference type="EnsemblPlants" id="TraesKARUn01G0194050.1">
    <property type="protein sequence ID" value="cds.TraesKARUn01G0194050.1"/>
    <property type="gene ID" value="TraesKARUn01G0194050"/>
</dbReference>
<dbReference type="EnsemblPlants" id="TraesPARA_EIv1.0_2055010.1">
    <property type="protein sequence ID" value="TraesPARA_EIv1.0_2055010.1.CDS1"/>
    <property type="gene ID" value="TraesPARA_EIv1.0_2055010"/>
</dbReference>
<dbReference type="EnsemblPlants" id="TraesPARA_EIv1.0_2643620.1">
    <property type="protein sequence ID" value="TraesPARA_EIv1.0_2643620.1.CDS1"/>
    <property type="gene ID" value="TraesPARA_EIv1.0_2643620"/>
</dbReference>
<dbReference type="EnsemblPlants" id="TraesPARA_EIv1.0_2643850.1">
    <property type="protein sequence ID" value="TraesPARA_EIv1.0_2643850.1.CDS1"/>
    <property type="gene ID" value="TraesPARA_EIv1.0_2643850"/>
</dbReference>
<dbReference type="EnsemblPlants" id="TraesPARA_EIv1.0_2643980.1">
    <property type="protein sequence ID" value="TraesPARA_EIv1.0_2643980.1.CDS1"/>
    <property type="gene ID" value="TraesPARA_EIv1.0_2643980"/>
</dbReference>
<dbReference type="EnsemblPlants" id="TraesPARA_EIv1.0_2644090.1">
    <property type="protein sequence ID" value="TraesPARA_EIv1.0_2644090.1.CDS1"/>
    <property type="gene ID" value="TraesPARA_EIv1.0_2644090"/>
</dbReference>
<dbReference type="EnsemblPlants" id="TraesPARA_EIv1.0_2644630.1">
    <property type="protein sequence ID" value="TraesPARA_EIv1.0_2644630.1.CDS1"/>
    <property type="gene ID" value="TraesPARA_EIv1.0_2644630"/>
</dbReference>
<dbReference type="EnsemblPlants" id="TraesPARA_EIv1.0_2645040.1">
    <property type="protein sequence ID" value="TraesPARA_EIv1.0_2645040.1.CDS1"/>
    <property type="gene ID" value="TraesPARA_EIv1.0_2645040"/>
</dbReference>
<dbReference type="EnsemblPlants" id="TraesPARA_EIv1.0_2645040.3">
    <property type="protein sequence ID" value="TraesPARA_EIv1.0_2645040.3.CDS1"/>
    <property type="gene ID" value="TraesPARA_EIv1.0_2645040"/>
</dbReference>
<dbReference type="EnsemblPlants" id="TraesPARA_EIv1.0_2645180.1">
    <property type="protein sequence ID" value="TraesPARA_EIv1.0_2645180.1.CDS1"/>
    <property type="gene ID" value="TraesPARA_EIv1.0_2645180"/>
</dbReference>
<dbReference type="EnsemblPlants" id="TraesPARA_EIv1.0_2645400.1">
    <property type="protein sequence ID" value="TraesPARA_EIv1.0_2645400.1.CDS1"/>
    <property type="gene ID" value="TraesPARA_EIv1.0_2645400"/>
</dbReference>
<dbReference type="EnsemblPlants" id="TraesPARA_EIv1.0_2645560.1">
    <property type="protein sequence ID" value="TraesPARA_EIv1.0_2645560.1.CDS1"/>
    <property type="gene ID" value="TraesPARA_EIv1.0_2645560"/>
</dbReference>
<dbReference type="EnsemblPlants" id="TraesPARA_EIv1.0_2645750.1">
    <property type="protein sequence ID" value="TraesPARA_EIv1.0_2645750.1.CDS1"/>
    <property type="gene ID" value="TraesPARA_EIv1.0_2645750"/>
</dbReference>
<dbReference type="EnsemblPlants" id="TraesPARA_EIv1.0_2645930.1">
    <property type="protein sequence ID" value="TraesPARA_EIv1.0_2645930.1.CDS1"/>
    <property type="gene ID" value="TraesPARA_EIv1.0_2645930"/>
</dbReference>
<dbReference type="EnsemblPlants" id="TraesPARA_EIv1.0_2646210.1">
    <property type="protein sequence ID" value="TraesPARA_EIv1.0_2646210.1.CDS1"/>
    <property type="gene ID" value="TraesPARA_EIv1.0_2646210"/>
</dbReference>
<dbReference type="EnsemblPlants" id="TraesPARA_EIv1.0_2647070.1">
    <property type="protein sequence ID" value="TraesPARA_EIv1.0_2647070.1.CDS1"/>
    <property type="gene ID" value="TraesPARA_EIv1.0_2647070"/>
</dbReference>
<dbReference type="EnsemblPlants" id="TraesPARA_EIv1.0_2647500.1">
    <property type="protein sequence ID" value="TraesPARA_EIv1.0_2647500.1.CDS1"/>
    <property type="gene ID" value="TraesPARA_EIv1.0_2647500"/>
</dbReference>
<dbReference type="EnsemblPlants" id="TraesPARA_EIv1.0_2648010.1">
    <property type="protein sequence ID" value="TraesPARA_EIv1.0_2648010.1.CDS1"/>
    <property type="gene ID" value="TraesPARA_EIv1.0_2648010"/>
</dbReference>
<dbReference type="EnsemblPlants" id="TraesPARA_EIv1.0_2648530.1">
    <property type="protein sequence ID" value="TraesPARA_EIv1.0_2648530.1.CDS1"/>
    <property type="gene ID" value="TraesPARA_EIv1.0_2648530"/>
</dbReference>
<dbReference type="EnsemblPlants" id="TraesPARA_EIv1.0_2648720.1">
    <property type="protein sequence ID" value="TraesPARA_EIv1.0_2648720.1.CDS1"/>
    <property type="gene ID" value="TraesPARA_EIv1.0_2648720"/>
</dbReference>
<dbReference type="EnsemblPlants" id="TraesPARA_EIv1.0_2648970.1">
    <property type="protein sequence ID" value="TraesPARA_EIv1.0_2648970.1.CDS1"/>
    <property type="gene ID" value="TraesPARA_EIv1.0_2648970"/>
</dbReference>
<dbReference type="EnsemblPlants" id="TraesPARA_EIv1.0_2649140.1">
    <property type="protein sequence ID" value="TraesPARA_EIv1.0_2649140.1.CDS1"/>
    <property type="gene ID" value="TraesPARA_EIv1.0_2649140"/>
</dbReference>
<dbReference type="EnsemblPlants" id="TraesPARA_EIv1.0_2649240.1">
    <property type="protein sequence ID" value="TraesPARA_EIv1.0_2649240.1.CDS1"/>
    <property type="gene ID" value="TraesPARA_EIv1.0_2649240"/>
</dbReference>
<dbReference type="EnsemblPlants" id="TraesPARA_EIv1.0_2649340.1">
    <property type="protein sequence ID" value="TraesPARA_EIv1.0_2649340.1.CDS1"/>
    <property type="gene ID" value="TraesPARA_EIv1.0_2649340"/>
</dbReference>
<dbReference type="EnsemblPlants" id="TraesPARA_EIv1.0_2649780.1">
    <property type="protein sequence ID" value="TraesPARA_EIv1.0_2649780.1.CDS1"/>
    <property type="gene ID" value="TraesPARA_EIv1.0_2649780"/>
</dbReference>
<dbReference type="EnsemblPlants" id="TraesPARA_EIv1.0_2649990.1">
    <property type="protein sequence ID" value="TraesPARA_EIv1.0_2649990.1.CDS1"/>
    <property type="gene ID" value="TraesPARA_EIv1.0_2649990"/>
</dbReference>
<dbReference type="EnsemblPlants" id="TraesPARA_EIv1.0_2650060.1">
    <property type="protein sequence ID" value="TraesPARA_EIv1.0_2650060.1.CDS1"/>
    <property type="gene ID" value="TraesPARA_EIv1.0_2650060"/>
</dbReference>
<dbReference type="EnsemblPlants" id="TraesPARA_EIv1.0_2650260.1">
    <property type="protein sequence ID" value="TraesPARA_EIv1.0_2650260.1.CDS1"/>
    <property type="gene ID" value="TraesPARA_EIv1.0_2650260"/>
</dbReference>
<dbReference type="EnsemblPlants" id="TraesPARA_EIv1.0_2650400.1">
    <property type="protein sequence ID" value="TraesPARA_EIv1.0_2650400.1.CDS1"/>
    <property type="gene ID" value="TraesPARA_EIv1.0_2650400"/>
</dbReference>
<dbReference type="EnsemblPlants" id="TraesPARA_EIv1.0_2650490.1">
    <property type="protein sequence ID" value="TraesPARA_EIv1.0_2650490.1.CDS1"/>
    <property type="gene ID" value="TraesPARA_EIv1.0_2650490"/>
</dbReference>
<dbReference type="EnsemblPlants" id="TraesPARA_EIv1.0_2650590.1">
    <property type="protein sequence ID" value="TraesPARA_EIv1.0_2650590.1.CDS1"/>
    <property type="gene ID" value="TraesPARA_EIv1.0_2650590"/>
</dbReference>
<dbReference type="EnsemblPlants" id="TraesPARA_EIv1.0_2651210.1">
    <property type="protein sequence ID" value="TraesPARA_EIv1.0_2651210.1.CDS1"/>
    <property type="gene ID" value="TraesPARA_EIv1.0_2651210"/>
</dbReference>
<dbReference type="EnsemblPlants" id="TraesPARA_EIv1.0_2651480.1">
    <property type="protein sequence ID" value="TraesPARA_EIv1.0_2651480.1.CDS1"/>
    <property type="gene ID" value="TraesPARA_EIv1.0_2651480"/>
</dbReference>
<dbReference type="EnsemblPlants" id="TraesPARA_EIv1.0_2652010.1">
    <property type="protein sequence ID" value="TraesPARA_EIv1.0_2652010.1.CDS1"/>
    <property type="gene ID" value="TraesPARA_EIv1.0_2652010"/>
</dbReference>
<dbReference type="EnsemblPlants" id="TraesPARA_EIv1.0_2652340.1">
    <property type="protein sequence ID" value="TraesPARA_EIv1.0_2652340.1.CDS1"/>
    <property type="gene ID" value="TraesPARA_EIv1.0_2652340"/>
</dbReference>
<dbReference type="EnsemblPlants" id="TraesPARA_EIv1.0_2652610.1">
    <property type="protein sequence ID" value="TraesPARA_EIv1.0_2652610.1.CDS1"/>
    <property type="gene ID" value="TraesPARA_EIv1.0_2652610"/>
</dbReference>
<dbReference type="EnsemblPlants" id="TraesPARA_EIv1.0_2652750.1">
    <property type="protein sequence ID" value="TraesPARA_EIv1.0_2652750.1.CDS1"/>
    <property type="gene ID" value="TraesPARA_EIv1.0_2652750"/>
</dbReference>
<dbReference type="EnsemblPlants" id="TraesPARA_EIv1.0_2652840.1">
    <property type="protein sequence ID" value="TraesPARA_EIv1.0_2652840.1.CDS1"/>
    <property type="gene ID" value="TraesPARA_EIv1.0_2652840"/>
</dbReference>
<dbReference type="EnsemblPlants" id="TraesPARA_EIv1.0_2652990.1">
    <property type="protein sequence ID" value="TraesPARA_EIv1.0_2652990.1.CDS1"/>
    <property type="gene ID" value="TraesPARA_EIv1.0_2652990"/>
</dbReference>
<dbReference type="EnsemblPlants" id="TraesPARA_EIv1.0_2653140.1">
    <property type="protein sequence ID" value="TraesPARA_EIv1.0_2653140.1.CDS1"/>
    <property type="gene ID" value="TraesPARA_EIv1.0_2653140"/>
</dbReference>
<dbReference type="EnsemblPlants" id="TraesPARA_EIv1.0_2653360.1">
    <property type="protein sequence ID" value="TraesPARA_EIv1.0_2653360.1.CDS1"/>
    <property type="gene ID" value="TraesPARA_EIv1.0_2653360"/>
</dbReference>
<dbReference type="EnsemblPlants" id="TraesPARA_EIv1.0_2653620.1">
    <property type="protein sequence ID" value="TraesPARA_EIv1.0_2653620.1.CDS1"/>
    <property type="gene ID" value="TraesPARA_EIv1.0_2653620"/>
</dbReference>
<dbReference type="EnsemblPlants" id="TraesPARA_EIv1.0_2653740.1">
    <property type="protein sequence ID" value="TraesPARA_EIv1.0_2653740.1.CDS1"/>
    <property type="gene ID" value="TraesPARA_EIv1.0_2653740"/>
</dbReference>
<dbReference type="EnsemblPlants" id="TraesPARA_EIv1.0_2653810.1">
    <property type="protein sequence ID" value="TraesPARA_EIv1.0_2653810.1.CDS1"/>
    <property type="gene ID" value="TraesPARA_EIv1.0_2653810"/>
</dbReference>
<dbReference type="EnsemblPlants" id="TraesPARA_EIv1.0_2653970.1">
    <property type="protein sequence ID" value="TraesPARA_EIv1.0_2653970.1.CDS1"/>
    <property type="gene ID" value="TraesPARA_EIv1.0_2653970"/>
</dbReference>
<dbReference type="EnsemblPlants" id="TraesPARA_EIv1.0_2654200.1">
    <property type="protein sequence ID" value="TraesPARA_EIv1.0_2654200.1.CDS1"/>
    <property type="gene ID" value="TraesPARA_EIv1.0_2654200"/>
</dbReference>
<dbReference type="EnsemblPlants" id="TraesPARA_EIv1.0_2654320.1">
    <property type="protein sequence ID" value="TraesPARA_EIv1.0_2654320.1.CDS1"/>
    <property type="gene ID" value="TraesPARA_EIv1.0_2654320"/>
</dbReference>
<dbReference type="EnsemblPlants" id="TraesPARA_EIv1.0_2654650.1">
    <property type="protein sequence ID" value="TraesPARA_EIv1.0_2654650.1.CDS1"/>
    <property type="gene ID" value="TraesPARA_EIv1.0_2654650"/>
</dbReference>
<dbReference type="EnsemblPlants" id="TraesPARA_EIv1.0_2655090.1">
    <property type="protein sequence ID" value="TraesPARA_EIv1.0_2655090.1.CDS1"/>
    <property type="gene ID" value="TraesPARA_EIv1.0_2655090"/>
</dbReference>
<dbReference type="EnsemblPlants" id="TraesPARA_EIv1.0_2655230.1">
    <property type="protein sequence ID" value="TraesPARA_EIv1.0_2655230.1.CDS1"/>
    <property type="gene ID" value="TraesPARA_EIv1.0_2655230"/>
</dbReference>
<dbReference type="EnsemblPlants" id="TraesPARA_EIv1.0_2655370.1">
    <property type="protein sequence ID" value="TraesPARA_EIv1.0_2655370.1.CDS1"/>
    <property type="gene ID" value="TraesPARA_EIv1.0_2655370"/>
</dbReference>
<dbReference type="EnsemblPlants" id="TraesPARA_EIv1.0_2655500.1">
    <property type="protein sequence ID" value="TraesPARA_EIv1.0_2655500.1.CDS1"/>
    <property type="gene ID" value="TraesPARA_EIv1.0_2655500"/>
</dbReference>
<dbReference type="EnsemblPlants" id="TraesPARA_EIv1.0_2656840.1">
    <property type="protein sequence ID" value="TraesPARA_EIv1.0_2656840.1.CDS1"/>
    <property type="gene ID" value="TraesPARA_EIv1.0_2656840"/>
</dbReference>
<dbReference type="EnsemblPlants" id="TraesPARA_EIv1.0_2657020.1">
    <property type="protein sequence ID" value="TraesPARA_EIv1.0_2657020.1.CDS1"/>
    <property type="gene ID" value="TraesPARA_EIv1.0_2657020"/>
</dbReference>
<dbReference type="EnsemblPlants" id="TraesPARA_EIv1.0_2657110.1">
    <property type="protein sequence ID" value="TraesPARA_EIv1.0_2657110.1.CDS1"/>
    <property type="gene ID" value="TraesPARA_EIv1.0_2657110"/>
</dbReference>
<dbReference type="EnsemblPlants" id="TraesPARA_EIv1.0_2658460.1">
    <property type="protein sequence ID" value="TraesPARA_EIv1.0_2658460.1.CDS1"/>
    <property type="gene ID" value="TraesPARA_EIv1.0_2658460"/>
</dbReference>
<dbReference type="EnsemblPlants" id="TraesPARA_EIv1.0_2659970.1">
    <property type="protein sequence ID" value="TraesPARA_EIv1.0_2659970.1.CDS1"/>
    <property type="gene ID" value="TraesPARA_EIv1.0_2659970"/>
</dbReference>
<dbReference type="EnsemblPlants" id="TraesPARA_EIv1.0_2660060.1">
    <property type="protein sequence ID" value="TraesPARA_EIv1.0_2660060.1.CDS1"/>
    <property type="gene ID" value="TraesPARA_EIv1.0_2660060"/>
</dbReference>
<dbReference type="EnsemblPlants" id="TraesPARA_EIv1.0_2660200.1">
    <property type="protein sequence ID" value="TraesPARA_EIv1.0_2660200.1.CDS1"/>
    <property type="gene ID" value="TraesPARA_EIv1.0_2660200"/>
</dbReference>
<dbReference type="EnsemblPlants" id="TraesPARA_EIv1.0_2660350.1">
    <property type="protein sequence ID" value="TraesPARA_EIv1.0_2660350.1.CDS1"/>
    <property type="gene ID" value="TraesPARA_EIv1.0_2660350"/>
</dbReference>
<dbReference type="EnsemblPlants" id="TraesPARA_EIv1.0_2663080.1">
    <property type="protein sequence ID" value="TraesPARA_EIv1.0_2663080.1.CDS1"/>
    <property type="gene ID" value="TraesPARA_EIv1.0_2663080"/>
</dbReference>
<dbReference type="EnsemblPlants" id="TraesPARA_EIv1.0_2663510.1">
    <property type="protein sequence ID" value="TraesPARA_EIv1.0_2663510.1.CDS1"/>
    <property type="gene ID" value="TraesPARA_EIv1.0_2663510"/>
</dbReference>
<dbReference type="EnsemblPlants" id="TraesPARA_EIv1.0_2663640.1">
    <property type="protein sequence ID" value="TraesPARA_EIv1.0_2663640.1.CDS1"/>
    <property type="gene ID" value="TraesPARA_EIv1.0_2663640"/>
</dbReference>
<dbReference type="EnsemblPlants" id="TraesPARA_EIv1.0_2663860.1">
    <property type="protein sequence ID" value="TraesPARA_EIv1.0_2663860.1.CDS1"/>
    <property type="gene ID" value="TraesPARA_EIv1.0_2663860"/>
</dbReference>
<dbReference type="EnsemblPlants" id="TraesPARA_EIv1.0_2665350.1">
    <property type="protein sequence ID" value="TraesPARA_EIv1.0_2665350.1.CDS1"/>
    <property type="gene ID" value="TraesPARA_EIv1.0_2665350"/>
</dbReference>
<dbReference type="EnsemblPlants" id="TraesPARA_EIv1.0_2665640.1">
    <property type="protein sequence ID" value="TraesPARA_EIv1.0_2665640.1.CDS1"/>
    <property type="gene ID" value="TraesPARA_EIv1.0_2665640"/>
</dbReference>
<dbReference type="EnsemblPlants" id="TraesPARA_EIv1.0_2666350.1">
    <property type="protein sequence ID" value="TraesPARA_EIv1.0_2666350.1.CDS1"/>
    <property type="gene ID" value="TraesPARA_EIv1.0_2666350"/>
</dbReference>
<dbReference type="EnsemblPlants" id="TraesPARA_EIv1.0_2666470.1">
    <property type="protein sequence ID" value="TraesPARA_EIv1.0_2666470.1.CDS1"/>
    <property type="gene ID" value="TraesPARA_EIv1.0_2666470"/>
</dbReference>
<dbReference type="EnsemblPlants" id="TraesPARA_EIv1.0_2666820.1">
    <property type="protein sequence ID" value="TraesPARA_EIv1.0_2666820.1.CDS1"/>
    <property type="gene ID" value="TraesPARA_EIv1.0_2666820"/>
</dbReference>
<dbReference type="EnsemblPlants" id="TraesPARA_EIv1.0_2666940.1">
    <property type="protein sequence ID" value="TraesPARA_EIv1.0_2666940.1.CDS1"/>
    <property type="gene ID" value="TraesPARA_EIv1.0_2666940"/>
</dbReference>
<dbReference type="EnsemblPlants" id="TraesPARA_EIv1.0_2667830.1">
    <property type="protein sequence ID" value="TraesPARA_EIv1.0_2667830.1.CDS1"/>
    <property type="gene ID" value="TraesPARA_EIv1.0_2667830"/>
</dbReference>
<dbReference type="EnsemblPlants" id="TraesPARA_EIv1.0_2668480.1">
    <property type="protein sequence ID" value="TraesPARA_EIv1.0_2668480.1.CDS1"/>
    <property type="gene ID" value="TraesPARA_EIv1.0_2668480"/>
</dbReference>
<dbReference type="EnsemblPlants" id="TraesPARA_EIv1.0_2668810.1">
    <property type="protein sequence ID" value="TraesPARA_EIv1.0_2668810.1.CDS1"/>
    <property type="gene ID" value="TraesPARA_EIv1.0_2668810"/>
</dbReference>
<dbReference type="EnsemblPlants" id="TraesPARA_EIv1.0_2669280.1">
    <property type="protein sequence ID" value="TraesPARA_EIv1.0_2669280.1.CDS1"/>
    <property type="gene ID" value="TraesPARA_EIv1.0_2669280"/>
</dbReference>
<dbReference type="EnsemblPlants" id="TraesPARA_EIv1.0_2669510.1">
    <property type="protein sequence ID" value="TraesPARA_EIv1.0_2669510.1.CDS1"/>
    <property type="gene ID" value="TraesPARA_EIv1.0_2669510"/>
</dbReference>
<dbReference type="EnsemblPlants" id="TraesPARA_EIv1.0_2669950.1">
    <property type="protein sequence ID" value="TraesPARA_EIv1.0_2669950.1.CDS1"/>
    <property type="gene ID" value="TraesPARA_EIv1.0_2669950"/>
</dbReference>
<dbReference type="EnsemblPlants" id="TraesPARA_EIv1.0_2670190.1">
    <property type="protein sequence ID" value="TraesPARA_EIv1.0_2670190.1.CDS1"/>
    <property type="gene ID" value="TraesPARA_EIv1.0_2670190"/>
</dbReference>
<dbReference type="EnsemblPlants" id="TraesPARA_EIv1.0_2670430.1">
    <property type="protein sequence ID" value="TraesPARA_EIv1.0_2670430.1.CDS1"/>
    <property type="gene ID" value="TraesPARA_EIv1.0_2670430"/>
</dbReference>
<dbReference type="EnsemblPlants" id="TraesPARA_EIv1.0_2670950.1">
    <property type="protein sequence ID" value="TraesPARA_EIv1.0_2670950.1.CDS1"/>
    <property type="gene ID" value="TraesPARA_EIv1.0_2670950"/>
</dbReference>
<dbReference type="EnsemblPlants" id="TraesPARA_EIv1.0_2671860.1">
    <property type="protein sequence ID" value="TraesPARA_EIv1.0_2671860.1.CDS1"/>
    <property type="gene ID" value="TraesPARA_EIv1.0_2671860"/>
</dbReference>
<dbReference type="EnsemblPlants" id="TraesPARA_EIv1.0_2672630.1">
    <property type="protein sequence ID" value="TraesPARA_EIv1.0_2672630.1.CDS1"/>
    <property type="gene ID" value="TraesPARA_EIv1.0_2672630"/>
</dbReference>
<dbReference type="EnsemblPlants" id="TraesPARA_EIv1.0_2673710.1">
    <property type="protein sequence ID" value="TraesPARA_EIv1.0_2673710.1.CDS1"/>
    <property type="gene ID" value="TraesPARA_EIv1.0_2673710"/>
</dbReference>
<dbReference type="EnsemblPlants" id="TraesPARA_EIv1.0_2674260.1">
    <property type="protein sequence ID" value="TraesPARA_EIv1.0_2674260.1.CDS1"/>
    <property type="gene ID" value="TraesPARA_EIv1.0_2674260"/>
</dbReference>
<dbReference type="EnsemblPlants" id="TraesPARA_EIv1.0_2675180.1">
    <property type="protein sequence ID" value="TraesPARA_EIv1.0_2675180.1.CDS1"/>
    <property type="gene ID" value="TraesPARA_EIv1.0_2675180"/>
</dbReference>
<dbReference type="EnsemblPlants" id="TraesPARA_EIv1.0_2675860.1">
    <property type="protein sequence ID" value="TraesPARA_EIv1.0_2675860.1.CDS1"/>
    <property type="gene ID" value="TraesPARA_EIv1.0_2675860"/>
</dbReference>
<dbReference type="EnsemblPlants" id="TraesPARA_EIv1.0_2680150.1">
    <property type="protein sequence ID" value="TraesPARA_EIv1.0_2680150.1.CDS1"/>
    <property type="gene ID" value="TraesPARA_EIv1.0_2680150"/>
</dbReference>
<dbReference type="EnsemblPlants" id="TraesPARA_EIv1.0_2680490.1">
    <property type="protein sequence ID" value="TraesPARA_EIv1.0_2680490.1.CDS1"/>
    <property type="gene ID" value="TraesPARA_EIv1.0_2680490"/>
</dbReference>
<dbReference type="EnsemblPlants" id="TraesPARA_EIv1.0_2680950.1">
    <property type="protein sequence ID" value="TraesPARA_EIv1.0_2680950.1.CDS1"/>
    <property type="gene ID" value="TraesPARA_EIv1.0_2680950"/>
</dbReference>
<dbReference type="EnsemblPlants" id="TraesPARA_EIv1.0_2681140.1">
    <property type="protein sequence ID" value="TraesPARA_EIv1.0_2681140.1.CDS1"/>
    <property type="gene ID" value="TraesPARA_EIv1.0_2681140"/>
</dbReference>
<dbReference type="EnsemblPlants" id="TraesPARA_EIv1.0_2681140.2">
    <property type="protein sequence ID" value="TraesPARA_EIv1.0_2681140.2.CDS1"/>
    <property type="gene ID" value="TraesPARA_EIv1.0_2681140"/>
</dbReference>
<dbReference type="EnsemblPlants" id="TraesPARA_EIv1.0_2682150.1">
    <property type="protein sequence ID" value="TraesPARA_EIv1.0_2682150.1.CDS1"/>
    <property type="gene ID" value="TraesPARA_EIv1.0_2682150"/>
</dbReference>
<dbReference type="GeneID" id="803091"/>
<dbReference type="Gramene" id="TraesKARUn01G0026560.1">
    <property type="protein sequence ID" value="cds.TraesKARUn01G0026560.1"/>
    <property type="gene ID" value="TraesKARUn01G0026560"/>
</dbReference>
<dbReference type="Gramene" id="TraesKARUn01G0027040.1">
    <property type="protein sequence ID" value="cds.TraesKARUn01G0027040.1"/>
    <property type="gene ID" value="TraesKARUn01G0027040"/>
</dbReference>
<dbReference type="Gramene" id="TraesKARUn01G0027070.1">
    <property type="protein sequence ID" value="cds.TraesKARUn01G0027070.1"/>
    <property type="gene ID" value="TraesKARUn01G0027070"/>
</dbReference>
<dbReference type="Gramene" id="TraesKARUn01G0027140.1">
    <property type="protein sequence ID" value="cds.TraesKARUn01G0027140.1"/>
    <property type="gene ID" value="TraesKARUn01G0027140"/>
</dbReference>
<dbReference type="Gramene" id="TraesKARUn01G0028930.1">
    <property type="protein sequence ID" value="cds.TraesKARUn01G0028930.1"/>
    <property type="gene ID" value="TraesKARUn01G0028930"/>
</dbReference>
<dbReference type="Gramene" id="TraesKARUn01G0029050.1">
    <property type="protein sequence ID" value="cds.TraesKARUn01G0029050.1"/>
    <property type="gene ID" value="TraesKARUn01G0029050"/>
</dbReference>
<dbReference type="Gramene" id="TraesKARUn01G0029520.1">
    <property type="protein sequence ID" value="cds.TraesKARUn01G0029520.1"/>
    <property type="gene ID" value="TraesKARUn01G0029520"/>
</dbReference>
<dbReference type="Gramene" id="TraesKARUn01G0029780.1">
    <property type="protein sequence ID" value="cds.TraesKARUn01G0029780.1"/>
    <property type="gene ID" value="TraesKARUn01G0029780"/>
</dbReference>
<dbReference type="Gramene" id="TraesKARUn01G0030840.1">
    <property type="protein sequence ID" value="cds.TraesKARUn01G0030840.1"/>
    <property type="gene ID" value="TraesKARUn01G0030840"/>
</dbReference>
<dbReference type="Gramene" id="TraesKARUn01G0030880.1">
    <property type="protein sequence ID" value="cds.TraesKARUn01G0030880.1"/>
    <property type="gene ID" value="TraesKARUn01G0030880"/>
</dbReference>
<dbReference type="Gramene" id="TraesKARUn01G0031400.1">
    <property type="protein sequence ID" value="cds.TraesKARUn01G0031400.1"/>
    <property type="gene ID" value="TraesKARUn01G0031400"/>
</dbReference>
<dbReference type="Gramene" id="TraesKARUn01G0031720.1">
    <property type="protein sequence ID" value="cds.TraesKARUn01G0031720.1"/>
    <property type="gene ID" value="TraesKARUn01G0031720"/>
</dbReference>
<dbReference type="Gramene" id="TraesKARUn01G0031790.1">
    <property type="protein sequence ID" value="cds.TraesKARUn01G0031790.1"/>
    <property type="gene ID" value="TraesKARUn01G0031790"/>
</dbReference>
<dbReference type="Gramene" id="TraesKARUn01G0031880.1">
    <property type="protein sequence ID" value="cds.TraesKARUn01G0031880.1"/>
    <property type="gene ID" value="TraesKARUn01G0031880"/>
</dbReference>
<dbReference type="Gramene" id="TraesKARUn01G0031980.1">
    <property type="protein sequence ID" value="cds.TraesKARUn01G0031980.1"/>
    <property type="gene ID" value="TraesKARUn01G0031980"/>
</dbReference>
<dbReference type="Gramene" id="TraesKARUn01G0032670.1">
    <property type="protein sequence ID" value="cds.TraesKARUn01G0032670.1"/>
    <property type="gene ID" value="TraesKARUn01G0032670"/>
</dbReference>
<dbReference type="Gramene" id="TraesKARUn01G0032830.1">
    <property type="protein sequence ID" value="cds.TraesKARUn01G0032830.1"/>
    <property type="gene ID" value="TraesKARUn01G0032830"/>
</dbReference>
<dbReference type="Gramene" id="TraesKARUn01G0033070.1">
    <property type="protein sequence ID" value="cds.TraesKARUn01G0033070.1"/>
    <property type="gene ID" value="TraesKARUn01G0033070"/>
</dbReference>
<dbReference type="Gramene" id="TraesKARUn01G0033180.1">
    <property type="protein sequence ID" value="cds.TraesKARUn01G0033180.1"/>
    <property type="gene ID" value="TraesKARUn01G0033180"/>
</dbReference>
<dbReference type="Gramene" id="TraesKARUn01G0033310.1">
    <property type="protein sequence ID" value="cds.TraesKARUn01G0033310.1"/>
    <property type="gene ID" value="TraesKARUn01G0033310"/>
</dbReference>
<dbReference type="Gramene" id="TraesKARUn01G0033620.1">
    <property type="protein sequence ID" value="cds.TraesKARUn01G0033620.1"/>
    <property type="gene ID" value="TraesKARUn01G0033620"/>
</dbReference>
<dbReference type="Gramene" id="TraesKARUn01G0033720.1">
    <property type="protein sequence ID" value="cds.TraesKARUn01G0033720.1"/>
    <property type="gene ID" value="TraesKARUn01G0033720"/>
</dbReference>
<dbReference type="Gramene" id="TraesKARUn01G0034400.1">
    <property type="protein sequence ID" value="cds.TraesKARUn01G0034400.1"/>
    <property type="gene ID" value="TraesKARUn01G0034400"/>
</dbReference>
<dbReference type="Gramene" id="TraesKARUn01G0034580.1">
    <property type="protein sequence ID" value="cds.TraesKARUn01G0034580.1"/>
    <property type="gene ID" value="TraesKARUn01G0034580"/>
</dbReference>
<dbReference type="Gramene" id="TraesKARUn01G0034680.1">
    <property type="protein sequence ID" value="cds.TraesKARUn01G0034680.1"/>
    <property type="gene ID" value="TraesKARUn01G0034680"/>
</dbReference>
<dbReference type="Gramene" id="TraesKARUn01G0034870.1">
    <property type="protein sequence ID" value="cds.TraesKARUn01G0034870.1"/>
    <property type="gene ID" value="TraesKARUn01G0034870"/>
</dbReference>
<dbReference type="Gramene" id="TraesKARUn01G0035390.1">
    <property type="protein sequence ID" value="cds.TraesKARUn01G0035390.1"/>
    <property type="gene ID" value="TraesKARUn01G0035390"/>
</dbReference>
<dbReference type="Gramene" id="TraesKARUn01G0035570.1">
    <property type="protein sequence ID" value="cds.TraesKARUn01G0035570.1"/>
    <property type="gene ID" value="TraesKARUn01G0035570"/>
</dbReference>
<dbReference type="Gramene" id="TraesKARUn01G0035710.1">
    <property type="protein sequence ID" value="cds.TraesKARUn01G0035710.1"/>
    <property type="gene ID" value="TraesKARUn01G0035710"/>
</dbReference>
<dbReference type="Gramene" id="TraesKARUn01G0036240.1">
    <property type="protein sequence ID" value="cds.TraesKARUn01G0036240.1"/>
    <property type="gene ID" value="TraesKARUn01G0036240"/>
</dbReference>
<dbReference type="Gramene" id="TraesKARUn01G0036320.1">
    <property type="protein sequence ID" value="cds.TraesKARUn01G0036320.1"/>
    <property type="gene ID" value="TraesKARUn01G0036320"/>
</dbReference>
<dbReference type="Gramene" id="TraesKARUn01G0036590.1">
    <property type="protein sequence ID" value="cds.TraesKARUn01G0036590.1"/>
    <property type="gene ID" value="TraesKARUn01G0036590"/>
</dbReference>
<dbReference type="Gramene" id="TraesKARUn01G0036730.1">
    <property type="protein sequence ID" value="cds.TraesKARUn01G0036730.1"/>
    <property type="gene ID" value="TraesKARUn01G0036730"/>
</dbReference>
<dbReference type="Gramene" id="TraesKARUn01G0036860.1">
    <property type="protein sequence ID" value="cds.TraesKARUn01G0036860.1"/>
    <property type="gene ID" value="TraesKARUn01G0036860"/>
</dbReference>
<dbReference type="Gramene" id="TraesKARUn01G0037020.1">
    <property type="protein sequence ID" value="cds.TraesKARUn01G0037020.1"/>
    <property type="gene ID" value="TraesKARUn01G0037020"/>
</dbReference>
<dbReference type="Gramene" id="TraesKARUn01G0057960.1">
    <property type="protein sequence ID" value="cds.TraesKARUn01G0057960.1"/>
    <property type="gene ID" value="TraesKARUn01G0057960"/>
</dbReference>
<dbReference type="Gramene" id="TraesKARUn01G0060280.1">
    <property type="protein sequence ID" value="cds.TraesKARUn01G0060280.1"/>
    <property type="gene ID" value="TraesKARUn01G0060280"/>
</dbReference>
<dbReference type="Gramene" id="TraesKARUn01G0060410.1">
    <property type="protein sequence ID" value="cds.TraesKARUn01G0060410.1"/>
    <property type="gene ID" value="TraesKARUn01G0060410"/>
</dbReference>
<dbReference type="Gramene" id="TraesKARUn01G0060480.1">
    <property type="protein sequence ID" value="cds.TraesKARUn01G0060480.1"/>
    <property type="gene ID" value="TraesKARUn01G0060480"/>
</dbReference>
<dbReference type="Gramene" id="TraesKARUn01G0061170.1">
    <property type="protein sequence ID" value="cds.TraesKARUn01G0061170.1"/>
    <property type="gene ID" value="TraesKARUn01G0061170"/>
</dbReference>
<dbReference type="Gramene" id="TraesKARUn01G0064370.1">
    <property type="protein sequence ID" value="cds.TraesKARUn01G0064370.1"/>
    <property type="gene ID" value="TraesKARUn01G0064370"/>
</dbReference>
<dbReference type="Gramene" id="TraesKARUn01G0064420.1">
    <property type="protein sequence ID" value="cds.TraesKARUn01G0064420.1"/>
    <property type="gene ID" value="TraesKARUn01G0064420"/>
</dbReference>
<dbReference type="Gramene" id="TraesKARUn01G0065230.1">
    <property type="protein sequence ID" value="cds.TraesKARUn01G0065230.1"/>
    <property type="gene ID" value="TraesKARUn01G0065230"/>
</dbReference>
<dbReference type="Gramene" id="TraesKARUn01G0065400.1">
    <property type="protein sequence ID" value="cds.TraesKARUn01G0065400.1"/>
    <property type="gene ID" value="TraesKARUn01G0065400"/>
</dbReference>
<dbReference type="Gramene" id="TraesKARUn01G0065700.1">
    <property type="protein sequence ID" value="cds.TraesKARUn01G0065700.1"/>
    <property type="gene ID" value="TraesKARUn01G0065700"/>
</dbReference>
<dbReference type="Gramene" id="TraesKARUn01G0065840.1">
    <property type="protein sequence ID" value="cds.TraesKARUn01G0065840.1"/>
    <property type="gene ID" value="TraesKARUn01G0065840"/>
</dbReference>
<dbReference type="Gramene" id="TraesKARUn01G0066410.1">
    <property type="protein sequence ID" value="cds.TraesKARUn01G0066410.1"/>
    <property type="gene ID" value="TraesKARUn01G0066410"/>
</dbReference>
<dbReference type="Gramene" id="TraesKARUn01G0066760.1">
    <property type="protein sequence ID" value="cds.TraesKARUn01G0066760.1"/>
    <property type="gene ID" value="TraesKARUn01G0066760"/>
</dbReference>
<dbReference type="Gramene" id="TraesKARUn01G0066920.1">
    <property type="protein sequence ID" value="cds.TraesKARUn01G0066920.1"/>
    <property type="gene ID" value="TraesKARUn01G0066920"/>
</dbReference>
<dbReference type="Gramene" id="TraesKARUn01G0067080.1">
    <property type="protein sequence ID" value="cds.TraesKARUn01G0067080.1"/>
    <property type="gene ID" value="TraesKARUn01G0067080"/>
</dbReference>
<dbReference type="Gramene" id="TraesKARUn01G0067210.1">
    <property type="protein sequence ID" value="cds.TraesKARUn01G0067210.1"/>
    <property type="gene ID" value="TraesKARUn01G0067210"/>
</dbReference>
<dbReference type="Gramene" id="TraesKARUn01G0067260.1">
    <property type="protein sequence ID" value="cds.TraesKARUn01G0067260.1"/>
    <property type="gene ID" value="TraesKARUn01G0067260"/>
</dbReference>
<dbReference type="Gramene" id="TraesKARUn01G0067480.1">
    <property type="protein sequence ID" value="cds.TraesKARUn01G0067480.1"/>
    <property type="gene ID" value="TraesKARUn01G0067480"/>
</dbReference>
<dbReference type="Gramene" id="TraesKARUn01G0067560.1">
    <property type="protein sequence ID" value="cds.TraesKARUn01G0067560.1"/>
    <property type="gene ID" value="TraesKARUn01G0067560"/>
</dbReference>
<dbReference type="Gramene" id="TraesKARUn01G0068110.1">
    <property type="protein sequence ID" value="cds.TraesKARUn01G0068110.1"/>
    <property type="gene ID" value="TraesKARUn01G0068110"/>
</dbReference>
<dbReference type="Gramene" id="TraesKARUn01G0068160.1">
    <property type="protein sequence ID" value="cds.TraesKARUn01G0068160.1"/>
    <property type="gene ID" value="TraesKARUn01G0068160"/>
</dbReference>
<dbReference type="Gramene" id="TraesKARUn01G0068380.1">
    <property type="protein sequence ID" value="cds.TraesKARUn01G0068380.1"/>
    <property type="gene ID" value="TraesKARUn01G0068380"/>
</dbReference>
<dbReference type="Gramene" id="TraesKARUn01G0068520.1">
    <property type="protein sequence ID" value="cds.TraesKARUn01G0068520.1"/>
    <property type="gene ID" value="TraesKARUn01G0068520"/>
</dbReference>
<dbReference type="Gramene" id="TraesKARUn01G0068700.1">
    <property type="protein sequence ID" value="cds.TraesKARUn01G0068700.1"/>
    <property type="gene ID" value="TraesKARUn01G0068700"/>
</dbReference>
<dbReference type="Gramene" id="TraesKARUn01G0068750.1">
    <property type="protein sequence ID" value="cds.TraesKARUn01G0068750.1"/>
    <property type="gene ID" value="TraesKARUn01G0068750"/>
</dbReference>
<dbReference type="Gramene" id="TraesKARUn01G0069200.1">
    <property type="protein sequence ID" value="cds.TraesKARUn01G0069200.1"/>
    <property type="gene ID" value="TraesKARUn01G0069200"/>
</dbReference>
<dbReference type="Gramene" id="TraesKARUn01G0069400.1">
    <property type="protein sequence ID" value="cds.TraesKARUn01G0069400.1"/>
    <property type="gene ID" value="TraesKARUn01G0069400"/>
</dbReference>
<dbReference type="Gramene" id="TraesKARUn01G0069500.1">
    <property type="protein sequence ID" value="cds.TraesKARUn01G0069500.1"/>
    <property type="gene ID" value="TraesKARUn01G0069500"/>
</dbReference>
<dbReference type="Gramene" id="TraesKARUn01G0069550.1">
    <property type="protein sequence ID" value="cds.TraesKARUn01G0069550.1"/>
    <property type="gene ID" value="TraesKARUn01G0069550"/>
</dbReference>
<dbReference type="Gramene" id="TraesKARUn01G0069700.1">
    <property type="protein sequence ID" value="cds.TraesKARUn01G0069700.1"/>
    <property type="gene ID" value="TraesKARUn01G0069700"/>
</dbReference>
<dbReference type="Gramene" id="TraesKARUn01G0071360.1">
    <property type="protein sequence ID" value="cds.TraesKARUn01G0071360.1"/>
    <property type="gene ID" value="TraesKARUn01G0071360"/>
</dbReference>
<dbReference type="Gramene" id="TraesKARUn01G0071420.1">
    <property type="protein sequence ID" value="cds.TraesKARUn01G0071420.1"/>
    <property type="gene ID" value="TraesKARUn01G0071420"/>
</dbReference>
<dbReference type="Gramene" id="TraesKARUn01G0071540.1">
    <property type="protein sequence ID" value="cds.TraesKARUn01G0071540.1"/>
    <property type="gene ID" value="TraesKARUn01G0071540"/>
</dbReference>
<dbReference type="Gramene" id="TraesKARUn01G0071720.1">
    <property type="protein sequence ID" value="cds.TraesKARUn01G0071720.1"/>
    <property type="gene ID" value="TraesKARUn01G0071720"/>
</dbReference>
<dbReference type="Gramene" id="TraesKARUn01G0072130.1">
    <property type="protein sequence ID" value="cds.TraesKARUn01G0072130.1"/>
    <property type="gene ID" value="TraesKARUn01G0072130"/>
</dbReference>
<dbReference type="Gramene" id="TraesKARUn01G0072340.1">
    <property type="protein sequence ID" value="cds.TraesKARUn01G0072340.1"/>
    <property type="gene ID" value="TraesKARUn01G0072340"/>
</dbReference>
<dbReference type="Gramene" id="TraesKARUn01G0072700.1">
    <property type="protein sequence ID" value="cds.TraesKARUn01G0072700.1"/>
    <property type="gene ID" value="TraesKARUn01G0072700"/>
</dbReference>
<dbReference type="Gramene" id="TraesKARUn01G0072870.1">
    <property type="protein sequence ID" value="cds.TraesKARUn01G0072870.1"/>
    <property type="gene ID" value="TraesKARUn01G0072870"/>
</dbReference>
<dbReference type="Gramene" id="TraesKARUn01G0073280.1">
    <property type="protein sequence ID" value="cds.TraesKARUn01G0073280.1"/>
    <property type="gene ID" value="TraesKARUn01G0073280"/>
</dbReference>
<dbReference type="Gramene" id="TraesKARUn01G0073570.1">
    <property type="protein sequence ID" value="cds.TraesKARUn01G0073570.1"/>
    <property type="gene ID" value="TraesKARUn01G0073570"/>
</dbReference>
<dbReference type="Gramene" id="TraesKARUn01G0073810.1">
    <property type="protein sequence ID" value="cds.TraesKARUn01G0073810.1"/>
    <property type="gene ID" value="TraesKARUn01G0073810"/>
</dbReference>
<dbReference type="Gramene" id="TraesKARUn01G0075400.1">
    <property type="protein sequence ID" value="cds.TraesKARUn01G0075400.1"/>
    <property type="gene ID" value="TraesKARUn01G0075400"/>
</dbReference>
<dbReference type="Gramene" id="TraesKARUn01G0075440.1">
    <property type="protein sequence ID" value="cds.TraesKARUn01G0075440.1"/>
    <property type="gene ID" value="TraesKARUn01G0075440"/>
</dbReference>
<dbReference type="Gramene" id="TraesKARUn01G0075790.1">
    <property type="protein sequence ID" value="cds.TraesKARUn01G0075790.1"/>
    <property type="gene ID" value="TraesKARUn01G0075790"/>
</dbReference>
<dbReference type="Gramene" id="TraesKARUn01G0076870.1">
    <property type="protein sequence ID" value="cds.TraesKARUn01G0076870.1"/>
    <property type="gene ID" value="TraesKARUn01G0076870"/>
</dbReference>
<dbReference type="Gramene" id="TraesKARUn01G0076940.1">
    <property type="protein sequence ID" value="cds.TraesKARUn01G0076940.1"/>
    <property type="gene ID" value="TraesKARUn01G0076940"/>
</dbReference>
<dbReference type="Gramene" id="TraesKARUn01G0077340.1">
    <property type="protein sequence ID" value="cds.TraesKARUn01G0077340.1"/>
    <property type="gene ID" value="TraesKARUn01G0077340"/>
</dbReference>
<dbReference type="Gramene" id="TraesKARUn01G0077510.1">
    <property type="protein sequence ID" value="cds.TraesKARUn01G0077510.1"/>
    <property type="gene ID" value="TraesKARUn01G0077510"/>
</dbReference>
<dbReference type="Gramene" id="TraesKARUn01G0077600.1">
    <property type="protein sequence ID" value="cds.TraesKARUn01G0077600.1"/>
    <property type="gene ID" value="TraesKARUn01G0077600"/>
</dbReference>
<dbReference type="Gramene" id="TraesKARUn01G0077970.1">
    <property type="protein sequence ID" value="cds.TraesKARUn01G0077970.1"/>
    <property type="gene ID" value="TraesKARUn01G0077970"/>
</dbReference>
<dbReference type="Gramene" id="TraesKARUn01G0078130.1">
    <property type="protein sequence ID" value="cds.TraesKARUn01G0078130.1"/>
    <property type="gene ID" value="TraesKARUn01G0078130"/>
</dbReference>
<dbReference type="Gramene" id="TraesKARUn01G0078270.1">
    <property type="protein sequence ID" value="cds.TraesKARUn01G0078270.1"/>
    <property type="gene ID" value="TraesKARUn01G0078270"/>
</dbReference>
<dbReference type="Gramene" id="TraesKARUn01G0078480.1">
    <property type="protein sequence ID" value="cds.TraesKARUn01G0078480.1"/>
    <property type="gene ID" value="TraesKARUn01G0078480"/>
</dbReference>
<dbReference type="Gramene" id="TraesKARUn01G0078690.1">
    <property type="protein sequence ID" value="cds.TraesKARUn01G0078690.1"/>
    <property type="gene ID" value="TraesKARUn01G0078690"/>
</dbReference>
<dbReference type="Gramene" id="TraesKARUn01G0078920.1">
    <property type="protein sequence ID" value="cds.TraesKARUn01G0078920.1"/>
    <property type="gene ID" value="TraesKARUn01G0078920"/>
</dbReference>
<dbReference type="Gramene" id="TraesKARUn01G0079010.1">
    <property type="protein sequence ID" value="cds.TraesKARUn01G0079010.1"/>
    <property type="gene ID" value="TraesKARUn01G0079010"/>
</dbReference>
<dbReference type="Gramene" id="TraesKARUn01G0079250.1">
    <property type="protein sequence ID" value="cds.TraesKARUn01G0079250.1"/>
    <property type="gene ID" value="TraesKARUn01G0079250"/>
</dbReference>
<dbReference type="Gramene" id="TraesKARUn01G0079490.1">
    <property type="protein sequence ID" value="cds.TraesKARUn01G0079490.1"/>
    <property type="gene ID" value="TraesKARUn01G0079490"/>
</dbReference>
<dbReference type="Gramene" id="TraesKARUn01G0079570.1">
    <property type="protein sequence ID" value="cds.TraesKARUn01G0079570.1"/>
    <property type="gene ID" value="TraesKARUn01G0079570"/>
</dbReference>
<dbReference type="Gramene" id="TraesKARUn01G0080000.1">
    <property type="protein sequence ID" value="cds.TraesKARUn01G0080000.1"/>
    <property type="gene ID" value="TraesKARUn01G0080000"/>
</dbReference>
<dbReference type="Gramene" id="TraesKARUn01G0080250.1">
    <property type="protein sequence ID" value="cds.TraesKARUn01G0080250.1"/>
    <property type="gene ID" value="TraesKARUn01G0080250"/>
</dbReference>
<dbReference type="Gramene" id="TraesKARUn01G0080370.1">
    <property type="protein sequence ID" value="cds.TraesKARUn01G0080370.1"/>
    <property type="gene ID" value="TraesKARUn01G0080370"/>
</dbReference>
<dbReference type="Gramene" id="TraesKARUn01G0080560.1">
    <property type="protein sequence ID" value="cds.TraesKARUn01G0080560.1"/>
    <property type="gene ID" value="TraesKARUn01G0080560"/>
</dbReference>
<dbReference type="Gramene" id="TraesKARUn01G0080740.1">
    <property type="protein sequence ID" value="cds.TraesKARUn01G0080740.1"/>
    <property type="gene ID" value="TraesKARUn01G0080740"/>
</dbReference>
<dbReference type="Gramene" id="TraesKARUn01G0080890.1">
    <property type="protein sequence ID" value="cds.TraesKARUn01G0080890.1"/>
    <property type="gene ID" value="TraesKARUn01G0080890"/>
</dbReference>
<dbReference type="Gramene" id="TraesKARUn01G0081060.1">
    <property type="protein sequence ID" value="cds.TraesKARUn01G0081060.1"/>
    <property type="gene ID" value="TraesKARUn01G0081060"/>
</dbReference>
<dbReference type="Gramene" id="TraesKARUn01G0081170.1">
    <property type="protein sequence ID" value="cds.TraesKARUn01G0081170.1"/>
    <property type="gene ID" value="TraesKARUn01G0081170"/>
</dbReference>
<dbReference type="Gramene" id="TraesKARUn01G0081420.1">
    <property type="protein sequence ID" value="cds.TraesKARUn01G0081420.1"/>
    <property type="gene ID" value="TraesKARUn01G0081420"/>
</dbReference>
<dbReference type="Gramene" id="TraesKARUn01G0081510.1">
    <property type="protein sequence ID" value="cds.TraesKARUn01G0081510.1"/>
    <property type="gene ID" value="TraesKARUn01G0081510"/>
</dbReference>
<dbReference type="Gramene" id="TraesKARUn01G0081540.1">
    <property type="protein sequence ID" value="cds.TraesKARUn01G0081540.1"/>
    <property type="gene ID" value="TraesKARUn01G0081540"/>
</dbReference>
<dbReference type="Gramene" id="TraesKARUn01G0081760.1">
    <property type="protein sequence ID" value="cds.TraesKARUn01G0081760.1"/>
    <property type="gene ID" value="TraesKARUn01G0081760"/>
</dbReference>
<dbReference type="Gramene" id="TraesKARUn01G0081810.1">
    <property type="protein sequence ID" value="cds.TraesKARUn01G0081810.1"/>
    <property type="gene ID" value="TraesKARUn01G0081810"/>
</dbReference>
<dbReference type="Gramene" id="TraesKARUn01G0082040.1">
    <property type="protein sequence ID" value="cds.TraesKARUn01G0082040.1"/>
    <property type="gene ID" value="TraesKARUn01G0082040"/>
</dbReference>
<dbReference type="Gramene" id="TraesKARUn01G0082240.1">
    <property type="protein sequence ID" value="cds.TraesKARUn01G0082240.1"/>
    <property type="gene ID" value="TraesKARUn01G0082240"/>
</dbReference>
<dbReference type="Gramene" id="TraesKARUn01G0082520.1">
    <property type="protein sequence ID" value="cds.TraesKARUn01G0082520.1"/>
    <property type="gene ID" value="TraesKARUn01G0082520"/>
</dbReference>
<dbReference type="Gramene" id="TraesKARUn01G0082630.1">
    <property type="protein sequence ID" value="cds.TraesKARUn01G0082630.1"/>
    <property type="gene ID" value="TraesKARUn01G0082630"/>
</dbReference>
<dbReference type="Gramene" id="TraesKARUn01G0082780.1">
    <property type="protein sequence ID" value="cds.TraesKARUn01G0082780.1"/>
    <property type="gene ID" value="TraesKARUn01G0082780"/>
</dbReference>
<dbReference type="Gramene" id="TraesKARUn01G0082970.1">
    <property type="protein sequence ID" value="cds.TraesKARUn01G0082970.1"/>
    <property type="gene ID" value="TraesKARUn01G0082970"/>
</dbReference>
<dbReference type="Gramene" id="TraesKARUn01G0083140.1">
    <property type="protein sequence ID" value="cds.TraesKARUn01G0083140.1"/>
    <property type="gene ID" value="TraesKARUn01G0083140"/>
</dbReference>
<dbReference type="Gramene" id="TraesKARUn01G0083200.1">
    <property type="protein sequence ID" value="cds.TraesKARUn01G0083200.1"/>
    <property type="gene ID" value="TraesKARUn01G0083200"/>
</dbReference>
<dbReference type="Gramene" id="TraesKARUn01G0083370.1">
    <property type="protein sequence ID" value="cds.TraesKARUn01G0083370.1"/>
    <property type="gene ID" value="TraesKARUn01G0083370"/>
</dbReference>
<dbReference type="Gramene" id="TraesKARUn01G0083460.1">
    <property type="protein sequence ID" value="cds.TraesKARUn01G0083460.1"/>
    <property type="gene ID" value="TraesKARUn01G0083460"/>
</dbReference>
<dbReference type="Gramene" id="TraesKARUn01G0083490.1">
    <property type="protein sequence ID" value="cds.TraesKARUn01G0083490.1"/>
    <property type="gene ID" value="TraesKARUn01G0083490"/>
</dbReference>
<dbReference type="Gramene" id="TraesKARUn01G0083820.1">
    <property type="protein sequence ID" value="cds.TraesKARUn01G0083820.1"/>
    <property type="gene ID" value="TraesKARUn01G0083820"/>
</dbReference>
<dbReference type="Gramene" id="TraesKARUn01G0084060.1">
    <property type="protein sequence ID" value="cds.TraesKARUn01G0084060.1"/>
    <property type="gene ID" value="TraesKARUn01G0084060"/>
</dbReference>
<dbReference type="Gramene" id="TraesKARUn01G0084130.1">
    <property type="protein sequence ID" value="cds.TraesKARUn01G0084130.1"/>
    <property type="gene ID" value="TraesKARUn01G0084130"/>
</dbReference>
<dbReference type="Gramene" id="TraesKARUn01G0084930.1">
    <property type="protein sequence ID" value="cds.TraesKARUn01G0084930.1"/>
    <property type="gene ID" value="TraesKARUn01G0084930"/>
</dbReference>
<dbReference type="Gramene" id="TraesKARUn01G0085300.1">
    <property type="protein sequence ID" value="cds.TraesKARUn01G0085300.1"/>
    <property type="gene ID" value="TraesKARUn01G0085300"/>
</dbReference>
<dbReference type="Gramene" id="TraesKARUn01G0085400.1">
    <property type="protein sequence ID" value="cds.TraesKARUn01G0085400.1"/>
    <property type="gene ID" value="TraesKARUn01G0085400"/>
</dbReference>
<dbReference type="Gramene" id="TraesKARUn01G0086040.1">
    <property type="protein sequence ID" value="cds.TraesKARUn01G0086040.1"/>
    <property type="gene ID" value="TraesKARUn01G0086040"/>
</dbReference>
<dbReference type="Gramene" id="TraesKARUn01G0086210.1">
    <property type="protein sequence ID" value="cds.TraesKARUn01G0086210.1"/>
    <property type="gene ID" value="TraesKARUn01G0086210"/>
</dbReference>
<dbReference type="Gramene" id="TraesKARUn01G0086380.1">
    <property type="protein sequence ID" value="cds.TraesKARUn01G0086380.1"/>
    <property type="gene ID" value="TraesKARUn01G0086380"/>
</dbReference>
<dbReference type="Gramene" id="TraesKARUn01G0086760.1">
    <property type="protein sequence ID" value="cds.TraesKARUn01G0086760.1"/>
    <property type="gene ID" value="TraesKARUn01G0086760"/>
</dbReference>
<dbReference type="Gramene" id="TraesKARUn01G0087250.1">
    <property type="protein sequence ID" value="cds.TraesKARUn01G0087250.1"/>
    <property type="gene ID" value="TraesKARUn01G0087250"/>
</dbReference>
<dbReference type="Gramene" id="TraesKARUn01G0087940.1">
    <property type="protein sequence ID" value="cds.TraesKARUn01G0087940.1"/>
    <property type="gene ID" value="TraesKARUn01G0087940"/>
</dbReference>
<dbReference type="Gramene" id="TraesKARUn01G0088080.1">
    <property type="protein sequence ID" value="cds.TraesKARUn01G0088080.1"/>
    <property type="gene ID" value="TraesKARUn01G0088080"/>
</dbReference>
<dbReference type="Gramene" id="TraesKARUn01G0088220.1">
    <property type="protein sequence ID" value="cds.TraesKARUn01G0088220.1"/>
    <property type="gene ID" value="TraesKARUn01G0088220"/>
</dbReference>
<dbReference type="Gramene" id="TraesKARUn01G0088370.1">
    <property type="protein sequence ID" value="cds.TraesKARUn01G0088370.1"/>
    <property type="gene ID" value="TraesKARUn01G0088370"/>
</dbReference>
<dbReference type="Gramene" id="TraesKARUn01G0088800.1">
    <property type="protein sequence ID" value="cds.TraesKARUn01G0088800.1"/>
    <property type="gene ID" value="TraesKARUn01G0088800"/>
</dbReference>
<dbReference type="Gramene" id="TraesKARUn01G0088880.1">
    <property type="protein sequence ID" value="cds.TraesKARUn01G0088880.1"/>
    <property type="gene ID" value="TraesKARUn01G0088880"/>
</dbReference>
<dbReference type="Gramene" id="TraesKARUn01G0089150.1">
    <property type="protein sequence ID" value="cds.TraesKARUn01G0089150.1"/>
    <property type="gene ID" value="TraesKARUn01G0089150"/>
</dbReference>
<dbReference type="Gramene" id="TraesKARUn01G0089240.1">
    <property type="protein sequence ID" value="cds.TraesKARUn01G0089240.1"/>
    <property type="gene ID" value="TraesKARUn01G0089240"/>
</dbReference>
<dbReference type="Gramene" id="TraesKARUn01G0089360.1">
    <property type="protein sequence ID" value="cds.TraesKARUn01G0089360.1"/>
    <property type="gene ID" value="TraesKARUn01G0089360"/>
</dbReference>
<dbReference type="Gramene" id="TraesKARUn01G0089630.1">
    <property type="protein sequence ID" value="cds.TraesKARUn01G0089630.1"/>
    <property type="gene ID" value="TraesKARUn01G0089630"/>
</dbReference>
<dbReference type="Gramene" id="TraesKARUn01G0089880.1">
    <property type="protein sequence ID" value="cds.TraesKARUn01G0089880.1"/>
    <property type="gene ID" value="TraesKARUn01G0089880"/>
</dbReference>
<dbReference type="Gramene" id="TraesKARUn01G0089980.1">
    <property type="protein sequence ID" value="cds.TraesKARUn01G0089980.1"/>
    <property type="gene ID" value="TraesKARUn01G0089980"/>
</dbReference>
<dbReference type="Gramene" id="TraesKARUn01G0090060.1">
    <property type="protein sequence ID" value="cds.TraesKARUn01G0090060.1"/>
    <property type="gene ID" value="TraesKARUn01G0090060"/>
</dbReference>
<dbReference type="Gramene" id="TraesKARUn01G0090160.1">
    <property type="protein sequence ID" value="cds.TraesKARUn01G0090160.1"/>
    <property type="gene ID" value="TraesKARUn01G0090160"/>
</dbReference>
<dbReference type="Gramene" id="TraesKARUn01G0090270.1">
    <property type="protein sequence ID" value="cds.TraesKARUn01G0090270.1"/>
    <property type="gene ID" value="TraesKARUn01G0090270"/>
</dbReference>
<dbReference type="Gramene" id="TraesKARUn01G0090870.1">
    <property type="protein sequence ID" value="cds.TraesKARUn01G0090870.1"/>
    <property type="gene ID" value="TraesKARUn01G0090870"/>
</dbReference>
<dbReference type="Gramene" id="TraesKARUn01G0091250.1">
    <property type="protein sequence ID" value="cds.TraesKARUn01G0091250.1"/>
    <property type="gene ID" value="TraesKARUn01G0091250"/>
</dbReference>
<dbReference type="Gramene" id="TraesKARUn01G0091500.1">
    <property type="protein sequence ID" value="cds.TraesKARUn01G0091500.1"/>
    <property type="gene ID" value="TraesKARUn01G0091500"/>
</dbReference>
<dbReference type="Gramene" id="TraesKARUn01G0091580.1">
    <property type="protein sequence ID" value="cds.TraesKARUn01G0091580.1"/>
    <property type="gene ID" value="TraesKARUn01G0091580"/>
</dbReference>
<dbReference type="Gramene" id="TraesKARUn01G0091680.1">
    <property type="protein sequence ID" value="cds.TraesKARUn01G0091680.1"/>
    <property type="gene ID" value="TraesKARUn01G0091680"/>
</dbReference>
<dbReference type="Gramene" id="TraesKARUn01G0091710.1">
    <property type="protein sequence ID" value="cds.TraesKARUn01G0091710.1"/>
    <property type="gene ID" value="TraesKARUn01G0091710"/>
</dbReference>
<dbReference type="Gramene" id="TraesKARUn01G0092020.1">
    <property type="protein sequence ID" value="cds.TraesKARUn01G0092020.1"/>
    <property type="gene ID" value="TraesKARUn01G0092020"/>
</dbReference>
<dbReference type="Gramene" id="TraesKARUn01G0092360.1">
    <property type="protein sequence ID" value="cds.TraesKARUn01G0092360.1"/>
    <property type="gene ID" value="TraesKARUn01G0092360"/>
</dbReference>
<dbReference type="Gramene" id="TraesKARUn01G0092950.1">
    <property type="protein sequence ID" value="cds.TraesKARUn01G0092950.1"/>
    <property type="gene ID" value="TraesKARUn01G0092950"/>
</dbReference>
<dbReference type="Gramene" id="TraesKARUn01G0093080.1">
    <property type="protein sequence ID" value="cds.TraesKARUn01G0093080.1"/>
    <property type="gene ID" value="TraesKARUn01G0093080"/>
</dbReference>
<dbReference type="Gramene" id="TraesKARUn01G0093420.1">
    <property type="protein sequence ID" value="cds.TraesKARUn01G0093420.1"/>
    <property type="gene ID" value="TraesKARUn01G0093420"/>
</dbReference>
<dbReference type="Gramene" id="TraesKARUn01G0093460.1">
    <property type="protein sequence ID" value="cds.TraesKARUn01G0093460.1"/>
    <property type="gene ID" value="TraesKARUn01G0093460"/>
</dbReference>
<dbReference type="Gramene" id="TraesKARUn01G0093500.1">
    <property type="protein sequence ID" value="cds.TraesKARUn01G0093500.1"/>
    <property type="gene ID" value="TraesKARUn01G0093500"/>
</dbReference>
<dbReference type="Gramene" id="TraesKARUn01G0093780.1">
    <property type="protein sequence ID" value="cds.TraesKARUn01G0093780.1"/>
    <property type="gene ID" value="TraesKARUn01G0093780"/>
</dbReference>
<dbReference type="Gramene" id="TraesKARUn01G0093800.1">
    <property type="protein sequence ID" value="cds.TraesKARUn01G0093800.1"/>
    <property type="gene ID" value="TraesKARUn01G0093800"/>
</dbReference>
<dbReference type="Gramene" id="TraesKARUn01G0094030.1">
    <property type="protein sequence ID" value="cds.TraesKARUn01G0094030.1"/>
    <property type="gene ID" value="TraesKARUn01G0094030"/>
</dbReference>
<dbReference type="Gramene" id="TraesKARUn01G0094230.1">
    <property type="protein sequence ID" value="cds.TraesKARUn01G0094230.1"/>
    <property type="gene ID" value="TraesKARUn01G0094230"/>
</dbReference>
<dbReference type="Gramene" id="TraesKARUn01G0094360.1">
    <property type="protein sequence ID" value="cds.TraesKARUn01G0094360.1"/>
    <property type="gene ID" value="TraesKARUn01G0094360"/>
</dbReference>
<dbReference type="Gramene" id="TraesKARUn01G0094450.1">
    <property type="protein sequence ID" value="cds.TraesKARUn01G0094450.1"/>
    <property type="gene ID" value="TraesKARUn01G0094450"/>
</dbReference>
<dbReference type="Gramene" id="TraesKARUn01G0094750.1">
    <property type="protein sequence ID" value="cds.TraesKARUn01G0094750.1"/>
    <property type="gene ID" value="TraesKARUn01G0094750"/>
</dbReference>
<dbReference type="Gramene" id="TraesKARUn01G0094850.1">
    <property type="protein sequence ID" value="cds.TraesKARUn01G0094850.1"/>
    <property type="gene ID" value="TraesKARUn01G0094850"/>
</dbReference>
<dbReference type="Gramene" id="TraesKARUn01G0095080.1">
    <property type="protein sequence ID" value="cds.TraesKARUn01G0095080.1"/>
    <property type="gene ID" value="TraesKARUn01G0095080"/>
</dbReference>
<dbReference type="Gramene" id="TraesKARUn01G0095100.1">
    <property type="protein sequence ID" value="cds.TraesKARUn01G0095100.1"/>
    <property type="gene ID" value="TraesKARUn01G0095100"/>
</dbReference>
<dbReference type="Gramene" id="TraesKARUn01G0095150.1">
    <property type="protein sequence ID" value="cds.TraesKARUn01G0095150.1"/>
    <property type="gene ID" value="TraesKARUn01G0095150"/>
</dbReference>
<dbReference type="Gramene" id="TraesKARUn01G0095680.1">
    <property type="protein sequence ID" value="cds.TraesKARUn01G0095680.1"/>
    <property type="gene ID" value="TraesKARUn01G0095680"/>
</dbReference>
<dbReference type="Gramene" id="TraesKARUn01G0095790.1">
    <property type="protein sequence ID" value="cds.TraesKARUn01G0095790.1"/>
    <property type="gene ID" value="TraesKARUn01G0095790"/>
</dbReference>
<dbReference type="Gramene" id="TraesKARUn01G0095930.1">
    <property type="protein sequence ID" value="cds.TraesKARUn01G0095930.1"/>
    <property type="gene ID" value="TraesKARUn01G0095930"/>
</dbReference>
<dbReference type="Gramene" id="TraesKARUn01G0096250.1">
    <property type="protein sequence ID" value="cds.TraesKARUn01G0096250.1"/>
    <property type="gene ID" value="TraesKARUn01G0096250"/>
</dbReference>
<dbReference type="Gramene" id="TraesKARUn01G0096380.1">
    <property type="protein sequence ID" value="cds.TraesKARUn01G0096380.1"/>
    <property type="gene ID" value="TraesKARUn01G0096380"/>
</dbReference>
<dbReference type="Gramene" id="TraesKARUn01G0096410.1">
    <property type="protein sequence ID" value="cds.TraesKARUn01G0096410.1"/>
    <property type="gene ID" value="TraesKARUn01G0096410"/>
</dbReference>
<dbReference type="Gramene" id="TraesKARUn01G0096490.1">
    <property type="protein sequence ID" value="cds.TraesKARUn01G0096490.1"/>
    <property type="gene ID" value="TraesKARUn01G0096490"/>
</dbReference>
<dbReference type="Gramene" id="TraesKARUn01G0096730.1">
    <property type="protein sequence ID" value="cds.TraesKARUn01G0096730.1"/>
    <property type="gene ID" value="TraesKARUn01G0096730"/>
</dbReference>
<dbReference type="Gramene" id="TraesKARUn01G0096830.1">
    <property type="protein sequence ID" value="cds.TraesKARUn01G0096830.1"/>
    <property type="gene ID" value="TraesKARUn01G0096830"/>
</dbReference>
<dbReference type="Gramene" id="TraesKARUn01G0097020.1">
    <property type="protein sequence ID" value="cds.TraesKARUn01G0097020.1"/>
    <property type="gene ID" value="TraesKARUn01G0097020"/>
</dbReference>
<dbReference type="Gramene" id="TraesKARUn01G0097140.1">
    <property type="protein sequence ID" value="cds.TraesKARUn01G0097140.1"/>
    <property type="gene ID" value="TraesKARUn01G0097140"/>
</dbReference>
<dbReference type="Gramene" id="TraesKARUn01G0097190.1">
    <property type="protein sequence ID" value="cds.TraesKARUn01G0097190.1"/>
    <property type="gene ID" value="TraesKARUn01G0097190"/>
</dbReference>
<dbReference type="Gramene" id="TraesKARUn01G0097550.1">
    <property type="protein sequence ID" value="cds.TraesKARUn01G0097550.1"/>
    <property type="gene ID" value="TraesKARUn01G0097550"/>
</dbReference>
<dbReference type="Gramene" id="TraesKARUn01G0097760.1">
    <property type="protein sequence ID" value="cds.TraesKARUn01G0097760.1"/>
    <property type="gene ID" value="TraesKARUn01G0097760"/>
</dbReference>
<dbReference type="Gramene" id="TraesKARUn01G0098050.1">
    <property type="protein sequence ID" value="cds.TraesKARUn01G0098050.1"/>
    <property type="gene ID" value="TraesKARUn01G0098050"/>
</dbReference>
<dbReference type="Gramene" id="TraesKARUn01G0098290.1">
    <property type="protein sequence ID" value="cds.TraesKARUn01G0098290.1"/>
    <property type="gene ID" value="TraesKARUn01G0098290"/>
</dbReference>
<dbReference type="Gramene" id="TraesKARUn01G0098450.1">
    <property type="protein sequence ID" value="cds.TraesKARUn01G0098450.1"/>
    <property type="gene ID" value="TraesKARUn01G0098450"/>
</dbReference>
<dbReference type="Gramene" id="TraesKARUn01G0098470.1">
    <property type="protein sequence ID" value="cds.TraesKARUn01G0098470.1"/>
    <property type="gene ID" value="TraesKARUn01G0098470"/>
</dbReference>
<dbReference type="Gramene" id="TraesKARUn01G0098670.1">
    <property type="protein sequence ID" value="cds.TraesKARUn01G0098670.1"/>
    <property type="gene ID" value="TraesKARUn01G0098670"/>
</dbReference>
<dbReference type="Gramene" id="TraesKARUn01G0099330.1">
    <property type="protein sequence ID" value="cds.TraesKARUn01G0099330.1"/>
    <property type="gene ID" value="TraesKARUn01G0099330"/>
</dbReference>
<dbReference type="Gramene" id="TraesKARUn01G0099780.1">
    <property type="protein sequence ID" value="cds.TraesKARUn01G0099780.1"/>
    <property type="gene ID" value="TraesKARUn01G0099780"/>
</dbReference>
<dbReference type="Gramene" id="TraesKARUn01G0099920.1">
    <property type="protein sequence ID" value="cds.TraesKARUn01G0099920.1"/>
    <property type="gene ID" value="TraesKARUn01G0099920"/>
</dbReference>
<dbReference type="Gramene" id="TraesKARUn01G0099980.1">
    <property type="protein sequence ID" value="cds.TraesKARUn01G0099980.1"/>
    <property type="gene ID" value="TraesKARUn01G0099980"/>
</dbReference>
<dbReference type="Gramene" id="TraesKARUn01G0100030.1">
    <property type="protein sequence ID" value="cds.TraesKARUn01G0100030.1"/>
    <property type="gene ID" value="TraesKARUn01G0100030"/>
</dbReference>
<dbReference type="Gramene" id="TraesKARUn01G0100200.1">
    <property type="protein sequence ID" value="cds.TraesKARUn01G0100200.1"/>
    <property type="gene ID" value="TraesKARUn01G0100200"/>
</dbReference>
<dbReference type="Gramene" id="TraesKARUn01G0100280.1">
    <property type="protein sequence ID" value="cds.TraesKARUn01G0100280.1"/>
    <property type="gene ID" value="TraesKARUn01G0100280"/>
</dbReference>
<dbReference type="Gramene" id="TraesKARUn01G0100340.1">
    <property type="protein sequence ID" value="cds.TraesKARUn01G0100340.1"/>
    <property type="gene ID" value="TraesKARUn01G0100340"/>
</dbReference>
<dbReference type="Gramene" id="TraesKARUn01G0100360.1">
    <property type="protein sequence ID" value="cds.TraesKARUn01G0100360.1"/>
    <property type="gene ID" value="TraesKARUn01G0100360"/>
</dbReference>
<dbReference type="Gramene" id="TraesKARUn01G0100660.1">
    <property type="protein sequence ID" value="cds.TraesKARUn01G0100660.1"/>
    <property type="gene ID" value="TraesKARUn01G0100660"/>
</dbReference>
<dbReference type="Gramene" id="TraesKARUn01G0100870.1">
    <property type="protein sequence ID" value="cds.TraesKARUn01G0100870.1"/>
    <property type="gene ID" value="TraesKARUn01G0100870"/>
</dbReference>
<dbReference type="Gramene" id="TraesKARUn01G0101630.1">
    <property type="protein sequence ID" value="cds.TraesKARUn01G0101630.1"/>
    <property type="gene ID" value="TraesKARUn01G0101630"/>
</dbReference>
<dbReference type="Gramene" id="TraesKARUn01G0101750.1">
    <property type="protein sequence ID" value="cds.TraesKARUn01G0101750.1"/>
    <property type="gene ID" value="TraesKARUn01G0101750"/>
</dbReference>
<dbReference type="Gramene" id="TraesKARUn01G0101830.1">
    <property type="protein sequence ID" value="cds.TraesKARUn01G0101830.1"/>
    <property type="gene ID" value="TraesKARUn01G0101830"/>
</dbReference>
<dbReference type="Gramene" id="TraesKARUn01G0102060.1">
    <property type="protein sequence ID" value="cds.TraesKARUn01G0102060.1"/>
    <property type="gene ID" value="TraesKARUn01G0102060"/>
</dbReference>
<dbReference type="Gramene" id="TraesKARUn01G0102370.1">
    <property type="protein sequence ID" value="cds.TraesKARUn01G0102370.1"/>
    <property type="gene ID" value="TraesKARUn01G0102370"/>
</dbReference>
<dbReference type="Gramene" id="TraesKARUn01G0102380.1">
    <property type="protein sequence ID" value="cds.TraesKARUn01G0102380.1"/>
    <property type="gene ID" value="TraesKARUn01G0102380"/>
</dbReference>
<dbReference type="Gramene" id="TraesKARUn01G0102810.1">
    <property type="protein sequence ID" value="cds.TraesKARUn01G0102810.1"/>
    <property type="gene ID" value="TraesKARUn01G0102810"/>
</dbReference>
<dbReference type="Gramene" id="TraesKARUn01G0102940.1">
    <property type="protein sequence ID" value="cds.TraesKARUn01G0102940.1"/>
    <property type="gene ID" value="TraesKARUn01G0102940"/>
</dbReference>
<dbReference type="Gramene" id="TraesKARUn01G0103030.1">
    <property type="protein sequence ID" value="cds.TraesKARUn01G0103030.1"/>
    <property type="gene ID" value="TraesKARUn01G0103030"/>
</dbReference>
<dbReference type="Gramene" id="TraesKARUn01G0103620.1">
    <property type="protein sequence ID" value="cds.TraesKARUn01G0103620.1"/>
    <property type="gene ID" value="TraesKARUn01G0103620"/>
</dbReference>
<dbReference type="Gramene" id="TraesKARUn01G0103850.1">
    <property type="protein sequence ID" value="cds.TraesKARUn01G0103850.1"/>
    <property type="gene ID" value="TraesKARUn01G0103850"/>
</dbReference>
<dbReference type="Gramene" id="TraesKARUn01G0103890.1">
    <property type="protein sequence ID" value="cds.TraesKARUn01G0103890.1"/>
    <property type="gene ID" value="TraesKARUn01G0103890"/>
</dbReference>
<dbReference type="Gramene" id="TraesKARUn01G0104170.1">
    <property type="protein sequence ID" value="cds.TraesKARUn01G0104170.1"/>
    <property type="gene ID" value="TraesKARUn01G0104170"/>
</dbReference>
<dbReference type="Gramene" id="TraesKARUn01G0104370.1">
    <property type="protein sequence ID" value="cds.TraesKARUn01G0104370.1"/>
    <property type="gene ID" value="TraesKARUn01G0104370"/>
</dbReference>
<dbReference type="Gramene" id="TraesKARUn01G0105950.1">
    <property type="protein sequence ID" value="cds.TraesKARUn01G0105950.1"/>
    <property type="gene ID" value="TraesKARUn01G0105950"/>
</dbReference>
<dbReference type="Gramene" id="TraesKARUn01G0105980.1">
    <property type="protein sequence ID" value="cds.TraesKARUn01G0105980.1"/>
    <property type="gene ID" value="TraesKARUn01G0105980"/>
</dbReference>
<dbReference type="Gramene" id="TraesKARUn01G0106100.1">
    <property type="protein sequence ID" value="cds.TraesKARUn01G0106100.1"/>
    <property type="gene ID" value="TraesKARUn01G0106100"/>
</dbReference>
<dbReference type="Gramene" id="TraesKARUn01G0106120.1">
    <property type="protein sequence ID" value="cds.TraesKARUn01G0106120.1"/>
    <property type="gene ID" value="TraesKARUn01G0106120"/>
</dbReference>
<dbReference type="Gramene" id="TraesKARUn01G0106140.1">
    <property type="protein sequence ID" value="cds.TraesKARUn01G0106140.1"/>
    <property type="gene ID" value="TraesKARUn01G0106140"/>
</dbReference>
<dbReference type="Gramene" id="TraesKARUn01G0106350.1">
    <property type="protein sequence ID" value="cds.TraesKARUn01G0106350.1"/>
    <property type="gene ID" value="TraesKARUn01G0106350"/>
</dbReference>
<dbReference type="Gramene" id="TraesKARUn01G0106930.1">
    <property type="protein sequence ID" value="cds.TraesKARUn01G0106930.1"/>
    <property type="gene ID" value="TraesKARUn01G0106930"/>
</dbReference>
<dbReference type="Gramene" id="TraesKARUn01G0106980.1">
    <property type="protein sequence ID" value="cds.TraesKARUn01G0106980.1"/>
    <property type="gene ID" value="TraesKARUn01G0106980"/>
</dbReference>
<dbReference type="Gramene" id="TraesKARUn01G0107190.1">
    <property type="protein sequence ID" value="cds.TraesKARUn01G0107190.1"/>
    <property type="gene ID" value="TraesKARUn01G0107190"/>
</dbReference>
<dbReference type="Gramene" id="TraesKARUn01G0107280.1">
    <property type="protein sequence ID" value="cds.TraesKARUn01G0107280.1"/>
    <property type="gene ID" value="TraesKARUn01G0107280"/>
</dbReference>
<dbReference type="Gramene" id="TraesKARUn01G0107410.1">
    <property type="protein sequence ID" value="cds.TraesKARUn01G0107410.1"/>
    <property type="gene ID" value="TraesKARUn01G0107410"/>
</dbReference>
<dbReference type="Gramene" id="TraesKARUn01G0107440.1">
    <property type="protein sequence ID" value="cds.TraesKARUn01G0107440.1"/>
    <property type="gene ID" value="TraesKARUn01G0107440"/>
</dbReference>
<dbReference type="Gramene" id="TraesKARUn01G0107500.1">
    <property type="protein sequence ID" value="cds.TraesKARUn01G0107500.1"/>
    <property type="gene ID" value="TraesKARUn01G0107500"/>
</dbReference>
<dbReference type="Gramene" id="TraesKARUn01G0107540.1">
    <property type="protein sequence ID" value="cds.TraesKARUn01G0107540.1"/>
    <property type="gene ID" value="TraesKARUn01G0107540"/>
</dbReference>
<dbReference type="Gramene" id="TraesKARUn01G0107620.1">
    <property type="protein sequence ID" value="cds.TraesKARUn01G0107620.1"/>
    <property type="gene ID" value="TraesKARUn01G0107620"/>
</dbReference>
<dbReference type="Gramene" id="TraesKARUn01G0107650.1">
    <property type="protein sequence ID" value="cds.TraesKARUn01G0107650.1"/>
    <property type="gene ID" value="TraesKARUn01G0107650"/>
</dbReference>
<dbReference type="Gramene" id="TraesKARUn01G0107990.1">
    <property type="protein sequence ID" value="cds.TraesKARUn01G0107990.1"/>
    <property type="gene ID" value="TraesKARUn01G0107990"/>
</dbReference>
<dbReference type="Gramene" id="TraesKARUn01G0108330.1">
    <property type="protein sequence ID" value="cds.TraesKARUn01G0108330.1"/>
    <property type="gene ID" value="TraesKARUn01G0108330"/>
</dbReference>
<dbReference type="Gramene" id="TraesKARUn01G0108800.1">
    <property type="protein sequence ID" value="cds.TraesKARUn01G0108800.1"/>
    <property type="gene ID" value="TraesKARUn01G0108800"/>
</dbReference>
<dbReference type="Gramene" id="TraesKARUn01G0108900.1">
    <property type="protein sequence ID" value="cds.TraesKARUn01G0108900.1"/>
    <property type="gene ID" value="TraesKARUn01G0108900"/>
</dbReference>
<dbReference type="Gramene" id="TraesKARUn01G0109060.1">
    <property type="protein sequence ID" value="cds.TraesKARUn01G0109060.1"/>
    <property type="gene ID" value="TraesKARUn01G0109060"/>
</dbReference>
<dbReference type="Gramene" id="TraesKARUn01G0109360.1">
    <property type="protein sequence ID" value="cds.TraesKARUn01G0109360.1"/>
    <property type="gene ID" value="TraesKARUn01G0109360"/>
</dbReference>
<dbReference type="Gramene" id="TraesKARUn01G0109450.1">
    <property type="protein sequence ID" value="cds.TraesKARUn01G0109450.1"/>
    <property type="gene ID" value="TraesKARUn01G0109450"/>
</dbReference>
<dbReference type="Gramene" id="TraesKARUn01G0109630.1">
    <property type="protein sequence ID" value="cds.TraesKARUn01G0109630.1"/>
    <property type="gene ID" value="TraesKARUn01G0109630"/>
</dbReference>
<dbReference type="Gramene" id="TraesKARUn01G0109790.1">
    <property type="protein sequence ID" value="cds.TraesKARUn01G0109790.1"/>
    <property type="gene ID" value="TraesKARUn01G0109790"/>
</dbReference>
<dbReference type="Gramene" id="TraesKARUn01G0109990.1">
    <property type="protein sequence ID" value="cds.TraesKARUn01G0109990.1"/>
    <property type="gene ID" value="TraesKARUn01G0109990"/>
</dbReference>
<dbReference type="Gramene" id="TraesKARUn01G0110050.1">
    <property type="protein sequence ID" value="cds.TraesKARUn01G0110050.1"/>
    <property type="gene ID" value="TraesKARUn01G0110050"/>
</dbReference>
<dbReference type="Gramene" id="TraesKARUn01G0110110.1">
    <property type="protein sequence ID" value="cds.TraesKARUn01G0110110.1"/>
    <property type="gene ID" value="TraesKARUn01G0110110"/>
</dbReference>
<dbReference type="Gramene" id="TraesKARUn01G0110300.1">
    <property type="protein sequence ID" value="cds.TraesKARUn01G0110300.1"/>
    <property type="gene ID" value="TraesKARUn01G0110300"/>
</dbReference>
<dbReference type="Gramene" id="TraesKARUn01G0110430.1">
    <property type="protein sequence ID" value="cds.TraesKARUn01G0110430.1"/>
    <property type="gene ID" value="TraesKARUn01G0110430"/>
</dbReference>
<dbReference type="Gramene" id="TraesKARUn01G0110520.1">
    <property type="protein sequence ID" value="cds.TraesKARUn01G0110520.1"/>
    <property type="gene ID" value="TraesKARUn01G0110520"/>
</dbReference>
<dbReference type="Gramene" id="TraesKARUn01G0110560.1">
    <property type="protein sequence ID" value="cds.TraesKARUn01G0110560.1"/>
    <property type="gene ID" value="TraesKARUn01G0110560"/>
</dbReference>
<dbReference type="Gramene" id="TraesKARUn01G0110990.1">
    <property type="protein sequence ID" value="cds.TraesKARUn01G0110990.1"/>
    <property type="gene ID" value="TraesKARUn01G0110990"/>
</dbReference>
<dbReference type="Gramene" id="TraesKARUn01G0111010.1">
    <property type="protein sequence ID" value="cds.TraesKARUn01G0111010.1"/>
    <property type="gene ID" value="TraesKARUn01G0111010"/>
</dbReference>
<dbReference type="Gramene" id="TraesKARUn01G0111280.1">
    <property type="protein sequence ID" value="cds.TraesKARUn01G0111280.1"/>
    <property type="gene ID" value="TraesKARUn01G0111280"/>
</dbReference>
<dbReference type="Gramene" id="TraesKARUn01G0111450.1">
    <property type="protein sequence ID" value="cds.TraesKARUn01G0111450.1"/>
    <property type="gene ID" value="TraesKARUn01G0111450"/>
</dbReference>
<dbReference type="Gramene" id="TraesKARUn01G0111500.1">
    <property type="protein sequence ID" value="cds.TraesKARUn01G0111500.1"/>
    <property type="gene ID" value="TraesKARUn01G0111500"/>
</dbReference>
<dbReference type="Gramene" id="TraesKARUn01G0111730.1">
    <property type="protein sequence ID" value="cds.TraesKARUn01G0111730.1"/>
    <property type="gene ID" value="TraesKARUn01G0111730"/>
</dbReference>
<dbReference type="Gramene" id="TraesKARUn01G0111770.1">
    <property type="protein sequence ID" value="cds.TraesKARUn01G0111770.1"/>
    <property type="gene ID" value="TraesKARUn01G0111770"/>
</dbReference>
<dbReference type="Gramene" id="TraesKARUn01G0111920.1">
    <property type="protein sequence ID" value="cds.TraesKARUn01G0111920.1"/>
    <property type="gene ID" value="TraesKARUn01G0111920"/>
</dbReference>
<dbReference type="Gramene" id="TraesKARUn01G0112080.1">
    <property type="protein sequence ID" value="cds.TraesKARUn01G0112080.1"/>
    <property type="gene ID" value="TraesKARUn01G0112080"/>
</dbReference>
<dbReference type="Gramene" id="TraesKARUn01G0112150.1">
    <property type="protein sequence ID" value="cds.TraesKARUn01G0112150.1"/>
    <property type="gene ID" value="TraesKARUn01G0112150"/>
</dbReference>
<dbReference type="Gramene" id="TraesKARUn01G0112340.1">
    <property type="protein sequence ID" value="cds.TraesKARUn01G0112340.1"/>
    <property type="gene ID" value="TraesKARUn01G0112340"/>
</dbReference>
<dbReference type="Gramene" id="TraesKARUn01G0112400.1">
    <property type="protein sequence ID" value="cds.TraesKARUn01G0112400.1"/>
    <property type="gene ID" value="TraesKARUn01G0112400"/>
</dbReference>
<dbReference type="Gramene" id="TraesKARUn01G0112690.1">
    <property type="protein sequence ID" value="cds.TraesKARUn01G0112690.1"/>
    <property type="gene ID" value="TraesKARUn01G0112690"/>
</dbReference>
<dbReference type="Gramene" id="TraesKARUn01G0112790.1">
    <property type="protein sequence ID" value="cds.TraesKARUn01G0112790.1"/>
    <property type="gene ID" value="TraesKARUn01G0112790"/>
</dbReference>
<dbReference type="Gramene" id="TraesKARUn01G0112830.1">
    <property type="protein sequence ID" value="cds.TraesKARUn01G0112830.1"/>
    <property type="gene ID" value="TraesKARUn01G0112830"/>
</dbReference>
<dbReference type="Gramene" id="TraesKARUn01G0113140.1">
    <property type="protein sequence ID" value="cds.TraesKARUn01G0113140.1"/>
    <property type="gene ID" value="TraesKARUn01G0113140"/>
</dbReference>
<dbReference type="Gramene" id="TraesKARUn01G0113210.1">
    <property type="protein sequence ID" value="cds.TraesKARUn01G0113210.1"/>
    <property type="gene ID" value="TraesKARUn01G0113210"/>
</dbReference>
<dbReference type="Gramene" id="TraesKARUn01G0113280.1">
    <property type="protein sequence ID" value="cds.TraesKARUn01G0113280.1"/>
    <property type="gene ID" value="TraesKARUn01G0113280"/>
</dbReference>
<dbReference type="Gramene" id="TraesKARUn01G0113350.1">
    <property type="protein sequence ID" value="cds.TraesKARUn01G0113350.1"/>
    <property type="gene ID" value="TraesKARUn01G0113350"/>
</dbReference>
<dbReference type="Gramene" id="TraesKARUn01G0113500.1">
    <property type="protein sequence ID" value="cds.TraesKARUn01G0113500.1"/>
    <property type="gene ID" value="TraesKARUn01G0113500"/>
</dbReference>
<dbReference type="Gramene" id="TraesKARUn01G0113720.1">
    <property type="protein sequence ID" value="cds.TraesKARUn01G0113720.1"/>
    <property type="gene ID" value="TraesKARUn01G0113720"/>
</dbReference>
<dbReference type="Gramene" id="TraesKARUn01G0114170.1">
    <property type="protein sequence ID" value="cds.TraesKARUn01G0114170.1"/>
    <property type="gene ID" value="TraesKARUn01G0114170"/>
</dbReference>
<dbReference type="Gramene" id="TraesKARUn01G0114240.1">
    <property type="protein sequence ID" value="cds.TraesKARUn01G0114240.1"/>
    <property type="gene ID" value="TraesKARUn01G0114240"/>
</dbReference>
<dbReference type="Gramene" id="TraesKARUn01G0114270.1">
    <property type="protein sequence ID" value="cds.TraesKARUn01G0114270.1"/>
    <property type="gene ID" value="TraesKARUn01G0114270"/>
</dbReference>
<dbReference type="Gramene" id="TraesKARUn01G0114370.1">
    <property type="protein sequence ID" value="cds.TraesKARUn01G0114370.1"/>
    <property type="gene ID" value="TraesKARUn01G0114370"/>
</dbReference>
<dbReference type="Gramene" id="TraesKARUn01G0114380.1">
    <property type="protein sequence ID" value="cds.TraesKARUn01G0114380.1"/>
    <property type="gene ID" value="TraesKARUn01G0114380"/>
</dbReference>
<dbReference type="Gramene" id="TraesKARUn01G0114430.1">
    <property type="protein sequence ID" value="cds.TraesKARUn01G0114430.1"/>
    <property type="gene ID" value="TraesKARUn01G0114430"/>
</dbReference>
<dbReference type="Gramene" id="TraesKARUn01G0114790.1">
    <property type="protein sequence ID" value="cds.TraesKARUn01G0114790.1"/>
    <property type="gene ID" value="TraesKARUn01G0114790"/>
</dbReference>
<dbReference type="Gramene" id="TraesKARUn01G0114940.1">
    <property type="protein sequence ID" value="cds.TraesKARUn01G0114940.1"/>
    <property type="gene ID" value="TraesKARUn01G0114940"/>
</dbReference>
<dbReference type="Gramene" id="TraesKARUn01G0115060.1">
    <property type="protein sequence ID" value="cds.TraesKARUn01G0115060.1"/>
    <property type="gene ID" value="TraesKARUn01G0115060"/>
</dbReference>
<dbReference type="Gramene" id="TraesKARUn01G0115380.1">
    <property type="protein sequence ID" value="cds.TraesKARUn01G0115380.1"/>
    <property type="gene ID" value="TraesKARUn01G0115380"/>
</dbReference>
<dbReference type="Gramene" id="TraesKARUn01G0115570.1">
    <property type="protein sequence ID" value="cds.TraesKARUn01G0115570.1"/>
    <property type="gene ID" value="TraesKARUn01G0115570"/>
</dbReference>
<dbReference type="Gramene" id="TraesKARUn01G0115670.1">
    <property type="protein sequence ID" value="cds.TraesKARUn01G0115670.1"/>
    <property type="gene ID" value="TraesKARUn01G0115670"/>
</dbReference>
<dbReference type="Gramene" id="TraesKARUn01G0115750.1">
    <property type="protein sequence ID" value="cds.TraesKARUn01G0115750.1"/>
    <property type="gene ID" value="TraesKARUn01G0115750"/>
</dbReference>
<dbReference type="Gramene" id="TraesKARUn01G0115830.1">
    <property type="protein sequence ID" value="cds.TraesKARUn01G0115830.1"/>
    <property type="gene ID" value="TraesKARUn01G0115830"/>
</dbReference>
<dbReference type="Gramene" id="TraesKARUn01G0115970.1">
    <property type="protein sequence ID" value="cds.TraesKARUn01G0115970.1"/>
    <property type="gene ID" value="TraesKARUn01G0115970"/>
</dbReference>
<dbReference type="Gramene" id="TraesKARUn01G0116080.1">
    <property type="protein sequence ID" value="cds.TraesKARUn01G0116080.1"/>
    <property type="gene ID" value="TraesKARUn01G0116080"/>
</dbReference>
<dbReference type="Gramene" id="TraesKARUn01G0116280.1">
    <property type="protein sequence ID" value="cds.TraesKARUn01G0116280.1"/>
    <property type="gene ID" value="TraesKARUn01G0116280"/>
</dbReference>
<dbReference type="Gramene" id="TraesKARUn01G0116320.1">
    <property type="protein sequence ID" value="cds.TraesKARUn01G0116320.1"/>
    <property type="gene ID" value="TraesKARUn01G0116320"/>
</dbReference>
<dbReference type="Gramene" id="TraesKARUn01G0116620.1">
    <property type="protein sequence ID" value="cds.TraesKARUn01G0116620.1"/>
    <property type="gene ID" value="TraesKARUn01G0116620"/>
</dbReference>
<dbReference type="Gramene" id="TraesKARUn01G0116750.1">
    <property type="protein sequence ID" value="cds.TraesKARUn01G0116750.1"/>
    <property type="gene ID" value="TraesKARUn01G0116750"/>
</dbReference>
<dbReference type="Gramene" id="TraesKARUn01G0116790.1">
    <property type="protein sequence ID" value="cds.TraesKARUn01G0116790.1"/>
    <property type="gene ID" value="TraesKARUn01G0116790"/>
</dbReference>
<dbReference type="Gramene" id="TraesKARUn01G0116900.1">
    <property type="protein sequence ID" value="cds.TraesKARUn01G0116900.1"/>
    <property type="gene ID" value="TraesKARUn01G0116900"/>
</dbReference>
<dbReference type="Gramene" id="TraesKARUn01G0116960.1">
    <property type="protein sequence ID" value="cds.TraesKARUn01G0116960.1"/>
    <property type="gene ID" value="TraesKARUn01G0116960"/>
</dbReference>
<dbReference type="Gramene" id="TraesKARUn01G0117200.1">
    <property type="protein sequence ID" value="cds.TraesKARUn01G0117200.1"/>
    <property type="gene ID" value="TraesKARUn01G0117200"/>
</dbReference>
<dbReference type="Gramene" id="TraesKARUn01G0117340.1">
    <property type="protein sequence ID" value="cds.TraesKARUn01G0117340.1"/>
    <property type="gene ID" value="TraesKARUn01G0117340"/>
</dbReference>
<dbReference type="Gramene" id="TraesKARUn01G0117650.1">
    <property type="protein sequence ID" value="cds.TraesKARUn01G0117650.1"/>
    <property type="gene ID" value="TraesKARUn01G0117650"/>
</dbReference>
<dbReference type="Gramene" id="TraesKARUn01G0117800.1">
    <property type="protein sequence ID" value="cds.TraesKARUn01G0117800.1"/>
    <property type="gene ID" value="TraesKARUn01G0117800"/>
</dbReference>
<dbReference type="Gramene" id="TraesKARUn01G0117990.1">
    <property type="protein sequence ID" value="cds.TraesKARUn01G0117990.1"/>
    <property type="gene ID" value="TraesKARUn01G0117990"/>
</dbReference>
<dbReference type="Gramene" id="TraesKARUn01G0118360.1">
    <property type="protein sequence ID" value="cds.TraesKARUn01G0118360.1"/>
    <property type="gene ID" value="TraesKARUn01G0118360"/>
</dbReference>
<dbReference type="Gramene" id="TraesKARUn01G0119160.1">
    <property type="protein sequence ID" value="cds.TraesKARUn01G0119160.1"/>
    <property type="gene ID" value="TraesKARUn01G0119160"/>
</dbReference>
<dbReference type="Gramene" id="TraesKARUn01G0119750.1">
    <property type="protein sequence ID" value="cds.TraesKARUn01G0119750.1"/>
    <property type="gene ID" value="TraesKARUn01G0119750"/>
</dbReference>
<dbReference type="Gramene" id="TraesKARUn01G0119890.1">
    <property type="protein sequence ID" value="cds.TraesKARUn01G0119890.1"/>
    <property type="gene ID" value="TraesKARUn01G0119890"/>
</dbReference>
<dbReference type="Gramene" id="TraesKARUn01G0119980.1">
    <property type="protein sequence ID" value="cds.TraesKARUn01G0119980.1"/>
    <property type="gene ID" value="TraesKARUn01G0119980"/>
</dbReference>
<dbReference type="Gramene" id="TraesKARUn01G0120100.1">
    <property type="protein sequence ID" value="cds.TraesKARUn01G0120100.1"/>
    <property type="gene ID" value="TraesKARUn01G0120100"/>
</dbReference>
<dbReference type="Gramene" id="TraesKARUn01G0120160.1">
    <property type="protein sequence ID" value="cds.TraesKARUn01G0120160.1"/>
    <property type="gene ID" value="TraesKARUn01G0120160"/>
</dbReference>
<dbReference type="Gramene" id="TraesKARUn01G0120280.1">
    <property type="protein sequence ID" value="cds.TraesKARUn01G0120280.1"/>
    <property type="gene ID" value="TraesKARUn01G0120280"/>
</dbReference>
<dbReference type="Gramene" id="TraesKARUn01G0120360.1">
    <property type="protein sequence ID" value="cds.TraesKARUn01G0120360.1"/>
    <property type="gene ID" value="TraesKARUn01G0120360"/>
</dbReference>
<dbReference type="Gramene" id="TraesKARUn01G0120370.1">
    <property type="protein sequence ID" value="cds.TraesKARUn01G0120370.1"/>
    <property type="gene ID" value="TraesKARUn01G0120370"/>
</dbReference>
<dbReference type="Gramene" id="TraesKARUn01G0120450.1">
    <property type="protein sequence ID" value="cds.TraesKARUn01G0120450.1"/>
    <property type="gene ID" value="TraesKARUn01G0120450"/>
</dbReference>
<dbReference type="Gramene" id="TraesKARUn01G0120830.1">
    <property type="protein sequence ID" value="cds.TraesKARUn01G0120830.1"/>
    <property type="gene ID" value="TraesKARUn01G0120830"/>
</dbReference>
<dbReference type="Gramene" id="TraesKARUn01G0120900.1">
    <property type="protein sequence ID" value="cds.TraesKARUn01G0120900.1"/>
    <property type="gene ID" value="TraesKARUn01G0120900"/>
</dbReference>
<dbReference type="Gramene" id="TraesKARUn01G0121010.1">
    <property type="protein sequence ID" value="cds.TraesKARUn01G0121010.1"/>
    <property type="gene ID" value="TraesKARUn01G0121010"/>
</dbReference>
<dbReference type="Gramene" id="TraesKARUn01G0121110.1">
    <property type="protein sequence ID" value="cds.TraesKARUn01G0121110.1"/>
    <property type="gene ID" value="TraesKARUn01G0121110"/>
</dbReference>
<dbReference type="Gramene" id="TraesKARUn01G0121280.1">
    <property type="protein sequence ID" value="cds.TraesKARUn01G0121280.1"/>
    <property type="gene ID" value="TraesKARUn01G0121280"/>
</dbReference>
<dbReference type="Gramene" id="TraesKARUn01G0121610.1">
    <property type="protein sequence ID" value="cds.TraesKARUn01G0121610.1"/>
    <property type="gene ID" value="TraesKARUn01G0121610"/>
</dbReference>
<dbReference type="Gramene" id="TraesKARUn01G0121740.1">
    <property type="protein sequence ID" value="cds.TraesKARUn01G0121740.1"/>
    <property type="gene ID" value="TraesKARUn01G0121740"/>
</dbReference>
<dbReference type="Gramene" id="TraesKARUn01G0121880.1">
    <property type="protein sequence ID" value="cds.TraesKARUn01G0121880.1"/>
    <property type="gene ID" value="TraesKARUn01G0121880"/>
</dbReference>
<dbReference type="Gramene" id="TraesKARUn01G0121960.1">
    <property type="protein sequence ID" value="cds.TraesKARUn01G0121960.1"/>
    <property type="gene ID" value="TraesKARUn01G0121960"/>
</dbReference>
<dbReference type="Gramene" id="TraesKARUn01G0122100.1">
    <property type="protein sequence ID" value="cds.TraesKARUn01G0122100.1"/>
    <property type="gene ID" value="TraesKARUn01G0122100"/>
</dbReference>
<dbReference type="Gramene" id="TraesKARUn01G0122170.1">
    <property type="protein sequence ID" value="cds.TraesKARUn01G0122170.1"/>
    <property type="gene ID" value="TraesKARUn01G0122170"/>
</dbReference>
<dbReference type="Gramene" id="TraesKARUn01G0122300.1">
    <property type="protein sequence ID" value="cds.TraesKARUn01G0122300.1"/>
    <property type="gene ID" value="TraesKARUn01G0122300"/>
</dbReference>
<dbReference type="Gramene" id="TraesKARUn01G0122350.1">
    <property type="protein sequence ID" value="cds.TraesKARUn01G0122350.1"/>
    <property type="gene ID" value="TraesKARUn01G0122350"/>
</dbReference>
<dbReference type="Gramene" id="TraesKARUn01G0122570.1">
    <property type="protein sequence ID" value="cds.TraesKARUn01G0122570.1"/>
    <property type="gene ID" value="TraesKARUn01G0122570"/>
</dbReference>
<dbReference type="Gramene" id="TraesKARUn01G0122950.1">
    <property type="protein sequence ID" value="cds.TraesKARUn01G0122950.1"/>
    <property type="gene ID" value="TraesKARUn01G0122950"/>
</dbReference>
<dbReference type="Gramene" id="TraesKARUn01G0122990.1">
    <property type="protein sequence ID" value="cds.TraesKARUn01G0122990.1"/>
    <property type="gene ID" value="TraesKARUn01G0122990"/>
</dbReference>
<dbReference type="Gramene" id="TraesKARUn01G0123040.1">
    <property type="protein sequence ID" value="cds.TraesKARUn01G0123040.1"/>
    <property type="gene ID" value="TraesKARUn01G0123040"/>
</dbReference>
<dbReference type="Gramene" id="TraesKARUn01G0123060.1">
    <property type="protein sequence ID" value="cds.TraesKARUn01G0123060.1"/>
    <property type="gene ID" value="TraesKARUn01G0123060"/>
</dbReference>
<dbReference type="Gramene" id="TraesKARUn01G0123140.1">
    <property type="protein sequence ID" value="cds.TraesKARUn01G0123140.1"/>
    <property type="gene ID" value="TraesKARUn01G0123140"/>
</dbReference>
<dbReference type="Gramene" id="TraesKARUn01G0123210.1">
    <property type="protein sequence ID" value="cds.TraesKARUn01G0123210.1"/>
    <property type="gene ID" value="TraesKARUn01G0123210"/>
</dbReference>
<dbReference type="Gramene" id="TraesKARUn01G0123220.1">
    <property type="protein sequence ID" value="cds.TraesKARUn01G0123220.1"/>
    <property type="gene ID" value="TraesKARUn01G0123220"/>
</dbReference>
<dbReference type="Gramene" id="TraesKARUn01G0123270.1">
    <property type="protein sequence ID" value="cds.TraesKARUn01G0123270.1"/>
    <property type="gene ID" value="TraesKARUn01G0123270"/>
</dbReference>
<dbReference type="Gramene" id="TraesKARUn01G0123340.1">
    <property type="protein sequence ID" value="cds.TraesKARUn01G0123340.1"/>
    <property type="gene ID" value="TraesKARUn01G0123340"/>
</dbReference>
<dbReference type="Gramene" id="TraesKARUn01G0123580.1">
    <property type="protein sequence ID" value="cds.TraesKARUn01G0123580.1"/>
    <property type="gene ID" value="TraesKARUn01G0123580"/>
</dbReference>
<dbReference type="Gramene" id="TraesKARUn01G0123830.1">
    <property type="protein sequence ID" value="cds.TraesKARUn01G0123830.1"/>
    <property type="gene ID" value="TraesKARUn01G0123830"/>
</dbReference>
<dbReference type="Gramene" id="TraesKARUn01G0124350.1">
    <property type="protein sequence ID" value="cds.TraesKARUn01G0124350.1"/>
    <property type="gene ID" value="TraesKARUn01G0124350"/>
</dbReference>
<dbReference type="Gramene" id="TraesKARUn01G0124700.1">
    <property type="protein sequence ID" value="cds.TraesKARUn01G0124700.1"/>
    <property type="gene ID" value="TraesKARUn01G0124700"/>
</dbReference>
<dbReference type="Gramene" id="TraesKARUn01G0124730.1">
    <property type="protein sequence ID" value="cds.TraesKARUn01G0124730.1"/>
    <property type="gene ID" value="TraesKARUn01G0124730"/>
</dbReference>
<dbReference type="Gramene" id="TraesKARUn01G0124810.1">
    <property type="protein sequence ID" value="cds.TraesKARUn01G0124810.1"/>
    <property type="gene ID" value="TraesKARUn01G0124810"/>
</dbReference>
<dbReference type="Gramene" id="TraesKARUn01G0124930.1">
    <property type="protein sequence ID" value="cds.TraesKARUn01G0124930.1"/>
    <property type="gene ID" value="TraesKARUn01G0124930"/>
</dbReference>
<dbReference type="Gramene" id="TraesKARUn01G0125180.1">
    <property type="protein sequence ID" value="cds.TraesKARUn01G0125180.1"/>
    <property type="gene ID" value="TraesKARUn01G0125180"/>
</dbReference>
<dbReference type="Gramene" id="TraesKARUn01G0125380.1">
    <property type="protein sequence ID" value="cds.TraesKARUn01G0125380.1"/>
    <property type="gene ID" value="TraesKARUn01G0125380"/>
</dbReference>
<dbReference type="Gramene" id="TraesKARUn01G0125410.1">
    <property type="protein sequence ID" value="cds.TraesKARUn01G0125410.1"/>
    <property type="gene ID" value="TraesKARUn01G0125410"/>
</dbReference>
<dbReference type="Gramene" id="TraesKARUn01G0125770.1">
    <property type="protein sequence ID" value="cds.TraesKARUn01G0125770.1"/>
    <property type="gene ID" value="TraesKARUn01G0125770"/>
</dbReference>
<dbReference type="Gramene" id="TraesKARUn01G0125830.1">
    <property type="protein sequence ID" value="cds.TraesKARUn01G0125830.1"/>
    <property type="gene ID" value="TraesKARUn01G0125830"/>
</dbReference>
<dbReference type="Gramene" id="TraesKARUn01G0126000.1">
    <property type="protein sequence ID" value="cds.TraesKARUn01G0126000.1"/>
    <property type="gene ID" value="TraesKARUn01G0126000"/>
</dbReference>
<dbReference type="Gramene" id="TraesKARUn01G0126040.1">
    <property type="protein sequence ID" value="cds.TraesKARUn01G0126040.1"/>
    <property type="gene ID" value="TraesKARUn01G0126040"/>
</dbReference>
<dbReference type="Gramene" id="TraesKARUn01G0126460.1">
    <property type="protein sequence ID" value="cds.TraesKARUn01G0126460.1"/>
    <property type="gene ID" value="TraesKARUn01G0126460"/>
</dbReference>
<dbReference type="Gramene" id="TraesKARUn01G0126690.1">
    <property type="protein sequence ID" value="cds.TraesKARUn01G0126690.1"/>
    <property type="gene ID" value="TraesKARUn01G0126690"/>
</dbReference>
<dbReference type="Gramene" id="TraesKARUn01G0126850.1">
    <property type="protein sequence ID" value="cds.TraesKARUn01G0126850.1"/>
    <property type="gene ID" value="TraesKARUn01G0126850"/>
</dbReference>
<dbReference type="Gramene" id="TraesKARUn01G0126920.1">
    <property type="protein sequence ID" value="cds.TraesKARUn01G0126920.1"/>
    <property type="gene ID" value="TraesKARUn01G0126920"/>
</dbReference>
<dbReference type="Gramene" id="TraesKARUn01G0127330.1">
    <property type="protein sequence ID" value="cds.TraesKARUn01G0127330.1"/>
    <property type="gene ID" value="TraesKARUn01G0127330"/>
</dbReference>
<dbReference type="Gramene" id="TraesKARUn01G0127480.1">
    <property type="protein sequence ID" value="cds.TraesKARUn01G0127480.1"/>
    <property type="gene ID" value="TraesKARUn01G0127480"/>
</dbReference>
<dbReference type="Gramene" id="TraesKARUn01G0127750.1">
    <property type="protein sequence ID" value="cds.TraesKARUn01G0127750.1"/>
    <property type="gene ID" value="TraesKARUn01G0127750"/>
</dbReference>
<dbReference type="Gramene" id="TraesKARUn01G0127920.1">
    <property type="protein sequence ID" value="cds.TraesKARUn01G0127920.1"/>
    <property type="gene ID" value="TraesKARUn01G0127920"/>
</dbReference>
<dbReference type="Gramene" id="TraesKARUn01G0128030.1">
    <property type="protein sequence ID" value="cds.TraesKARUn01G0128030.1"/>
    <property type="gene ID" value="TraesKARUn01G0128030"/>
</dbReference>
<dbReference type="Gramene" id="TraesKARUn01G0128060.1">
    <property type="protein sequence ID" value="cds.TraesKARUn01G0128060.1"/>
    <property type="gene ID" value="TraesKARUn01G0128060"/>
</dbReference>
<dbReference type="Gramene" id="TraesKARUn01G0128080.1">
    <property type="protein sequence ID" value="cds.TraesKARUn01G0128080.1"/>
    <property type="gene ID" value="TraesKARUn01G0128080"/>
</dbReference>
<dbReference type="Gramene" id="TraesKARUn01G0128110.1">
    <property type="protein sequence ID" value="cds.TraesKARUn01G0128110.1"/>
    <property type="gene ID" value="TraesKARUn01G0128110"/>
</dbReference>
<dbReference type="Gramene" id="TraesKARUn01G0128210.1">
    <property type="protein sequence ID" value="cds.TraesKARUn01G0128210.1"/>
    <property type="gene ID" value="TraesKARUn01G0128210"/>
</dbReference>
<dbReference type="Gramene" id="TraesKARUn01G0128470.1">
    <property type="protein sequence ID" value="cds.TraesKARUn01G0128470.1"/>
    <property type="gene ID" value="TraesKARUn01G0128470"/>
</dbReference>
<dbReference type="Gramene" id="TraesKARUn01G0128660.1">
    <property type="protein sequence ID" value="cds.TraesKARUn01G0128660.1"/>
    <property type="gene ID" value="TraesKARUn01G0128660"/>
</dbReference>
<dbReference type="Gramene" id="TraesKARUn01G0128850.1">
    <property type="protein sequence ID" value="cds.TraesKARUn01G0128850.1"/>
    <property type="gene ID" value="TraesKARUn01G0128850"/>
</dbReference>
<dbReference type="Gramene" id="TraesKARUn01G0129000.1">
    <property type="protein sequence ID" value="cds.TraesKARUn01G0129000.1"/>
    <property type="gene ID" value="TraesKARUn01G0129000"/>
</dbReference>
<dbReference type="Gramene" id="TraesKARUn01G0129300.1">
    <property type="protein sequence ID" value="cds.TraesKARUn01G0129300.1"/>
    <property type="gene ID" value="TraesKARUn01G0129300"/>
</dbReference>
<dbReference type="Gramene" id="TraesKARUn01G0129340.1">
    <property type="protein sequence ID" value="cds.TraesKARUn01G0129340.1"/>
    <property type="gene ID" value="TraesKARUn01G0129340"/>
</dbReference>
<dbReference type="Gramene" id="TraesKARUn01G0129820.1">
    <property type="protein sequence ID" value="cds.TraesKARUn01G0129820.1"/>
    <property type="gene ID" value="TraesKARUn01G0129820"/>
</dbReference>
<dbReference type="Gramene" id="TraesKARUn01G0129990.1">
    <property type="protein sequence ID" value="cds.TraesKARUn01G0129990.1"/>
    <property type="gene ID" value="TraesKARUn01G0129990"/>
</dbReference>
<dbReference type="Gramene" id="TraesKARUn01G0130030.1">
    <property type="protein sequence ID" value="cds.TraesKARUn01G0130030.1"/>
    <property type="gene ID" value="TraesKARUn01G0130030"/>
</dbReference>
<dbReference type="Gramene" id="TraesKARUn01G0130220.1">
    <property type="protein sequence ID" value="cds.TraesKARUn01G0130220.1"/>
    <property type="gene ID" value="TraesKARUn01G0130220"/>
</dbReference>
<dbReference type="Gramene" id="TraesKARUn01G0130570.1">
    <property type="protein sequence ID" value="cds.TraesKARUn01G0130570.1"/>
    <property type="gene ID" value="TraesKARUn01G0130570"/>
</dbReference>
<dbReference type="Gramene" id="TraesKARUn01G0130700.1">
    <property type="protein sequence ID" value="cds.TraesKARUn01G0130700.1"/>
    <property type="gene ID" value="TraesKARUn01G0130700"/>
</dbReference>
<dbReference type="Gramene" id="TraesKARUn01G0130740.1">
    <property type="protein sequence ID" value="cds.TraesKARUn01G0130740.1"/>
    <property type="gene ID" value="TraesKARUn01G0130740"/>
</dbReference>
<dbReference type="Gramene" id="TraesKARUn01G0130960.1">
    <property type="protein sequence ID" value="cds.TraesKARUn01G0130960.1"/>
    <property type="gene ID" value="TraesKARUn01G0130960"/>
</dbReference>
<dbReference type="Gramene" id="TraesKARUn01G0131080.1">
    <property type="protein sequence ID" value="cds.TraesKARUn01G0131080.1"/>
    <property type="gene ID" value="TraesKARUn01G0131080"/>
</dbReference>
<dbReference type="Gramene" id="TraesKARUn01G0131950.1">
    <property type="protein sequence ID" value="cds.TraesKARUn01G0131950.1"/>
    <property type="gene ID" value="TraesKARUn01G0131950"/>
</dbReference>
<dbReference type="Gramene" id="TraesKARUn01G0131970.1">
    <property type="protein sequence ID" value="cds.TraesKARUn01G0131970.1"/>
    <property type="gene ID" value="TraesKARUn01G0131970"/>
</dbReference>
<dbReference type="Gramene" id="TraesKARUn01G0132030.1">
    <property type="protein sequence ID" value="cds.TraesKARUn01G0132030.1"/>
    <property type="gene ID" value="TraesKARUn01G0132030"/>
</dbReference>
<dbReference type="Gramene" id="TraesKARUn01G0132400.1">
    <property type="protein sequence ID" value="cds.TraesKARUn01G0132400.1"/>
    <property type="gene ID" value="TraesKARUn01G0132400"/>
</dbReference>
<dbReference type="Gramene" id="TraesKARUn01G0132460.1">
    <property type="protein sequence ID" value="cds.TraesKARUn01G0132460.1"/>
    <property type="gene ID" value="TraesKARUn01G0132460"/>
</dbReference>
<dbReference type="Gramene" id="TraesKARUn01G0132520.1">
    <property type="protein sequence ID" value="cds.TraesKARUn01G0132520.1"/>
    <property type="gene ID" value="TraesKARUn01G0132520"/>
</dbReference>
<dbReference type="Gramene" id="TraesKARUn01G0132660.1">
    <property type="protein sequence ID" value="cds.TraesKARUn01G0132660.1"/>
    <property type="gene ID" value="TraesKARUn01G0132660"/>
</dbReference>
<dbReference type="Gramene" id="TraesKARUn01G0132670.1">
    <property type="protein sequence ID" value="cds.TraesKARUn01G0132670.1"/>
    <property type="gene ID" value="TraesKARUn01G0132670"/>
</dbReference>
<dbReference type="Gramene" id="TraesKARUn01G0132940.1">
    <property type="protein sequence ID" value="cds.TraesKARUn01G0132940.1"/>
    <property type="gene ID" value="TraesKARUn01G0132940"/>
</dbReference>
<dbReference type="Gramene" id="TraesKARUn01G0133050.1">
    <property type="protein sequence ID" value="cds.TraesKARUn01G0133050.1"/>
    <property type="gene ID" value="TraesKARUn01G0133050"/>
</dbReference>
<dbReference type="Gramene" id="TraesKARUn01G0133220.1">
    <property type="protein sequence ID" value="cds.TraesKARUn01G0133220.1"/>
    <property type="gene ID" value="TraesKARUn01G0133220"/>
</dbReference>
<dbReference type="Gramene" id="TraesKARUn01G0133320.1">
    <property type="protein sequence ID" value="cds.TraesKARUn01G0133320.1"/>
    <property type="gene ID" value="TraesKARUn01G0133320"/>
</dbReference>
<dbReference type="Gramene" id="TraesKARUn01G0133390.1">
    <property type="protein sequence ID" value="cds.TraesKARUn01G0133390.1"/>
    <property type="gene ID" value="TraesKARUn01G0133390"/>
</dbReference>
<dbReference type="Gramene" id="TraesKARUn01G0133580.1">
    <property type="protein sequence ID" value="cds.TraesKARUn01G0133580.1"/>
    <property type="gene ID" value="TraesKARUn01G0133580"/>
</dbReference>
<dbReference type="Gramene" id="TraesKARUn01G0133730.1">
    <property type="protein sequence ID" value="cds.TraesKARUn01G0133730.1"/>
    <property type="gene ID" value="TraesKARUn01G0133730"/>
</dbReference>
<dbReference type="Gramene" id="TraesKARUn01G0134050.1">
    <property type="protein sequence ID" value="cds.TraesKARUn01G0134050.1"/>
    <property type="gene ID" value="TraesKARUn01G0134050"/>
</dbReference>
<dbReference type="Gramene" id="TraesKARUn01G0134090.1">
    <property type="protein sequence ID" value="cds.TraesKARUn01G0134090.1"/>
    <property type="gene ID" value="TraesKARUn01G0134090"/>
</dbReference>
<dbReference type="Gramene" id="TraesKARUn01G0134230.1">
    <property type="protein sequence ID" value="cds.TraesKARUn01G0134230.1"/>
    <property type="gene ID" value="TraesKARUn01G0134230"/>
</dbReference>
<dbReference type="Gramene" id="TraesKARUn01G0134320.1">
    <property type="protein sequence ID" value="cds.TraesKARUn01G0134320.1"/>
    <property type="gene ID" value="TraesKARUn01G0134320"/>
</dbReference>
<dbReference type="Gramene" id="TraesKARUn01G0134600.1">
    <property type="protein sequence ID" value="cds.TraesKARUn01G0134600.1"/>
    <property type="gene ID" value="TraesKARUn01G0134600"/>
</dbReference>
<dbReference type="Gramene" id="TraesKARUn01G0134620.1">
    <property type="protein sequence ID" value="cds.TraesKARUn01G0134620.1"/>
    <property type="gene ID" value="TraesKARUn01G0134620"/>
</dbReference>
<dbReference type="Gramene" id="TraesKARUn01G0134740.1">
    <property type="protein sequence ID" value="cds.TraesKARUn01G0134740.1"/>
    <property type="gene ID" value="TraesKARUn01G0134740"/>
</dbReference>
<dbReference type="Gramene" id="TraesKARUn01G0134890.1">
    <property type="protein sequence ID" value="cds.TraesKARUn01G0134890.1"/>
    <property type="gene ID" value="TraesKARUn01G0134890"/>
</dbReference>
<dbReference type="Gramene" id="TraesKARUn01G0134980.1">
    <property type="protein sequence ID" value="cds.TraesKARUn01G0134980.1"/>
    <property type="gene ID" value="TraesKARUn01G0134980"/>
</dbReference>
<dbReference type="Gramene" id="TraesKARUn01G0135000.1">
    <property type="protein sequence ID" value="cds.TraesKARUn01G0135000.1"/>
    <property type="gene ID" value="TraesKARUn01G0135000"/>
</dbReference>
<dbReference type="Gramene" id="TraesKARUn01G0135070.1">
    <property type="protein sequence ID" value="cds.TraesKARUn01G0135070.1"/>
    <property type="gene ID" value="TraesKARUn01G0135070"/>
</dbReference>
<dbReference type="Gramene" id="TraesKARUn01G0135270.1">
    <property type="protein sequence ID" value="cds.TraesKARUn01G0135270.1"/>
    <property type="gene ID" value="TraesKARUn01G0135270"/>
</dbReference>
<dbReference type="Gramene" id="TraesKARUn01G0135360.1">
    <property type="protein sequence ID" value="cds.TraesKARUn01G0135360.1"/>
    <property type="gene ID" value="TraesKARUn01G0135360"/>
</dbReference>
<dbReference type="Gramene" id="TraesKARUn01G0135490.1">
    <property type="protein sequence ID" value="cds.TraesKARUn01G0135490.1"/>
    <property type="gene ID" value="TraesKARUn01G0135490"/>
</dbReference>
<dbReference type="Gramene" id="TraesKARUn01G0135750.1">
    <property type="protein sequence ID" value="cds.TraesKARUn01G0135750.1"/>
    <property type="gene ID" value="TraesKARUn01G0135750"/>
</dbReference>
<dbReference type="Gramene" id="TraesKARUn01G0135780.1">
    <property type="protein sequence ID" value="cds.TraesKARUn01G0135780.1"/>
    <property type="gene ID" value="TraesKARUn01G0135780"/>
</dbReference>
<dbReference type="Gramene" id="TraesKARUn01G0135910.1">
    <property type="protein sequence ID" value="cds.TraesKARUn01G0135910.1"/>
    <property type="gene ID" value="TraesKARUn01G0135910"/>
</dbReference>
<dbReference type="Gramene" id="TraesKARUn01G0136020.1">
    <property type="protein sequence ID" value="cds.TraesKARUn01G0136020.1"/>
    <property type="gene ID" value="TraesKARUn01G0136020"/>
</dbReference>
<dbReference type="Gramene" id="TraesKARUn01G0136180.1">
    <property type="protein sequence ID" value="cds.TraesKARUn01G0136180.1"/>
    <property type="gene ID" value="TraesKARUn01G0136180"/>
</dbReference>
<dbReference type="Gramene" id="TraesKARUn01G0136330.1">
    <property type="protein sequence ID" value="cds.TraesKARUn01G0136330.1"/>
    <property type="gene ID" value="TraesKARUn01G0136330"/>
</dbReference>
<dbReference type="Gramene" id="TraesKARUn01G0136410.1">
    <property type="protein sequence ID" value="cds.TraesKARUn01G0136410.1"/>
    <property type="gene ID" value="TraesKARUn01G0136410"/>
</dbReference>
<dbReference type="Gramene" id="TraesKARUn01G0136550.1">
    <property type="protein sequence ID" value="cds.TraesKARUn01G0136550.1"/>
    <property type="gene ID" value="TraesKARUn01G0136550"/>
</dbReference>
<dbReference type="Gramene" id="TraesKARUn01G0136760.1">
    <property type="protein sequence ID" value="cds.TraesKARUn01G0136760.1"/>
    <property type="gene ID" value="TraesKARUn01G0136760"/>
</dbReference>
<dbReference type="Gramene" id="TraesKARUn01G0137110.1">
    <property type="protein sequence ID" value="cds.TraesKARUn01G0137110.1"/>
    <property type="gene ID" value="TraesKARUn01G0137110"/>
</dbReference>
<dbReference type="Gramene" id="TraesKARUn01G0137140.1">
    <property type="protein sequence ID" value="cds.TraesKARUn01G0137140.1"/>
    <property type="gene ID" value="TraesKARUn01G0137140"/>
</dbReference>
<dbReference type="Gramene" id="TraesKARUn01G0137610.1">
    <property type="protein sequence ID" value="cds.TraesKARUn01G0137610.1"/>
    <property type="gene ID" value="TraesKARUn01G0137610"/>
</dbReference>
<dbReference type="Gramene" id="TraesKARUn01G0137820.1">
    <property type="protein sequence ID" value="cds.TraesKARUn01G0137820.1"/>
    <property type="gene ID" value="TraesKARUn01G0137820"/>
</dbReference>
<dbReference type="Gramene" id="TraesKARUn01G0137890.1">
    <property type="protein sequence ID" value="cds.TraesKARUn01G0137890.1"/>
    <property type="gene ID" value="TraesKARUn01G0137890"/>
</dbReference>
<dbReference type="Gramene" id="TraesKARUn01G0138160.1">
    <property type="protein sequence ID" value="cds.TraesKARUn01G0138160.1"/>
    <property type="gene ID" value="TraesKARUn01G0138160"/>
</dbReference>
<dbReference type="Gramene" id="TraesKARUn01G0138230.1">
    <property type="protein sequence ID" value="cds.TraesKARUn01G0138230.1"/>
    <property type="gene ID" value="TraesKARUn01G0138230"/>
</dbReference>
<dbReference type="Gramene" id="TraesKARUn01G0138860.1">
    <property type="protein sequence ID" value="cds.TraesKARUn01G0138860.1"/>
    <property type="gene ID" value="TraesKARUn01G0138860"/>
</dbReference>
<dbReference type="Gramene" id="TraesKARUn01G0138870.1">
    <property type="protein sequence ID" value="cds.TraesKARUn01G0138870.1"/>
    <property type="gene ID" value="TraesKARUn01G0138870"/>
</dbReference>
<dbReference type="Gramene" id="TraesKARUn01G0139100.1">
    <property type="protein sequence ID" value="cds.TraesKARUn01G0139100.1"/>
    <property type="gene ID" value="TraesKARUn01G0139100"/>
</dbReference>
<dbReference type="Gramene" id="TraesKARUn01G0139130.1">
    <property type="protein sequence ID" value="cds.TraesKARUn01G0139130.1"/>
    <property type="gene ID" value="TraesKARUn01G0139130"/>
</dbReference>
<dbReference type="Gramene" id="TraesKARUn01G0139440.1">
    <property type="protein sequence ID" value="cds.TraesKARUn01G0139440.1"/>
    <property type="gene ID" value="TraesKARUn01G0139440"/>
</dbReference>
<dbReference type="Gramene" id="TraesKARUn01G0139470.1">
    <property type="protein sequence ID" value="cds.TraesKARUn01G0139470.1"/>
    <property type="gene ID" value="TraesKARUn01G0139470"/>
</dbReference>
<dbReference type="Gramene" id="TraesKARUn01G0140000.1">
    <property type="protein sequence ID" value="cds.TraesKARUn01G0140000.1"/>
    <property type="gene ID" value="TraesKARUn01G0140000"/>
</dbReference>
<dbReference type="Gramene" id="TraesKARUn01G0140690.1">
    <property type="protein sequence ID" value="cds.TraesKARUn01G0140690.1"/>
    <property type="gene ID" value="TraesKARUn01G0140690"/>
</dbReference>
<dbReference type="Gramene" id="TraesKARUn01G0141050.1">
    <property type="protein sequence ID" value="cds.TraesKARUn01G0141050.1"/>
    <property type="gene ID" value="TraesKARUn01G0141050"/>
</dbReference>
<dbReference type="Gramene" id="TraesKARUn01G0141100.1">
    <property type="protein sequence ID" value="cds.TraesKARUn01G0141100.1"/>
    <property type="gene ID" value="TraesKARUn01G0141100"/>
</dbReference>
<dbReference type="Gramene" id="TraesKARUn01G0141200.1">
    <property type="protein sequence ID" value="cds.TraesKARUn01G0141200.1"/>
    <property type="gene ID" value="TraesKARUn01G0141200"/>
</dbReference>
<dbReference type="Gramene" id="TraesKARUn01G0141280.1">
    <property type="protein sequence ID" value="cds.TraesKARUn01G0141280.1"/>
    <property type="gene ID" value="TraesKARUn01G0141280"/>
</dbReference>
<dbReference type="Gramene" id="TraesKARUn01G0141300.1">
    <property type="protein sequence ID" value="cds.TraesKARUn01G0141300.1"/>
    <property type="gene ID" value="TraesKARUn01G0141300"/>
</dbReference>
<dbReference type="Gramene" id="TraesKARUn01G0141450.1">
    <property type="protein sequence ID" value="cds.TraesKARUn01G0141450.1"/>
    <property type="gene ID" value="TraesKARUn01G0141450"/>
</dbReference>
<dbReference type="Gramene" id="TraesKARUn01G0141940.1">
    <property type="protein sequence ID" value="cds.TraesKARUn01G0141940.1"/>
    <property type="gene ID" value="TraesKARUn01G0141940"/>
</dbReference>
<dbReference type="Gramene" id="TraesKARUn01G0142020.1">
    <property type="protein sequence ID" value="cds.TraesKARUn01G0142020.1"/>
    <property type="gene ID" value="TraesKARUn01G0142020"/>
</dbReference>
<dbReference type="Gramene" id="TraesKARUn01G0142110.1">
    <property type="protein sequence ID" value="cds.TraesKARUn01G0142110.1"/>
    <property type="gene ID" value="TraesKARUn01G0142110"/>
</dbReference>
<dbReference type="Gramene" id="TraesKARUn01G0142190.1">
    <property type="protein sequence ID" value="cds.TraesKARUn01G0142190.1"/>
    <property type="gene ID" value="TraesKARUn01G0142190"/>
</dbReference>
<dbReference type="Gramene" id="TraesKARUn01G0142410.1">
    <property type="protein sequence ID" value="cds.TraesKARUn01G0142410.1"/>
    <property type="gene ID" value="TraesKARUn01G0142410"/>
</dbReference>
<dbReference type="Gramene" id="TraesKARUn01G0142450.1">
    <property type="protein sequence ID" value="cds.TraesKARUn01G0142450.1"/>
    <property type="gene ID" value="TraesKARUn01G0142450"/>
</dbReference>
<dbReference type="Gramene" id="TraesKARUn01G0142620.1">
    <property type="protein sequence ID" value="cds.TraesKARUn01G0142620.1"/>
    <property type="gene ID" value="TraesKARUn01G0142620"/>
</dbReference>
<dbReference type="Gramene" id="TraesKARUn01G0142730.1">
    <property type="protein sequence ID" value="cds.TraesKARUn01G0142730.1"/>
    <property type="gene ID" value="TraesKARUn01G0142730"/>
</dbReference>
<dbReference type="Gramene" id="TraesKARUn01G0142740.1">
    <property type="protein sequence ID" value="cds.TraesKARUn01G0142740.1"/>
    <property type="gene ID" value="TraesKARUn01G0142740"/>
</dbReference>
<dbReference type="Gramene" id="TraesKARUn01G0142870.1">
    <property type="protein sequence ID" value="cds.TraesKARUn01G0142870.1"/>
    <property type="gene ID" value="TraesKARUn01G0142870"/>
</dbReference>
<dbReference type="Gramene" id="TraesKARUn01G0142900.1">
    <property type="protein sequence ID" value="cds.TraesKARUn01G0142900.1"/>
    <property type="gene ID" value="TraesKARUn01G0142900"/>
</dbReference>
<dbReference type="Gramene" id="TraesKARUn01G0143130.1">
    <property type="protein sequence ID" value="cds.TraesKARUn01G0143130.1"/>
    <property type="gene ID" value="TraesKARUn01G0143130"/>
</dbReference>
<dbReference type="Gramene" id="TraesKARUn01G0143200.1">
    <property type="protein sequence ID" value="cds.TraesKARUn01G0143200.1"/>
    <property type="gene ID" value="TraesKARUn01G0143200"/>
</dbReference>
<dbReference type="Gramene" id="TraesKARUn01G0143290.1">
    <property type="protein sequence ID" value="cds.TraesKARUn01G0143290.1"/>
    <property type="gene ID" value="TraesKARUn01G0143290"/>
</dbReference>
<dbReference type="Gramene" id="TraesKARUn01G0143310.1">
    <property type="protein sequence ID" value="cds.TraesKARUn01G0143310.1"/>
    <property type="gene ID" value="TraesKARUn01G0143310"/>
</dbReference>
<dbReference type="Gramene" id="TraesKARUn01G0143420.1">
    <property type="protein sequence ID" value="cds.TraesKARUn01G0143420.1"/>
    <property type="gene ID" value="TraesKARUn01G0143420"/>
</dbReference>
<dbReference type="Gramene" id="TraesKARUn01G0143500.1">
    <property type="protein sequence ID" value="cds.TraesKARUn01G0143500.1"/>
    <property type="gene ID" value="TraesKARUn01G0143500"/>
</dbReference>
<dbReference type="Gramene" id="TraesKARUn01G0143590.1">
    <property type="protein sequence ID" value="cds.TraesKARUn01G0143590.1"/>
    <property type="gene ID" value="TraesKARUn01G0143590"/>
</dbReference>
<dbReference type="Gramene" id="TraesKARUn01G0143630.1">
    <property type="protein sequence ID" value="cds.TraesKARUn01G0143630.1"/>
    <property type="gene ID" value="TraesKARUn01G0143630"/>
</dbReference>
<dbReference type="Gramene" id="TraesKARUn01G0143650.1">
    <property type="protein sequence ID" value="cds.TraesKARUn01G0143650.1"/>
    <property type="gene ID" value="TraesKARUn01G0143650"/>
</dbReference>
<dbReference type="Gramene" id="TraesKARUn01G0144120.1">
    <property type="protein sequence ID" value="cds.TraesKARUn01G0144120.1"/>
    <property type="gene ID" value="TraesKARUn01G0144120"/>
</dbReference>
<dbReference type="Gramene" id="TraesKARUn01G0144360.1">
    <property type="protein sequence ID" value="cds.TraesKARUn01G0144360.1"/>
    <property type="gene ID" value="TraesKARUn01G0144360"/>
</dbReference>
<dbReference type="Gramene" id="TraesKARUn01G0144420.1">
    <property type="protein sequence ID" value="cds.TraesKARUn01G0144420.1"/>
    <property type="gene ID" value="TraesKARUn01G0144420"/>
</dbReference>
<dbReference type="Gramene" id="TraesKARUn01G0144460.1">
    <property type="protein sequence ID" value="cds.TraesKARUn01G0144460.1"/>
    <property type="gene ID" value="TraesKARUn01G0144460"/>
</dbReference>
<dbReference type="Gramene" id="TraesKARUn01G0144720.1">
    <property type="protein sequence ID" value="cds.TraesKARUn01G0144720.1"/>
    <property type="gene ID" value="TraesKARUn01G0144720"/>
</dbReference>
<dbReference type="Gramene" id="TraesKARUn01G0144750.1">
    <property type="protein sequence ID" value="cds.TraesKARUn01G0144750.1"/>
    <property type="gene ID" value="TraesKARUn01G0144750"/>
</dbReference>
<dbReference type="Gramene" id="TraesKARUn01G0144920.1">
    <property type="protein sequence ID" value="cds.TraesKARUn01G0144920.1"/>
    <property type="gene ID" value="TraesKARUn01G0144920"/>
</dbReference>
<dbReference type="Gramene" id="TraesKARUn01G0145090.1">
    <property type="protein sequence ID" value="cds.TraesKARUn01G0145090.1"/>
    <property type="gene ID" value="TraesKARUn01G0145090"/>
</dbReference>
<dbReference type="Gramene" id="TraesKARUn01G0145160.1">
    <property type="protein sequence ID" value="cds.TraesKARUn01G0145160.1"/>
    <property type="gene ID" value="TraesKARUn01G0145160"/>
</dbReference>
<dbReference type="Gramene" id="TraesKARUn01G0145400.1">
    <property type="protein sequence ID" value="cds.TraesKARUn01G0145400.1"/>
    <property type="gene ID" value="TraesKARUn01G0145400"/>
</dbReference>
<dbReference type="Gramene" id="TraesKARUn01G0145450.1">
    <property type="protein sequence ID" value="cds.TraesKARUn01G0145450.1"/>
    <property type="gene ID" value="TraesKARUn01G0145450"/>
</dbReference>
<dbReference type="Gramene" id="TraesKARUn01G0145640.1">
    <property type="protein sequence ID" value="cds.TraesKARUn01G0145640.1"/>
    <property type="gene ID" value="TraesKARUn01G0145640"/>
</dbReference>
<dbReference type="Gramene" id="TraesKARUn01G0145680.1">
    <property type="protein sequence ID" value="cds.TraesKARUn01G0145680.1"/>
    <property type="gene ID" value="TraesKARUn01G0145680"/>
</dbReference>
<dbReference type="Gramene" id="TraesKARUn01G0145710.1">
    <property type="protein sequence ID" value="cds.TraesKARUn01G0145710.1"/>
    <property type="gene ID" value="TraesKARUn01G0145710"/>
</dbReference>
<dbReference type="Gramene" id="TraesKARUn01G0145800.1">
    <property type="protein sequence ID" value="cds.TraesKARUn01G0145800.1"/>
    <property type="gene ID" value="TraesKARUn01G0145800"/>
</dbReference>
<dbReference type="Gramene" id="TraesKARUn01G0145910.1">
    <property type="protein sequence ID" value="cds.TraesKARUn01G0145910.1"/>
    <property type="gene ID" value="TraesKARUn01G0145910"/>
</dbReference>
<dbReference type="Gramene" id="TraesKARUn01G0145970.1">
    <property type="protein sequence ID" value="cds.TraesKARUn01G0145970.1"/>
    <property type="gene ID" value="TraesKARUn01G0145970"/>
</dbReference>
<dbReference type="Gramene" id="TraesKARUn01G0145980.1">
    <property type="protein sequence ID" value="cds.TraesKARUn01G0145980.1"/>
    <property type="gene ID" value="TraesKARUn01G0145980"/>
</dbReference>
<dbReference type="Gramene" id="TraesKARUn01G0146060.1">
    <property type="protein sequence ID" value="cds.TraesKARUn01G0146060.1"/>
    <property type="gene ID" value="TraesKARUn01G0146060"/>
</dbReference>
<dbReference type="Gramene" id="TraesKARUn01G0146220.1">
    <property type="protein sequence ID" value="cds.TraesKARUn01G0146220.1"/>
    <property type="gene ID" value="TraesKARUn01G0146220"/>
</dbReference>
<dbReference type="Gramene" id="TraesKARUn01G0146390.1">
    <property type="protein sequence ID" value="cds.TraesKARUn01G0146390.1"/>
    <property type="gene ID" value="TraesKARUn01G0146390"/>
</dbReference>
<dbReference type="Gramene" id="TraesKARUn01G0146550.1">
    <property type="protein sequence ID" value="cds.TraesKARUn01G0146550.1"/>
    <property type="gene ID" value="TraesKARUn01G0146550"/>
</dbReference>
<dbReference type="Gramene" id="TraesKARUn01G0146710.1">
    <property type="protein sequence ID" value="cds.TraesKARUn01G0146710.1"/>
    <property type="gene ID" value="TraesKARUn01G0146710"/>
</dbReference>
<dbReference type="Gramene" id="TraesKARUn01G0146850.1">
    <property type="protein sequence ID" value="cds.TraesKARUn01G0146850.1"/>
    <property type="gene ID" value="TraesKARUn01G0146850"/>
</dbReference>
<dbReference type="Gramene" id="TraesKARUn01G0146860.1">
    <property type="protein sequence ID" value="cds.TraesKARUn01G0146860.1"/>
    <property type="gene ID" value="TraesKARUn01G0146860"/>
</dbReference>
<dbReference type="Gramene" id="TraesKARUn01G0147130.1">
    <property type="protein sequence ID" value="cds.TraesKARUn01G0147130.1"/>
    <property type="gene ID" value="TraesKARUn01G0147130"/>
</dbReference>
<dbReference type="Gramene" id="TraesKARUn01G0147320.1">
    <property type="protein sequence ID" value="cds.TraesKARUn01G0147320.1"/>
    <property type="gene ID" value="TraesKARUn01G0147320"/>
</dbReference>
<dbReference type="Gramene" id="TraesKARUn01G0147570.1">
    <property type="protein sequence ID" value="cds.TraesKARUn01G0147570.1"/>
    <property type="gene ID" value="TraesKARUn01G0147570"/>
</dbReference>
<dbReference type="Gramene" id="TraesKARUn01G0147700.1">
    <property type="protein sequence ID" value="cds.TraesKARUn01G0147700.1"/>
    <property type="gene ID" value="TraesKARUn01G0147700"/>
</dbReference>
<dbReference type="Gramene" id="TraesKARUn01G0147740.1">
    <property type="protein sequence ID" value="cds.TraesKARUn01G0147740.1"/>
    <property type="gene ID" value="TraesKARUn01G0147740"/>
</dbReference>
<dbReference type="Gramene" id="TraesKARUn01G0147770.1">
    <property type="protein sequence ID" value="cds.TraesKARUn01G0147770.1"/>
    <property type="gene ID" value="TraesKARUn01G0147770"/>
</dbReference>
<dbReference type="Gramene" id="TraesKARUn01G0148170.1">
    <property type="protein sequence ID" value="cds.TraesKARUn01G0148170.1"/>
    <property type="gene ID" value="TraesKARUn01G0148170"/>
</dbReference>
<dbReference type="Gramene" id="TraesKARUn01G0148250.1">
    <property type="protein sequence ID" value="cds.TraesKARUn01G0148250.1"/>
    <property type="gene ID" value="TraesKARUn01G0148250"/>
</dbReference>
<dbReference type="Gramene" id="TraesKARUn01G0148300.1">
    <property type="protein sequence ID" value="cds.TraesKARUn01G0148300.1"/>
    <property type="gene ID" value="TraesKARUn01G0148300"/>
</dbReference>
<dbReference type="Gramene" id="TraesKARUn01G0148450.1">
    <property type="protein sequence ID" value="cds.TraesKARUn01G0148450.1"/>
    <property type="gene ID" value="TraesKARUn01G0148450"/>
</dbReference>
<dbReference type="Gramene" id="TraesKARUn01G0148930.1">
    <property type="protein sequence ID" value="cds.TraesKARUn01G0148930.1"/>
    <property type="gene ID" value="TraesKARUn01G0148930"/>
</dbReference>
<dbReference type="Gramene" id="TraesKARUn01G0149120.1">
    <property type="protein sequence ID" value="cds.TraesKARUn01G0149120.1"/>
    <property type="gene ID" value="TraesKARUn01G0149120"/>
</dbReference>
<dbReference type="Gramene" id="TraesKARUn01G0149360.1">
    <property type="protein sequence ID" value="cds.TraesKARUn01G0149360.1"/>
    <property type="gene ID" value="TraesKARUn01G0149360"/>
</dbReference>
<dbReference type="Gramene" id="TraesKARUn01G0149590.1">
    <property type="protein sequence ID" value="cds.TraesKARUn01G0149590.1"/>
    <property type="gene ID" value="TraesKARUn01G0149590"/>
</dbReference>
<dbReference type="Gramene" id="TraesKARUn01G0149670.1">
    <property type="protein sequence ID" value="cds.TraesKARUn01G0149670.1"/>
    <property type="gene ID" value="TraesKARUn01G0149670"/>
</dbReference>
<dbReference type="Gramene" id="TraesKARUn01G0149740.1">
    <property type="protein sequence ID" value="cds.TraesKARUn01G0149740.1"/>
    <property type="gene ID" value="TraesKARUn01G0149740"/>
</dbReference>
<dbReference type="Gramene" id="TraesKARUn01G0149770.1">
    <property type="protein sequence ID" value="cds.TraesKARUn01G0149770.1"/>
    <property type="gene ID" value="TraesKARUn01G0149770"/>
</dbReference>
<dbReference type="Gramene" id="TraesKARUn01G0149910.1">
    <property type="protein sequence ID" value="cds.TraesKARUn01G0149910.1"/>
    <property type="gene ID" value="TraesKARUn01G0149910"/>
</dbReference>
<dbReference type="Gramene" id="TraesKARUn01G0150250.1">
    <property type="protein sequence ID" value="cds.TraesKARUn01G0150250.1"/>
    <property type="gene ID" value="TraesKARUn01G0150250"/>
</dbReference>
<dbReference type="Gramene" id="TraesKARUn01G0150440.1">
    <property type="protein sequence ID" value="cds.TraesKARUn01G0150440.1"/>
    <property type="gene ID" value="TraesKARUn01G0150440"/>
</dbReference>
<dbReference type="Gramene" id="TraesKARUn01G0151600.1">
    <property type="protein sequence ID" value="cds.TraesKARUn01G0151600.1"/>
    <property type="gene ID" value="TraesKARUn01G0151600"/>
</dbReference>
<dbReference type="Gramene" id="TraesKARUn01G0151880.1">
    <property type="protein sequence ID" value="cds.TraesKARUn01G0151880.1"/>
    <property type="gene ID" value="TraesKARUn01G0151880"/>
</dbReference>
<dbReference type="Gramene" id="TraesKARUn01G0151940.1">
    <property type="protein sequence ID" value="cds.TraesKARUn01G0151940.1"/>
    <property type="gene ID" value="TraesKARUn01G0151940"/>
</dbReference>
<dbReference type="Gramene" id="TraesKARUn01G0152040.1">
    <property type="protein sequence ID" value="cds.TraesKARUn01G0152040.1"/>
    <property type="gene ID" value="TraesKARUn01G0152040"/>
</dbReference>
<dbReference type="Gramene" id="TraesKARUn01G0152100.1">
    <property type="protein sequence ID" value="cds.TraesKARUn01G0152100.1"/>
    <property type="gene ID" value="TraesKARUn01G0152100"/>
</dbReference>
<dbReference type="Gramene" id="TraesKARUn01G0152120.1">
    <property type="protein sequence ID" value="cds.TraesKARUn01G0152120.1"/>
    <property type="gene ID" value="TraesKARUn01G0152120"/>
</dbReference>
<dbReference type="Gramene" id="TraesKARUn01G0152190.1">
    <property type="protein sequence ID" value="cds.TraesKARUn01G0152190.1"/>
    <property type="gene ID" value="TraesKARUn01G0152190"/>
</dbReference>
<dbReference type="Gramene" id="TraesKARUn01G0152660.1">
    <property type="protein sequence ID" value="cds.TraesKARUn01G0152660.1"/>
    <property type="gene ID" value="TraesKARUn01G0152660"/>
</dbReference>
<dbReference type="Gramene" id="TraesKARUn01G0152700.1">
    <property type="protein sequence ID" value="cds.TraesKARUn01G0152700.1"/>
    <property type="gene ID" value="TraesKARUn01G0152700"/>
</dbReference>
<dbReference type="Gramene" id="TraesKARUn01G0152990.1">
    <property type="protein sequence ID" value="cds.TraesKARUn01G0152990.1"/>
    <property type="gene ID" value="TraesKARUn01G0152990"/>
</dbReference>
<dbReference type="Gramene" id="TraesKARUn01G0153020.1">
    <property type="protein sequence ID" value="cds.TraesKARUn01G0153020.1"/>
    <property type="gene ID" value="TraesKARUn01G0153020"/>
</dbReference>
<dbReference type="Gramene" id="TraesKARUn01G0153060.1">
    <property type="protein sequence ID" value="cds.TraesKARUn01G0153060.1"/>
    <property type="gene ID" value="TraesKARUn01G0153060"/>
</dbReference>
<dbReference type="Gramene" id="TraesKARUn01G0153080.1">
    <property type="protein sequence ID" value="cds.TraesKARUn01G0153080.1"/>
    <property type="gene ID" value="TraesKARUn01G0153080"/>
</dbReference>
<dbReference type="Gramene" id="TraesKARUn01G0153270.1">
    <property type="protein sequence ID" value="cds.TraesKARUn01G0153270.1"/>
    <property type="gene ID" value="TraesKARUn01G0153270"/>
</dbReference>
<dbReference type="Gramene" id="TraesKARUn01G0153340.1">
    <property type="protein sequence ID" value="cds.TraesKARUn01G0153340.1"/>
    <property type="gene ID" value="TraesKARUn01G0153340"/>
</dbReference>
<dbReference type="Gramene" id="TraesKARUn01G0153690.1">
    <property type="protein sequence ID" value="cds.TraesKARUn01G0153690.1"/>
    <property type="gene ID" value="TraesKARUn01G0153690"/>
</dbReference>
<dbReference type="Gramene" id="TraesKARUn01G0153830.1">
    <property type="protein sequence ID" value="cds.TraesKARUn01G0153830.1"/>
    <property type="gene ID" value="TraesKARUn01G0153830"/>
</dbReference>
<dbReference type="Gramene" id="TraesKARUn01G0153870.1">
    <property type="protein sequence ID" value="cds.TraesKARUn01G0153870.1"/>
    <property type="gene ID" value="TraesKARUn01G0153870"/>
</dbReference>
<dbReference type="Gramene" id="TraesKARUn01G0153980.1">
    <property type="protein sequence ID" value="cds.TraesKARUn01G0153980.1"/>
    <property type="gene ID" value="TraesKARUn01G0153980"/>
</dbReference>
<dbReference type="Gramene" id="TraesKARUn01G0154230.1">
    <property type="protein sequence ID" value="cds.TraesKARUn01G0154230.1"/>
    <property type="gene ID" value="TraesKARUn01G0154230"/>
</dbReference>
<dbReference type="Gramene" id="TraesKARUn01G0154280.1">
    <property type="protein sequence ID" value="cds.TraesKARUn01G0154280.1"/>
    <property type="gene ID" value="TraesKARUn01G0154280"/>
</dbReference>
<dbReference type="Gramene" id="TraesKARUn01G0154410.1">
    <property type="protein sequence ID" value="cds.TraesKARUn01G0154410.1"/>
    <property type="gene ID" value="TraesKARUn01G0154410"/>
</dbReference>
<dbReference type="Gramene" id="TraesKARUn01G0154600.1">
    <property type="protein sequence ID" value="cds.TraesKARUn01G0154600.1"/>
    <property type="gene ID" value="TraesKARUn01G0154600"/>
</dbReference>
<dbReference type="Gramene" id="TraesKARUn01G0154740.1">
    <property type="protein sequence ID" value="cds.TraesKARUn01G0154740.1"/>
    <property type="gene ID" value="TraesKARUn01G0154740"/>
</dbReference>
<dbReference type="Gramene" id="TraesKARUn01G0154860.1">
    <property type="protein sequence ID" value="cds.TraesKARUn01G0154860.1"/>
    <property type="gene ID" value="TraesKARUn01G0154860"/>
</dbReference>
<dbReference type="Gramene" id="TraesKARUn01G0155030.1">
    <property type="protein sequence ID" value="cds.TraesKARUn01G0155030.1"/>
    <property type="gene ID" value="TraesKARUn01G0155030"/>
</dbReference>
<dbReference type="Gramene" id="TraesKARUn01G0155220.1">
    <property type="protein sequence ID" value="cds.TraesKARUn01G0155220.1"/>
    <property type="gene ID" value="TraesKARUn01G0155220"/>
</dbReference>
<dbReference type="Gramene" id="TraesKARUn01G0155550.1">
    <property type="protein sequence ID" value="cds.TraesKARUn01G0155550.1"/>
    <property type="gene ID" value="TraesKARUn01G0155550"/>
</dbReference>
<dbReference type="Gramene" id="TraesKARUn01G0155610.1">
    <property type="protein sequence ID" value="cds.TraesKARUn01G0155610.1"/>
    <property type="gene ID" value="TraesKARUn01G0155610"/>
</dbReference>
<dbReference type="Gramene" id="TraesKARUn01G0156040.1">
    <property type="protein sequence ID" value="cds.TraesKARUn01G0156040.1"/>
    <property type="gene ID" value="TraesKARUn01G0156040"/>
</dbReference>
<dbReference type="Gramene" id="TraesKARUn01G0156370.1">
    <property type="protein sequence ID" value="cds.TraesKARUn01G0156370.1"/>
    <property type="gene ID" value="TraesKARUn01G0156370"/>
</dbReference>
<dbReference type="Gramene" id="TraesKARUn01G0156490.1">
    <property type="protein sequence ID" value="cds.TraesKARUn01G0156490.1"/>
    <property type="gene ID" value="TraesKARUn01G0156490"/>
</dbReference>
<dbReference type="Gramene" id="TraesKARUn01G0156540.1">
    <property type="protein sequence ID" value="cds.TraesKARUn01G0156540.1"/>
    <property type="gene ID" value="TraesKARUn01G0156540"/>
</dbReference>
<dbReference type="Gramene" id="TraesKARUn01G0156940.1">
    <property type="protein sequence ID" value="cds.TraesKARUn01G0156940.1"/>
    <property type="gene ID" value="TraesKARUn01G0156940"/>
</dbReference>
<dbReference type="Gramene" id="TraesKARUn01G0156970.1">
    <property type="protein sequence ID" value="cds.TraesKARUn01G0156970.1"/>
    <property type="gene ID" value="TraesKARUn01G0156970"/>
</dbReference>
<dbReference type="Gramene" id="TraesKARUn01G0157310.1">
    <property type="protein sequence ID" value="cds.TraesKARUn01G0157310.1"/>
    <property type="gene ID" value="TraesKARUn01G0157310"/>
</dbReference>
<dbReference type="Gramene" id="TraesKARUn01G0157490.1">
    <property type="protein sequence ID" value="cds.TraesKARUn01G0157490.1"/>
    <property type="gene ID" value="TraesKARUn01G0157490"/>
</dbReference>
<dbReference type="Gramene" id="TraesKARUn01G0157640.1">
    <property type="protein sequence ID" value="cds.TraesKARUn01G0157640.1"/>
    <property type="gene ID" value="TraesKARUn01G0157640"/>
</dbReference>
<dbReference type="Gramene" id="TraesKARUn01G0157700.1">
    <property type="protein sequence ID" value="cds.TraesKARUn01G0157700.1"/>
    <property type="gene ID" value="TraesKARUn01G0157700"/>
</dbReference>
<dbReference type="Gramene" id="TraesKARUn01G0157750.1">
    <property type="protein sequence ID" value="cds.TraesKARUn01G0157750.1"/>
    <property type="gene ID" value="TraesKARUn01G0157750"/>
</dbReference>
<dbReference type="Gramene" id="TraesKARUn01G0158080.1">
    <property type="protein sequence ID" value="cds.TraesKARUn01G0158080.1"/>
    <property type="gene ID" value="TraesKARUn01G0158080"/>
</dbReference>
<dbReference type="Gramene" id="TraesKARUn01G0158320.1">
    <property type="protein sequence ID" value="cds.TraesKARUn01G0158320.1"/>
    <property type="gene ID" value="TraesKARUn01G0158320"/>
</dbReference>
<dbReference type="Gramene" id="TraesKARUn01G0158820.1">
    <property type="protein sequence ID" value="cds.TraesKARUn01G0158820.1"/>
    <property type="gene ID" value="TraesKARUn01G0158820"/>
</dbReference>
<dbReference type="Gramene" id="TraesKARUn01G0158950.1">
    <property type="protein sequence ID" value="cds.TraesKARUn01G0158950.1"/>
    <property type="gene ID" value="TraesKARUn01G0158950"/>
</dbReference>
<dbReference type="Gramene" id="TraesKARUn01G0159030.1">
    <property type="protein sequence ID" value="cds.TraesKARUn01G0159030.1"/>
    <property type="gene ID" value="TraesKARUn01G0159030"/>
</dbReference>
<dbReference type="Gramene" id="TraesKARUn01G0159170.1">
    <property type="protein sequence ID" value="cds.TraesKARUn01G0159170.1"/>
    <property type="gene ID" value="TraesKARUn01G0159170"/>
</dbReference>
<dbReference type="Gramene" id="TraesKARUn01G0159430.1">
    <property type="protein sequence ID" value="cds.TraesKARUn01G0159430.1"/>
    <property type="gene ID" value="TraesKARUn01G0159430"/>
</dbReference>
<dbReference type="Gramene" id="TraesKARUn01G0159500.1">
    <property type="protein sequence ID" value="cds.TraesKARUn01G0159500.1"/>
    <property type="gene ID" value="TraesKARUn01G0159500"/>
</dbReference>
<dbReference type="Gramene" id="TraesKARUn01G0160040.1">
    <property type="protein sequence ID" value="cds.TraesKARUn01G0160040.1"/>
    <property type="gene ID" value="TraesKARUn01G0160040"/>
</dbReference>
<dbReference type="Gramene" id="TraesKARUn01G0160060.1">
    <property type="protein sequence ID" value="cds.TraesKARUn01G0160060.1"/>
    <property type="gene ID" value="TraesKARUn01G0160060"/>
</dbReference>
<dbReference type="Gramene" id="TraesKARUn01G0160160.1">
    <property type="protein sequence ID" value="cds.TraesKARUn01G0160160.1"/>
    <property type="gene ID" value="TraesKARUn01G0160160"/>
</dbReference>
<dbReference type="Gramene" id="TraesKARUn01G0160180.1">
    <property type="protein sequence ID" value="cds.TraesKARUn01G0160180.1"/>
    <property type="gene ID" value="TraesKARUn01G0160180"/>
</dbReference>
<dbReference type="Gramene" id="TraesKARUn01G0160700.1">
    <property type="protein sequence ID" value="cds.TraesKARUn01G0160700.1"/>
    <property type="gene ID" value="TraesKARUn01G0160700"/>
</dbReference>
<dbReference type="Gramene" id="TraesKARUn01G0162430.1">
    <property type="protein sequence ID" value="cds.TraesKARUn01G0162430.1"/>
    <property type="gene ID" value="TraesKARUn01G0162430"/>
</dbReference>
<dbReference type="Gramene" id="TraesKARUn01G0162900.1">
    <property type="protein sequence ID" value="cds.TraesKARUn01G0162900.1"/>
    <property type="gene ID" value="TraesKARUn01G0162900"/>
</dbReference>
<dbReference type="Gramene" id="TraesKARUn01G0163010.1">
    <property type="protein sequence ID" value="cds.TraesKARUn01G0163010.1"/>
    <property type="gene ID" value="TraesKARUn01G0163010"/>
</dbReference>
<dbReference type="Gramene" id="TraesKARUn01G0163230.1">
    <property type="protein sequence ID" value="cds.TraesKARUn01G0163230.1"/>
    <property type="gene ID" value="TraesKARUn01G0163230"/>
</dbReference>
<dbReference type="Gramene" id="TraesKARUn01G0163270.1">
    <property type="protein sequence ID" value="cds.TraesKARUn01G0163270.1"/>
    <property type="gene ID" value="TraesKARUn01G0163270"/>
</dbReference>
<dbReference type="Gramene" id="TraesKARUn01G0164090.1">
    <property type="protein sequence ID" value="cds.TraesKARUn01G0164090.1"/>
    <property type="gene ID" value="TraesKARUn01G0164090"/>
</dbReference>
<dbReference type="Gramene" id="TraesKARUn01G0164220.1">
    <property type="protein sequence ID" value="cds.TraesKARUn01G0164220.1"/>
    <property type="gene ID" value="TraesKARUn01G0164220"/>
</dbReference>
<dbReference type="Gramene" id="TraesKARUn01G0164280.1">
    <property type="protein sequence ID" value="cds.TraesKARUn01G0164280.1"/>
    <property type="gene ID" value="TraesKARUn01G0164280"/>
</dbReference>
<dbReference type="Gramene" id="TraesKARUn01G0164320.1">
    <property type="protein sequence ID" value="cds.TraesKARUn01G0164320.1"/>
    <property type="gene ID" value="TraesKARUn01G0164320"/>
</dbReference>
<dbReference type="Gramene" id="TraesKARUn01G0164370.1">
    <property type="protein sequence ID" value="cds.TraesKARUn01G0164370.1"/>
    <property type="gene ID" value="TraesKARUn01G0164370"/>
</dbReference>
<dbReference type="Gramene" id="TraesKARUn01G0164440.1">
    <property type="protein sequence ID" value="cds.TraesKARUn01G0164440.1"/>
    <property type="gene ID" value="TraesKARUn01G0164440"/>
</dbReference>
<dbReference type="Gramene" id="TraesKARUn01G0164680.1">
    <property type="protein sequence ID" value="cds.TraesKARUn01G0164680.1"/>
    <property type="gene ID" value="TraesKARUn01G0164680"/>
</dbReference>
<dbReference type="Gramene" id="TraesKARUn01G0164740.1">
    <property type="protein sequence ID" value="cds.TraesKARUn01G0164740.1"/>
    <property type="gene ID" value="TraesKARUn01G0164740"/>
</dbReference>
<dbReference type="Gramene" id="TraesKARUn01G0164800.1">
    <property type="protein sequence ID" value="cds.TraesKARUn01G0164800.1"/>
    <property type="gene ID" value="TraesKARUn01G0164800"/>
</dbReference>
<dbReference type="Gramene" id="TraesKARUn01G0164970.1">
    <property type="protein sequence ID" value="cds.TraesKARUn01G0164970.1"/>
    <property type="gene ID" value="TraesKARUn01G0164970"/>
</dbReference>
<dbReference type="Gramene" id="TraesKARUn01G0166660.1">
    <property type="protein sequence ID" value="cds.TraesKARUn01G0166660.1"/>
    <property type="gene ID" value="TraesKARUn01G0166660"/>
</dbReference>
<dbReference type="Gramene" id="TraesKARUn01G0166750.1">
    <property type="protein sequence ID" value="cds.TraesKARUn01G0166750.1"/>
    <property type="gene ID" value="TraesKARUn01G0166750"/>
</dbReference>
<dbReference type="Gramene" id="TraesKARUn01G0166950.1">
    <property type="protein sequence ID" value="cds.TraesKARUn01G0166950.1"/>
    <property type="gene ID" value="TraesKARUn01G0166950"/>
</dbReference>
<dbReference type="Gramene" id="TraesKARUn01G0167070.1">
    <property type="protein sequence ID" value="cds.TraesKARUn01G0167070.1"/>
    <property type="gene ID" value="TraesKARUn01G0167070"/>
</dbReference>
<dbReference type="Gramene" id="TraesKARUn01G0167490.1">
    <property type="protein sequence ID" value="cds.TraesKARUn01G0167490.1"/>
    <property type="gene ID" value="TraesKARUn01G0167490"/>
</dbReference>
<dbReference type="Gramene" id="TraesKARUn01G0167590.1">
    <property type="protein sequence ID" value="cds.TraesKARUn01G0167590.1"/>
    <property type="gene ID" value="TraesKARUn01G0167590"/>
</dbReference>
<dbReference type="Gramene" id="TraesKARUn01G0167730.1">
    <property type="protein sequence ID" value="cds.TraesKARUn01G0167730.1"/>
    <property type="gene ID" value="TraesKARUn01G0167730"/>
</dbReference>
<dbReference type="Gramene" id="TraesKARUn01G0167750.1">
    <property type="protein sequence ID" value="cds.TraesKARUn01G0167750.1"/>
    <property type="gene ID" value="TraesKARUn01G0167750"/>
</dbReference>
<dbReference type="Gramene" id="TraesKARUn01G0168070.1">
    <property type="protein sequence ID" value="cds.TraesKARUn01G0168070.1"/>
    <property type="gene ID" value="TraesKARUn01G0168070"/>
</dbReference>
<dbReference type="Gramene" id="TraesKARUn01G0168470.1">
    <property type="protein sequence ID" value="cds.TraesKARUn01G0168470.1"/>
    <property type="gene ID" value="TraesKARUn01G0168470"/>
</dbReference>
<dbReference type="Gramene" id="TraesKARUn01G0168560.1">
    <property type="protein sequence ID" value="cds.TraesKARUn01G0168560.1"/>
    <property type="gene ID" value="TraesKARUn01G0168560"/>
</dbReference>
<dbReference type="Gramene" id="TraesKARUn01G0168600.1">
    <property type="protein sequence ID" value="cds.TraesKARUn01G0168600.1"/>
    <property type="gene ID" value="TraesKARUn01G0168600"/>
</dbReference>
<dbReference type="Gramene" id="TraesKARUn01G0168650.1">
    <property type="protein sequence ID" value="cds.TraesKARUn01G0168650.1"/>
    <property type="gene ID" value="TraesKARUn01G0168650"/>
</dbReference>
<dbReference type="Gramene" id="TraesKARUn01G0168790.1">
    <property type="protein sequence ID" value="cds.TraesKARUn01G0168790.1"/>
    <property type="gene ID" value="TraesKARUn01G0168790"/>
</dbReference>
<dbReference type="Gramene" id="TraesKARUn01G0169040.1">
    <property type="protein sequence ID" value="cds.TraesKARUn01G0169040.1"/>
    <property type="gene ID" value="TraesKARUn01G0169040"/>
</dbReference>
<dbReference type="Gramene" id="TraesKARUn01G0169100.1">
    <property type="protein sequence ID" value="cds.TraesKARUn01G0169100.1"/>
    <property type="gene ID" value="TraesKARUn01G0169100"/>
</dbReference>
<dbReference type="Gramene" id="TraesKARUn01G0169120.1">
    <property type="protein sequence ID" value="cds.TraesKARUn01G0169120.1"/>
    <property type="gene ID" value="TraesKARUn01G0169120"/>
</dbReference>
<dbReference type="Gramene" id="TraesKARUn01G0169210.1">
    <property type="protein sequence ID" value="cds.TraesKARUn01G0169210.1"/>
    <property type="gene ID" value="TraesKARUn01G0169210"/>
</dbReference>
<dbReference type="Gramene" id="TraesKARUn01G0169250.1">
    <property type="protein sequence ID" value="cds.TraesKARUn01G0169250.1"/>
    <property type="gene ID" value="TraesKARUn01G0169250"/>
</dbReference>
<dbReference type="Gramene" id="TraesKARUn01G0169310.1">
    <property type="protein sequence ID" value="cds.TraesKARUn01G0169310.1"/>
    <property type="gene ID" value="TraesKARUn01G0169310"/>
</dbReference>
<dbReference type="Gramene" id="TraesKARUn01G0169340.1">
    <property type="protein sequence ID" value="cds.TraesKARUn01G0169340.1"/>
    <property type="gene ID" value="TraesKARUn01G0169340"/>
</dbReference>
<dbReference type="Gramene" id="TraesKARUn01G0169460.1">
    <property type="protein sequence ID" value="cds.TraesKARUn01G0169460.1"/>
    <property type="gene ID" value="TraesKARUn01G0169460"/>
</dbReference>
<dbReference type="Gramene" id="TraesKARUn01G0169850.1">
    <property type="protein sequence ID" value="cds.TraesKARUn01G0169850.1"/>
    <property type="gene ID" value="TraesKARUn01G0169850"/>
</dbReference>
<dbReference type="Gramene" id="TraesKARUn01G0169900.1">
    <property type="protein sequence ID" value="cds.TraesKARUn01G0169900.1"/>
    <property type="gene ID" value="TraesKARUn01G0169900"/>
</dbReference>
<dbReference type="Gramene" id="TraesKARUn01G0170050.1">
    <property type="protein sequence ID" value="cds.TraesKARUn01G0170050.1"/>
    <property type="gene ID" value="TraesKARUn01G0170050"/>
</dbReference>
<dbReference type="Gramene" id="TraesKARUn01G0171630.1">
    <property type="protein sequence ID" value="cds.TraesKARUn01G0171630.1"/>
    <property type="gene ID" value="TraesKARUn01G0171630"/>
</dbReference>
<dbReference type="Gramene" id="TraesKARUn01G0171780.1">
    <property type="protein sequence ID" value="cds.TraesKARUn01G0171780.1"/>
    <property type="gene ID" value="TraesKARUn01G0171780"/>
</dbReference>
<dbReference type="Gramene" id="TraesKARUn01G0172310.1">
    <property type="protein sequence ID" value="cds.TraesKARUn01G0172310.1"/>
    <property type="gene ID" value="TraesKARUn01G0172310"/>
</dbReference>
<dbReference type="Gramene" id="TraesKARUn01G0172410.1">
    <property type="protein sequence ID" value="cds.TraesKARUn01G0172410.1"/>
    <property type="gene ID" value="TraesKARUn01G0172410"/>
</dbReference>
<dbReference type="Gramene" id="TraesKARUn01G0172730.1">
    <property type="protein sequence ID" value="cds.TraesKARUn01G0172730.1"/>
    <property type="gene ID" value="TraesKARUn01G0172730"/>
</dbReference>
<dbReference type="Gramene" id="TraesKARUn01G0173010.1">
    <property type="protein sequence ID" value="cds.TraesKARUn01G0173010.1"/>
    <property type="gene ID" value="TraesKARUn01G0173010"/>
</dbReference>
<dbReference type="Gramene" id="TraesKARUn01G0173130.1">
    <property type="protein sequence ID" value="cds.TraesKARUn01G0173130.1"/>
    <property type="gene ID" value="TraesKARUn01G0173130"/>
</dbReference>
<dbReference type="Gramene" id="TraesKARUn01G0173440.1">
    <property type="protein sequence ID" value="cds.TraesKARUn01G0173440.1"/>
    <property type="gene ID" value="TraesKARUn01G0173440"/>
</dbReference>
<dbReference type="Gramene" id="TraesKARUn01G0174190.1">
    <property type="protein sequence ID" value="cds.TraesKARUn01G0174190.1"/>
    <property type="gene ID" value="TraesKARUn01G0174190"/>
</dbReference>
<dbReference type="Gramene" id="TraesKARUn01G0174310.1">
    <property type="protein sequence ID" value="cds.TraesKARUn01G0174310.1"/>
    <property type="gene ID" value="TraesKARUn01G0174310"/>
</dbReference>
<dbReference type="Gramene" id="TraesKARUn01G0174400.1">
    <property type="protein sequence ID" value="cds.TraesKARUn01G0174400.1"/>
    <property type="gene ID" value="TraesKARUn01G0174400"/>
</dbReference>
<dbReference type="Gramene" id="TraesKARUn01G0174620.1">
    <property type="protein sequence ID" value="cds.TraesKARUn01G0174620.1"/>
    <property type="gene ID" value="TraesKARUn01G0174620"/>
</dbReference>
<dbReference type="Gramene" id="TraesKARUn01G0174690.1">
    <property type="protein sequence ID" value="cds.TraesKARUn01G0174690.1"/>
    <property type="gene ID" value="TraesKARUn01G0174690"/>
</dbReference>
<dbReference type="Gramene" id="TraesKARUn01G0174970.1">
    <property type="protein sequence ID" value="cds.TraesKARUn01G0174970.1"/>
    <property type="gene ID" value="TraesKARUn01G0174970"/>
</dbReference>
<dbReference type="Gramene" id="TraesKARUn01G0175120.1">
    <property type="protein sequence ID" value="cds.TraesKARUn01G0175120.1"/>
    <property type="gene ID" value="TraesKARUn01G0175120"/>
</dbReference>
<dbReference type="Gramene" id="TraesKARUn01G0176210.1">
    <property type="protein sequence ID" value="cds.TraesKARUn01G0176210.1"/>
    <property type="gene ID" value="TraesKARUn01G0176210"/>
</dbReference>
<dbReference type="Gramene" id="TraesKARUn01G0176270.1">
    <property type="protein sequence ID" value="cds.TraesKARUn01G0176270.1"/>
    <property type="gene ID" value="TraesKARUn01G0176270"/>
</dbReference>
<dbReference type="Gramene" id="TraesKARUn01G0176480.1">
    <property type="protein sequence ID" value="cds.TraesKARUn01G0176480.1"/>
    <property type="gene ID" value="TraesKARUn01G0176480"/>
</dbReference>
<dbReference type="Gramene" id="TraesKARUn01G0177480.1">
    <property type="protein sequence ID" value="cds.TraesKARUn01G0177480.1"/>
    <property type="gene ID" value="TraesKARUn01G0177480"/>
</dbReference>
<dbReference type="Gramene" id="TraesKARUn01G0177760.1">
    <property type="protein sequence ID" value="cds.TraesKARUn01G0177760.1"/>
    <property type="gene ID" value="TraesKARUn01G0177760"/>
</dbReference>
<dbReference type="Gramene" id="TraesKARUn01G0178230.1">
    <property type="protein sequence ID" value="cds.TraesKARUn01G0178230.1"/>
    <property type="gene ID" value="TraesKARUn01G0178230"/>
</dbReference>
<dbReference type="Gramene" id="TraesKARUn01G0178780.1">
    <property type="protein sequence ID" value="cds.TraesKARUn01G0178780.1"/>
    <property type="gene ID" value="TraesKARUn01G0178780"/>
</dbReference>
<dbReference type="Gramene" id="TraesKARUn01G0179050.1">
    <property type="protein sequence ID" value="cds.TraesKARUn01G0179050.1"/>
    <property type="gene ID" value="TraesKARUn01G0179050"/>
</dbReference>
<dbReference type="Gramene" id="TraesKARUn01G0179120.1">
    <property type="protein sequence ID" value="cds.TraesKARUn01G0179120.1"/>
    <property type="gene ID" value="TraesKARUn01G0179120"/>
</dbReference>
<dbReference type="Gramene" id="TraesKARUn01G0179470.1">
    <property type="protein sequence ID" value="cds.TraesKARUn01G0179470.1"/>
    <property type="gene ID" value="TraesKARUn01G0179470"/>
</dbReference>
<dbReference type="Gramene" id="TraesKARUn01G0179780.1">
    <property type="protein sequence ID" value="cds.TraesKARUn01G0179780.1"/>
    <property type="gene ID" value="TraesKARUn01G0179780"/>
</dbReference>
<dbReference type="Gramene" id="TraesKARUn01G0180020.1">
    <property type="protein sequence ID" value="cds.TraesKARUn01G0180020.1"/>
    <property type="gene ID" value="TraesKARUn01G0180020"/>
</dbReference>
<dbReference type="Gramene" id="TraesKARUn01G0180180.1">
    <property type="protein sequence ID" value="cds.TraesKARUn01G0180180.1"/>
    <property type="gene ID" value="TraesKARUn01G0180180"/>
</dbReference>
<dbReference type="Gramene" id="TraesKARUn01G0181310.1">
    <property type="protein sequence ID" value="cds.TraesKARUn01G0181310.1"/>
    <property type="gene ID" value="TraesKARUn01G0181310"/>
</dbReference>
<dbReference type="Gramene" id="TraesKARUn01G0181550.1">
    <property type="protein sequence ID" value="cds.TraesKARUn01G0181550.1"/>
    <property type="gene ID" value="TraesKARUn01G0181550"/>
</dbReference>
<dbReference type="Gramene" id="TraesKARUn01G0181970.1">
    <property type="protein sequence ID" value="cds.TraesKARUn01G0181970.1"/>
    <property type="gene ID" value="TraesKARUn01G0181970"/>
</dbReference>
<dbReference type="Gramene" id="TraesKARUn01G0182660.1">
    <property type="protein sequence ID" value="cds.TraesKARUn01G0182660.1"/>
    <property type="gene ID" value="TraesKARUn01G0182660"/>
</dbReference>
<dbReference type="Gramene" id="TraesKARUn01G0182940.1">
    <property type="protein sequence ID" value="cds.TraesKARUn01G0182940.1"/>
    <property type="gene ID" value="TraesKARUn01G0182940"/>
</dbReference>
<dbReference type="Gramene" id="TraesKARUn01G0183410.1">
    <property type="protein sequence ID" value="cds.TraesKARUn01G0183410.1"/>
    <property type="gene ID" value="TraesKARUn01G0183410"/>
</dbReference>
<dbReference type="Gramene" id="TraesKARUn01G0183500.1">
    <property type="protein sequence ID" value="cds.TraesKARUn01G0183500.1"/>
    <property type="gene ID" value="TraesKARUn01G0183500"/>
</dbReference>
<dbReference type="Gramene" id="TraesKARUn01G0183550.1">
    <property type="protein sequence ID" value="cds.TraesKARUn01G0183550.1"/>
    <property type="gene ID" value="TraesKARUn01G0183550"/>
</dbReference>
<dbReference type="Gramene" id="TraesKARUn01G0183560.1">
    <property type="protein sequence ID" value="cds.TraesKARUn01G0183560.1"/>
    <property type="gene ID" value="TraesKARUn01G0183560"/>
</dbReference>
<dbReference type="Gramene" id="TraesKARUn01G0183780.1">
    <property type="protein sequence ID" value="cds.TraesKARUn01G0183780.1"/>
    <property type="gene ID" value="TraesKARUn01G0183780"/>
</dbReference>
<dbReference type="Gramene" id="TraesKARUn01G0184060.1">
    <property type="protein sequence ID" value="cds.TraesKARUn01G0184060.1"/>
    <property type="gene ID" value="TraesKARUn01G0184060"/>
</dbReference>
<dbReference type="Gramene" id="TraesKARUn01G0184140.1">
    <property type="protein sequence ID" value="cds.TraesKARUn01G0184140.1"/>
    <property type="gene ID" value="TraesKARUn01G0184140"/>
</dbReference>
<dbReference type="Gramene" id="TraesKARUn01G0184970.1">
    <property type="protein sequence ID" value="cds.TraesKARUn01G0184970.1"/>
    <property type="gene ID" value="TraesKARUn01G0184970"/>
</dbReference>
<dbReference type="Gramene" id="TraesKARUn01G0185060.1">
    <property type="protein sequence ID" value="cds.TraesKARUn01G0185060.1"/>
    <property type="gene ID" value="TraesKARUn01G0185060"/>
</dbReference>
<dbReference type="Gramene" id="TraesKARUn01G0185330.1">
    <property type="protein sequence ID" value="cds.TraesKARUn01G0185330.1"/>
    <property type="gene ID" value="TraesKARUn01G0185330"/>
</dbReference>
<dbReference type="Gramene" id="TraesKARUn01G0185430.1">
    <property type="protein sequence ID" value="cds.TraesKARUn01G0185430.1"/>
    <property type="gene ID" value="TraesKARUn01G0185430"/>
</dbReference>
<dbReference type="Gramene" id="TraesKARUn01G0185560.1">
    <property type="protein sequence ID" value="cds.TraesKARUn01G0185560.1"/>
    <property type="gene ID" value="TraesKARUn01G0185560"/>
</dbReference>
<dbReference type="Gramene" id="TraesKARUn01G0185970.1">
    <property type="protein sequence ID" value="cds.TraesKARUn01G0185970.1"/>
    <property type="gene ID" value="TraesKARUn01G0185970"/>
</dbReference>
<dbReference type="Gramene" id="TraesKARUn01G0186020.1">
    <property type="protein sequence ID" value="cds.TraesKARUn01G0186020.1"/>
    <property type="gene ID" value="TraesKARUn01G0186020"/>
</dbReference>
<dbReference type="Gramene" id="TraesKARUn01G0186520.1">
    <property type="protein sequence ID" value="cds.TraesKARUn01G0186520.1"/>
    <property type="gene ID" value="TraesKARUn01G0186520"/>
</dbReference>
<dbReference type="Gramene" id="TraesKARUn01G0187060.1">
    <property type="protein sequence ID" value="cds.TraesKARUn01G0187060.1"/>
    <property type="gene ID" value="TraesKARUn01G0187060"/>
</dbReference>
<dbReference type="Gramene" id="TraesKARUn01G0187100.1">
    <property type="protein sequence ID" value="cds.TraesKARUn01G0187100.1"/>
    <property type="gene ID" value="TraesKARUn01G0187100"/>
</dbReference>
<dbReference type="Gramene" id="TraesKARUn01G0187200.1">
    <property type="protein sequence ID" value="cds.TraesKARUn01G0187200.1"/>
    <property type="gene ID" value="TraesKARUn01G0187200"/>
</dbReference>
<dbReference type="Gramene" id="TraesKARUn01G0187380.1">
    <property type="protein sequence ID" value="cds.TraesKARUn01G0187380.1"/>
    <property type="gene ID" value="TraesKARUn01G0187380"/>
</dbReference>
<dbReference type="Gramene" id="TraesKARUn01G0187470.1">
    <property type="protein sequence ID" value="cds.TraesKARUn01G0187470.1"/>
    <property type="gene ID" value="TraesKARUn01G0187470"/>
</dbReference>
<dbReference type="Gramene" id="TraesKARUn01G0188150.1">
    <property type="protein sequence ID" value="cds.TraesKARUn01G0188150.1"/>
    <property type="gene ID" value="TraesKARUn01G0188150"/>
</dbReference>
<dbReference type="Gramene" id="TraesKARUn01G0188740.1">
    <property type="protein sequence ID" value="cds.TraesKARUn01G0188740.1"/>
    <property type="gene ID" value="TraesKARUn01G0188740"/>
</dbReference>
<dbReference type="Gramene" id="TraesKARUn01G0188870.1">
    <property type="protein sequence ID" value="cds.TraesKARUn01G0188870.1"/>
    <property type="gene ID" value="TraesKARUn01G0188870"/>
</dbReference>
<dbReference type="Gramene" id="TraesKARUn01G0189010.1">
    <property type="protein sequence ID" value="cds.TraesKARUn01G0189010.1"/>
    <property type="gene ID" value="TraesKARUn01G0189010"/>
</dbReference>
<dbReference type="Gramene" id="TraesKARUn01G0189560.1">
    <property type="protein sequence ID" value="cds.TraesKARUn01G0189560.1"/>
    <property type="gene ID" value="TraesKARUn01G0189560"/>
</dbReference>
<dbReference type="Gramene" id="TraesKARUn01G0189700.1">
    <property type="protein sequence ID" value="cds.TraesKARUn01G0189700.1"/>
    <property type="gene ID" value="TraesKARUn01G0189700"/>
</dbReference>
<dbReference type="Gramene" id="TraesKARUn01G0189830.1">
    <property type="protein sequence ID" value="cds.TraesKARUn01G0189830.1"/>
    <property type="gene ID" value="TraesKARUn01G0189830"/>
</dbReference>
<dbReference type="Gramene" id="TraesKARUn01G0191560.1">
    <property type="protein sequence ID" value="cds.TraesKARUn01G0191560.1"/>
    <property type="gene ID" value="TraesKARUn01G0191560"/>
</dbReference>
<dbReference type="Gramene" id="TraesKARUn01G0191690.1">
    <property type="protein sequence ID" value="cds.TraesKARUn01G0191690.1"/>
    <property type="gene ID" value="TraesKARUn01G0191690"/>
</dbReference>
<dbReference type="Gramene" id="TraesKARUn01G0191740.1">
    <property type="protein sequence ID" value="cds.TraesKARUn01G0191740.1"/>
    <property type="gene ID" value="TraesKARUn01G0191740"/>
</dbReference>
<dbReference type="Gramene" id="TraesKARUn01G0192010.1">
    <property type="protein sequence ID" value="cds.TraesKARUn01G0192010.1"/>
    <property type="gene ID" value="TraesKARUn01G0192010"/>
</dbReference>
<dbReference type="Gramene" id="TraesKARUn01G0192600.1">
    <property type="protein sequence ID" value="cds.TraesKARUn01G0192600.1"/>
    <property type="gene ID" value="TraesKARUn01G0192600"/>
</dbReference>
<dbReference type="Gramene" id="TraesKARUn01G0193800.1">
    <property type="protein sequence ID" value="cds.TraesKARUn01G0193800.1"/>
    <property type="gene ID" value="TraesKARUn01G0193800"/>
</dbReference>
<dbReference type="Gramene" id="TraesKARUn01G0193900.1">
    <property type="protein sequence ID" value="cds.TraesKARUn01G0193900.1"/>
    <property type="gene ID" value="TraesKARUn01G0193900"/>
</dbReference>
<dbReference type="Gramene" id="TraesKARUn01G0194050.1">
    <property type="protein sequence ID" value="cds.TraesKARUn01G0194050.1"/>
    <property type="gene ID" value="TraesKARUn01G0194050"/>
</dbReference>
<dbReference type="Gramene" id="TraesPARA_EIv1.0_2055010.1">
    <property type="protein sequence ID" value="TraesPARA_EIv1.0_2055010.1.CDS1"/>
    <property type="gene ID" value="TraesPARA_EIv1.0_2055010"/>
</dbReference>
<dbReference type="Gramene" id="TraesPARA_EIv1.0_2643620.1">
    <property type="protein sequence ID" value="TraesPARA_EIv1.0_2643620.1.CDS1"/>
    <property type="gene ID" value="TraesPARA_EIv1.0_2643620"/>
</dbReference>
<dbReference type="Gramene" id="TraesPARA_EIv1.0_2643850.1">
    <property type="protein sequence ID" value="TraesPARA_EIv1.0_2643850.1.CDS1"/>
    <property type="gene ID" value="TraesPARA_EIv1.0_2643850"/>
</dbReference>
<dbReference type="Gramene" id="TraesPARA_EIv1.0_2643980.1">
    <property type="protein sequence ID" value="TraesPARA_EIv1.0_2643980.1.CDS1"/>
    <property type="gene ID" value="TraesPARA_EIv1.0_2643980"/>
</dbReference>
<dbReference type="Gramene" id="TraesPARA_EIv1.0_2644090.1">
    <property type="protein sequence ID" value="TraesPARA_EIv1.0_2644090.1.CDS1"/>
    <property type="gene ID" value="TraesPARA_EIv1.0_2644090"/>
</dbReference>
<dbReference type="Gramene" id="TraesPARA_EIv1.0_2644630.1">
    <property type="protein sequence ID" value="TraesPARA_EIv1.0_2644630.1.CDS1"/>
    <property type="gene ID" value="TraesPARA_EIv1.0_2644630"/>
</dbReference>
<dbReference type="Gramene" id="TraesPARA_EIv1.0_2645040.1">
    <property type="protein sequence ID" value="TraesPARA_EIv1.0_2645040.1.CDS1"/>
    <property type="gene ID" value="TraesPARA_EIv1.0_2645040"/>
</dbReference>
<dbReference type="Gramene" id="TraesPARA_EIv1.0_2645040.3">
    <property type="protein sequence ID" value="TraesPARA_EIv1.0_2645040.3.CDS1"/>
    <property type="gene ID" value="TraesPARA_EIv1.0_2645040"/>
</dbReference>
<dbReference type="Gramene" id="TraesPARA_EIv1.0_2645180.1">
    <property type="protein sequence ID" value="TraesPARA_EIv1.0_2645180.1.CDS1"/>
    <property type="gene ID" value="TraesPARA_EIv1.0_2645180"/>
</dbReference>
<dbReference type="Gramene" id="TraesPARA_EIv1.0_2645400.1">
    <property type="protein sequence ID" value="TraesPARA_EIv1.0_2645400.1.CDS1"/>
    <property type="gene ID" value="TraesPARA_EIv1.0_2645400"/>
</dbReference>
<dbReference type="Gramene" id="TraesPARA_EIv1.0_2645560.1">
    <property type="protein sequence ID" value="TraesPARA_EIv1.0_2645560.1.CDS1"/>
    <property type="gene ID" value="TraesPARA_EIv1.0_2645560"/>
</dbReference>
<dbReference type="Gramene" id="TraesPARA_EIv1.0_2645750.1">
    <property type="protein sequence ID" value="TraesPARA_EIv1.0_2645750.1.CDS1"/>
    <property type="gene ID" value="TraesPARA_EIv1.0_2645750"/>
</dbReference>
<dbReference type="Gramene" id="TraesPARA_EIv1.0_2645930.1">
    <property type="protein sequence ID" value="TraesPARA_EIv1.0_2645930.1.CDS1"/>
    <property type="gene ID" value="TraesPARA_EIv1.0_2645930"/>
</dbReference>
<dbReference type="Gramene" id="TraesPARA_EIv1.0_2646210.1">
    <property type="protein sequence ID" value="TraesPARA_EIv1.0_2646210.1.CDS1"/>
    <property type="gene ID" value="TraesPARA_EIv1.0_2646210"/>
</dbReference>
<dbReference type="Gramene" id="TraesPARA_EIv1.0_2647070.1">
    <property type="protein sequence ID" value="TraesPARA_EIv1.0_2647070.1.CDS1"/>
    <property type="gene ID" value="TraesPARA_EIv1.0_2647070"/>
</dbReference>
<dbReference type="Gramene" id="TraesPARA_EIv1.0_2647500.1">
    <property type="protein sequence ID" value="TraesPARA_EIv1.0_2647500.1.CDS1"/>
    <property type="gene ID" value="TraesPARA_EIv1.0_2647500"/>
</dbReference>
<dbReference type="Gramene" id="TraesPARA_EIv1.0_2648010.1">
    <property type="protein sequence ID" value="TraesPARA_EIv1.0_2648010.1.CDS1"/>
    <property type="gene ID" value="TraesPARA_EIv1.0_2648010"/>
</dbReference>
<dbReference type="Gramene" id="TraesPARA_EIv1.0_2648530.1">
    <property type="protein sequence ID" value="TraesPARA_EIv1.0_2648530.1.CDS1"/>
    <property type="gene ID" value="TraesPARA_EIv1.0_2648530"/>
</dbReference>
<dbReference type="Gramene" id="TraesPARA_EIv1.0_2648720.1">
    <property type="protein sequence ID" value="TraesPARA_EIv1.0_2648720.1.CDS1"/>
    <property type="gene ID" value="TraesPARA_EIv1.0_2648720"/>
</dbReference>
<dbReference type="Gramene" id="TraesPARA_EIv1.0_2648970.1">
    <property type="protein sequence ID" value="TraesPARA_EIv1.0_2648970.1.CDS1"/>
    <property type="gene ID" value="TraesPARA_EIv1.0_2648970"/>
</dbReference>
<dbReference type="Gramene" id="TraesPARA_EIv1.0_2649140.1">
    <property type="protein sequence ID" value="TraesPARA_EIv1.0_2649140.1.CDS1"/>
    <property type="gene ID" value="TraesPARA_EIv1.0_2649140"/>
</dbReference>
<dbReference type="Gramene" id="TraesPARA_EIv1.0_2649240.1">
    <property type="protein sequence ID" value="TraesPARA_EIv1.0_2649240.1.CDS1"/>
    <property type="gene ID" value="TraesPARA_EIv1.0_2649240"/>
</dbReference>
<dbReference type="Gramene" id="TraesPARA_EIv1.0_2649340.1">
    <property type="protein sequence ID" value="TraesPARA_EIv1.0_2649340.1.CDS1"/>
    <property type="gene ID" value="TraesPARA_EIv1.0_2649340"/>
</dbReference>
<dbReference type="Gramene" id="TraesPARA_EIv1.0_2649780.1">
    <property type="protein sequence ID" value="TraesPARA_EIv1.0_2649780.1.CDS1"/>
    <property type="gene ID" value="TraesPARA_EIv1.0_2649780"/>
</dbReference>
<dbReference type="Gramene" id="TraesPARA_EIv1.0_2649990.1">
    <property type="protein sequence ID" value="TraesPARA_EIv1.0_2649990.1.CDS1"/>
    <property type="gene ID" value="TraesPARA_EIv1.0_2649990"/>
</dbReference>
<dbReference type="Gramene" id="TraesPARA_EIv1.0_2650060.1">
    <property type="protein sequence ID" value="TraesPARA_EIv1.0_2650060.1.CDS1"/>
    <property type="gene ID" value="TraesPARA_EIv1.0_2650060"/>
</dbReference>
<dbReference type="Gramene" id="TraesPARA_EIv1.0_2650260.1">
    <property type="protein sequence ID" value="TraesPARA_EIv1.0_2650260.1.CDS1"/>
    <property type="gene ID" value="TraesPARA_EIv1.0_2650260"/>
</dbReference>
<dbReference type="Gramene" id="TraesPARA_EIv1.0_2650400.1">
    <property type="protein sequence ID" value="TraesPARA_EIv1.0_2650400.1.CDS1"/>
    <property type="gene ID" value="TraesPARA_EIv1.0_2650400"/>
</dbReference>
<dbReference type="Gramene" id="TraesPARA_EIv1.0_2650490.1">
    <property type="protein sequence ID" value="TraesPARA_EIv1.0_2650490.1.CDS1"/>
    <property type="gene ID" value="TraesPARA_EIv1.0_2650490"/>
</dbReference>
<dbReference type="Gramene" id="TraesPARA_EIv1.0_2650590.1">
    <property type="protein sequence ID" value="TraesPARA_EIv1.0_2650590.1.CDS1"/>
    <property type="gene ID" value="TraesPARA_EIv1.0_2650590"/>
</dbReference>
<dbReference type="Gramene" id="TraesPARA_EIv1.0_2651210.1">
    <property type="protein sequence ID" value="TraesPARA_EIv1.0_2651210.1.CDS1"/>
    <property type="gene ID" value="TraesPARA_EIv1.0_2651210"/>
</dbReference>
<dbReference type="Gramene" id="TraesPARA_EIv1.0_2651480.1">
    <property type="protein sequence ID" value="TraesPARA_EIv1.0_2651480.1.CDS1"/>
    <property type="gene ID" value="TraesPARA_EIv1.0_2651480"/>
</dbReference>
<dbReference type="Gramene" id="TraesPARA_EIv1.0_2652010.1">
    <property type="protein sequence ID" value="TraesPARA_EIv1.0_2652010.1.CDS1"/>
    <property type="gene ID" value="TraesPARA_EIv1.0_2652010"/>
</dbReference>
<dbReference type="Gramene" id="TraesPARA_EIv1.0_2652340.1">
    <property type="protein sequence ID" value="TraesPARA_EIv1.0_2652340.1.CDS1"/>
    <property type="gene ID" value="TraesPARA_EIv1.0_2652340"/>
</dbReference>
<dbReference type="Gramene" id="TraesPARA_EIv1.0_2652610.1">
    <property type="protein sequence ID" value="TraesPARA_EIv1.0_2652610.1.CDS1"/>
    <property type="gene ID" value="TraesPARA_EIv1.0_2652610"/>
</dbReference>
<dbReference type="Gramene" id="TraesPARA_EIv1.0_2652750.1">
    <property type="protein sequence ID" value="TraesPARA_EIv1.0_2652750.1.CDS1"/>
    <property type="gene ID" value="TraesPARA_EIv1.0_2652750"/>
</dbReference>
<dbReference type="Gramene" id="TraesPARA_EIv1.0_2652840.1">
    <property type="protein sequence ID" value="TraesPARA_EIv1.0_2652840.1.CDS1"/>
    <property type="gene ID" value="TraesPARA_EIv1.0_2652840"/>
</dbReference>
<dbReference type="Gramene" id="TraesPARA_EIv1.0_2652990.1">
    <property type="protein sequence ID" value="TraesPARA_EIv1.0_2652990.1.CDS1"/>
    <property type="gene ID" value="TraesPARA_EIv1.0_2652990"/>
</dbReference>
<dbReference type="Gramene" id="TraesPARA_EIv1.0_2653140.1">
    <property type="protein sequence ID" value="TraesPARA_EIv1.0_2653140.1.CDS1"/>
    <property type="gene ID" value="TraesPARA_EIv1.0_2653140"/>
</dbReference>
<dbReference type="Gramene" id="TraesPARA_EIv1.0_2653360.1">
    <property type="protein sequence ID" value="TraesPARA_EIv1.0_2653360.1.CDS1"/>
    <property type="gene ID" value="TraesPARA_EIv1.0_2653360"/>
</dbReference>
<dbReference type="Gramene" id="TraesPARA_EIv1.0_2653620.1">
    <property type="protein sequence ID" value="TraesPARA_EIv1.0_2653620.1.CDS1"/>
    <property type="gene ID" value="TraesPARA_EIv1.0_2653620"/>
</dbReference>
<dbReference type="Gramene" id="TraesPARA_EIv1.0_2653740.1">
    <property type="protein sequence ID" value="TraesPARA_EIv1.0_2653740.1.CDS1"/>
    <property type="gene ID" value="TraesPARA_EIv1.0_2653740"/>
</dbReference>
<dbReference type="Gramene" id="TraesPARA_EIv1.0_2653810.1">
    <property type="protein sequence ID" value="TraesPARA_EIv1.0_2653810.1.CDS1"/>
    <property type="gene ID" value="TraesPARA_EIv1.0_2653810"/>
</dbReference>
<dbReference type="Gramene" id="TraesPARA_EIv1.0_2653970.1">
    <property type="protein sequence ID" value="TraesPARA_EIv1.0_2653970.1.CDS1"/>
    <property type="gene ID" value="TraesPARA_EIv1.0_2653970"/>
</dbReference>
<dbReference type="Gramene" id="TraesPARA_EIv1.0_2654200.1">
    <property type="protein sequence ID" value="TraesPARA_EIv1.0_2654200.1.CDS1"/>
    <property type="gene ID" value="TraesPARA_EIv1.0_2654200"/>
</dbReference>
<dbReference type="Gramene" id="TraesPARA_EIv1.0_2654320.1">
    <property type="protein sequence ID" value="TraesPARA_EIv1.0_2654320.1.CDS1"/>
    <property type="gene ID" value="TraesPARA_EIv1.0_2654320"/>
</dbReference>
<dbReference type="Gramene" id="TraesPARA_EIv1.0_2654650.1">
    <property type="protein sequence ID" value="TraesPARA_EIv1.0_2654650.1.CDS1"/>
    <property type="gene ID" value="TraesPARA_EIv1.0_2654650"/>
</dbReference>
<dbReference type="Gramene" id="TraesPARA_EIv1.0_2655090.1">
    <property type="protein sequence ID" value="TraesPARA_EIv1.0_2655090.1.CDS1"/>
    <property type="gene ID" value="TraesPARA_EIv1.0_2655090"/>
</dbReference>
<dbReference type="Gramene" id="TraesPARA_EIv1.0_2655230.1">
    <property type="protein sequence ID" value="TraesPARA_EIv1.0_2655230.1.CDS1"/>
    <property type="gene ID" value="TraesPARA_EIv1.0_2655230"/>
</dbReference>
<dbReference type="Gramene" id="TraesPARA_EIv1.0_2655370.1">
    <property type="protein sequence ID" value="TraesPARA_EIv1.0_2655370.1.CDS1"/>
    <property type="gene ID" value="TraesPARA_EIv1.0_2655370"/>
</dbReference>
<dbReference type="Gramene" id="TraesPARA_EIv1.0_2655500.1">
    <property type="protein sequence ID" value="TraesPARA_EIv1.0_2655500.1.CDS1"/>
    <property type="gene ID" value="TraesPARA_EIv1.0_2655500"/>
</dbReference>
<dbReference type="Gramene" id="TraesPARA_EIv1.0_2656840.1">
    <property type="protein sequence ID" value="TraesPARA_EIv1.0_2656840.1.CDS1"/>
    <property type="gene ID" value="TraesPARA_EIv1.0_2656840"/>
</dbReference>
<dbReference type="Gramene" id="TraesPARA_EIv1.0_2657020.1">
    <property type="protein sequence ID" value="TraesPARA_EIv1.0_2657020.1.CDS1"/>
    <property type="gene ID" value="TraesPARA_EIv1.0_2657020"/>
</dbReference>
<dbReference type="Gramene" id="TraesPARA_EIv1.0_2657110.1">
    <property type="protein sequence ID" value="TraesPARA_EIv1.0_2657110.1.CDS1"/>
    <property type="gene ID" value="TraesPARA_EIv1.0_2657110"/>
</dbReference>
<dbReference type="Gramene" id="TraesPARA_EIv1.0_2658460.1">
    <property type="protein sequence ID" value="TraesPARA_EIv1.0_2658460.1.CDS1"/>
    <property type="gene ID" value="TraesPARA_EIv1.0_2658460"/>
</dbReference>
<dbReference type="Gramene" id="TraesPARA_EIv1.0_2659970.1">
    <property type="protein sequence ID" value="TraesPARA_EIv1.0_2659970.1.CDS1"/>
    <property type="gene ID" value="TraesPARA_EIv1.0_2659970"/>
</dbReference>
<dbReference type="Gramene" id="TraesPARA_EIv1.0_2660060.1">
    <property type="protein sequence ID" value="TraesPARA_EIv1.0_2660060.1.CDS1"/>
    <property type="gene ID" value="TraesPARA_EIv1.0_2660060"/>
</dbReference>
<dbReference type="Gramene" id="TraesPARA_EIv1.0_2660200.1">
    <property type="protein sequence ID" value="TraesPARA_EIv1.0_2660200.1.CDS1"/>
    <property type="gene ID" value="TraesPARA_EIv1.0_2660200"/>
</dbReference>
<dbReference type="Gramene" id="TraesPARA_EIv1.0_2660350.1">
    <property type="protein sequence ID" value="TraesPARA_EIv1.0_2660350.1.CDS1"/>
    <property type="gene ID" value="TraesPARA_EIv1.0_2660350"/>
</dbReference>
<dbReference type="Gramene" id="TraesPARA_EIv1.0_2663080.1">
    <property type="protein sequence ID" value="TraesPARA_EIv1.0_2663080.1.CDS1"/>
    <property type="gene ID" value="TraesPARA_EIv1.0_2663080"/>
</dbReference>
<dbReference type="Gramene" id="TraesPARA_EIv1.0_2663510.1">
    <property type="protein sequence ID" value="TraesPARA_EIv1.0_2663510.1.CDS1"/>
    <property type="gene ID" value="TraesPARA_EIv1.0_2663510"/>
</dbReference>
<dbReference type="Gramene" id="TraesPARA_EIv1.0_2663640.1">
    <property type="protein sequence ID" value="TraesPARA_EIv1.0_2663640.1.CDS1"/>
    <property type="gene ID" value="TraesPARA_EIv1.0_2663640"/>
</dbReference>
<dbReference type="Gramene" id="TraesPARA_EIv1.0_2663860.1">
    <property type="protein sequence ID" value="TraesPARA_EIv1.0_2663860.1.CDS1"/>
    <property type="gene ID" value="TraesPARA_EIv1.0_2663860"/>
</dbReference>
<dbReference type="Gramene" id="TraesPARA_EIv1.0_2665350.1">
    <property type="protein sequence ID" value="TraesPARA_EIv1.0_2665350.1.CDS1"/>
    <property type="gene ID" value="TraesPARA_EIv1.0_2665350"/>
</dbReference>
<dbReference type="Gramene" id="TraesPARA_EIv1.0_2665640.1">
    <property type="protein sequence ID" value="TraesPARA_EIv1.0_2665640.1.CDS1"/>
    <property type="gene ID" value="TraesPARA_EIv1.0_2665640"/>
</dbReference>
<dbReference type="Gramene" id="TraesPARA_EIv1.0_2666350.1">
    <property type="protein sequence ID" value="TraesPARA_EIv1.0_2666350.1.CDS1"/>
    <property type="gene ID" value="TraesPARA_EIv1.0_2666350"/>
</dbReference>
<dbReference type="Gramene" id="TraesPARA_EIv1.0_2666470.1">
    <property type="protein sequence ID" value="TraesPARA_EIv1.0_2666470.1.CDS1"/>
    <property type="gene ID" value="TraesPARA_EIv1.0_2666470"/>
</dbReference>
<dbReference type="Gramene" id="TraesPARA_EIv1.0_2666820.1">
    <property type="protein sequence ID" value="TraesPARA_EIv1.0_2666820.1.CDS1"/>
    <property type="gene ID" value="TraesPARA_EIv1.0_2666820"/>
</dbReference>
<dbReference type="Gramene" id="TraesPARA_EIv1.0_2666940.1">
    <property type="protein sequence ID" value="TraesPARA_EIv1.0_2666940.1.CDS1"/>
    <property type="gene ID" value="TraesPARA_EIv1.0_2666940"/>
</dbReference>
<dbReference type="Gramene" id="TraesPARA_EIv1.0_2667830.1">
    <property type="protein sequence ID" value="TraesPARA_EIv1.0_2667830.1.CDS1"/>
    <property type="gene ID" value="TraesPARA_EIv1.0_2667830"/>
</dbReference>
<dbReference type="Gramene" id="TraesPARA_EIv1.0_2668480.1">
    <property type="protein sequence ID" value="TraesPARA_EIv1.0_2668480.1.CDS1"/>
    <property type="gene ID" value="TraesPARA_EIv1.0_2668480"/>
</dbReference>
<dbReference type="Gramene" id="TraesPARA_EIv1.0_2668810.1">
    <property type="protein sequence ID" value="TraesPARA_EIv1.0_2668810.1.CDS1"/>
    <property type="gene ID" value="TraesPARA_EIv1.0_2668810"/>
</dbReference>
<dbReference type="Gramene" id="TraesPARA_EIv1.0_2669280.1">
    <property type="protein sequence ID" value="TraesPARA_EIv1.0_2669280.1.CDS1"/>
    <property type="gene ID" value="TraesPARA_EIv1.0_2669280"/>
</dbReference>
<dbReference type="Gramene" id="TraesPARA_EIv1.0_2669510.1">
    <property type="protein sequence ID" value="TraesPARA_EIv1.0_2669510.1.CDS1"/>
    <property type="gene ID" value="TraesPARA_EIv1.0_2669510"/>
</dbReference>
<dbReference type="Gramene" id="TraesPARA_EIv1.0_2669950.1">
    <property type="protein sequence ID" value="TraesPARA_EIv1.0_2669950.1.CDS1"/>
    <property type="gene ID" value="TraesPARA_EIv1.0_2669950"/>
</dbReference>
<dbReference type="Gramene" id="TraesPARA_EIv1.0_2670190.1">
    <property type="protein sequence ID" value="TraesPARA_EIv1.0_2670190.1.CDS1"/>
    <property type="gene ID" value="TraesPARA_EIv1.0_2670190"/>
</dbReference>
<dbReference type="Gramene" id="TraesPARA_EIv1.0_2670430.1">
    <property type="protein sequence ID" value="TraesPARA_EIv1.0_2670430.1.CDS1"/>
    <property type="gene ID" value="TraesPARA_EIv1.0_2670430"/>
</dbReference>
<dbReference type="Gramene" id="TraesPARA_EIv1.0_2670950.1">
    <property type="protein sequence ID" value="TraesPARA_EIv1.0_2670950.1.CDS1"/>
    <property type="gene ID" value="TraesPARA_EIv1.0_2670950"/>
</dbReference>
<dbReference type="Gramene" id="TraesPARA_EIv1.0_2671860.1">
    <property type="protein sequence ID" value="TraesPARA_EIv1.0_2671860.1.CDS1"/>
    <property type="gene ID" value="TraesPARA_EIv1.0_2671860"/>
</dbReference>
<dbReference type="Gramene" id="TraesPARA_EIv1.0_2672630.1">
    <property type="protein sequence ID" value="TraesPARA_EIv1.0_2672630.1.CDS1"/>
    <property type="gene ID" value="TraesPARA_EIv1.0_2672630"/>
</dbReference>
<dbReference type="Gramene" id="TraesPARA_EIv1.0_2673710.1">
    <property type="protein sequence ID" value="TraesPARA_EIv1.0_2673710.1.CDS1"/>
    <property type="gene ID" value="TraesPARA_EIv1.0_2673710"/>
</dbReference>
<dbReference type="Gramene" id="TraesPARA_EIv1.0_2674260.1">
    <property type="protein sequence ID" value="TraesPARA_EIv1.0_2674260.1.CDS1"/>
    <property type="gene ID" value="TraesPARA_EIv1.0_2674260"/>
</dbReference>
<dbReference type="Gramene" id="TraesPARA_EIv1.0_2675180.1">
    <property type="protein sequence ID" value="TraesPARA_EIv1.0_2675180.1.CDS1"/>
    <property type="gene ID" value="TraesPARA_EIv1.0_2675180"/>
</dbReference>
<dbReference type="Gramene" id="TraesPARA_EIv1.0_2675860.1">
    <property type="protein sequence ID" value="TraesPARA_EIv1.0_2675860.1.CDS1"/>
    <property type="gene ID" value="TraesPARA_EIv1.0_2675860"/>
</dbReference>
<dbReference type="Gramene" id="TraesPARA_EIv1.0_2680150.1">
    <property type="protein sequence ID" value="TraesPARA_EIv1.0_2680150.1.CDS1"/>
    <property type="gene ID" value="TraesPARA_EIv1.0_2680150"/>
</dbReference>
<dbReference type="Gramene" id="TraesPARA_EIv1.0_2680490.1">
    <property type="protein sequence ID" value="TraesPARA_EIv1.0_2680490.1.CDS1"/>
    <property type="gene ID" value="TraesPARA_EIv1.0_2680490"/>
</dbReference>
<dbReference type="Gramene" id="TraesPARA_EIv1.0_2680950.1">
    <property type="protein sequence ID" value="TraesPARA_EIv1.0_2680950.1.CDS1"/>
    <property type="gene ID" value="TraesPARA_EIv1.0_2680950"/>
</dbReference>
<dbReference type="Gramene" id="TraesPARA_EIv1.0_2681140.1">
    <property type="protein sequence ID" value="TraesPARA_EIv1.0_2681140.1.CDS1"/>
    <property type="gene ID" value="TraesPARA_EIv1.0_2681140"/>
</dbReference>
<dbReference type="Gramene" id="TraesPARA_EIv1.0_2681140.2">
    <property type="protein sequence ID" value="TraesPARA_EIv1.0_2681140.2.CDS1"/>
    <property type="gene ID" value="TraesPARA_EIv1.0_2681140"/>
</dbReference>
<dbReference type="Gramene" id="TraesPARA_EIv1.0_2682150.1">
    <property type="protein sequence ID" value="TraesPARA_EIv1.0_2682150.1.CDS1"/>
    <property type="gene ID" value="TraesPARA_EIv1.0_2682150"/>
</dbReference>
<dbReference type="KEGG" id="taes:803091"/>
<dbReference type="eggNOG" id="ENOG502QTI9">
    <property type="taxonomic scope" value="Eukaryota"/>
</dbReference>
<dbReference type="HOGENOM" id="CLU_031450_2_0_1"/>
<dbReference type="Proteomes" id="UP000019116">
    <property type="component" value="Chloroplast"/>
</dbReference>
<dbReference type="ExpressionAtlas" id="P11383">
    <property type="expression patterns" value="baseline and differential"/>
</dbReference>
<dbReference type="GO" id="GO:0009507">
    <property type="term" value="C:chloroplast"/>
    <property type="evidence" value="ECO:0007669"/>
    <property type="project" value="UniProtKB-SubCell"/>
</dbReference>
<dbReference type="GO" id="GO:0000287">
    <property type="term" value="F:magnesium ion binding"/>
    <property type="evidence" value="ECO:0007669"/>
    <property type="project" value="UniProtKB-UniRule"/>
</dbReference>
<dbReference type="GO" id="GO:0004497">
    <property type="term" value="F:monooxygenase activity"/>
    <property type="evidence" value="ECO:0007669"/>
    <property type="project" value="UniProtKB-KW"/>
</dbReference>
<dbReference type="GO" id="GO:0016984">
    <property type="term" value="F:ribulose-bisphosphate carboxylase activity"/>
    <property type="evidence" value="ECO:0007669"/>
    <property type="project" value="UniProtKB-UniRule"/>
</dbReference>
<dbReference type="GO" id="GO:0009853">
    <property type="term" value="P:photorespiration"/>
    <property type="evidence" value="ECO:0007669"/>
    <property type="project" value="UniProtKB-KW"/>
</dbReference>
<dbReference type="GO" id="GO:0019253">
    <property type="term" value="P:reductive pentose-phosphate cycle"/>
    <property type="evidence" value="ECO:0007669"/>
    <property type="project" value="UniProtKB-UniRule"/>
</dbReference>
<dbReference type="CDD" id="cd08212">
    <property type="entry name" value="RuBisCO_large_I"/>
    <property type="match status" value="1"/>
</dbReference>
<dbReference type="FunFam" id="3.20.20.110:FF:000001">
    <property type="entry name" value="Ribulose bisphosphate carboxylase large chain"/>
    <property type="match status" value="1"/>
</dbReference>
<dbReference type="FunFam" id="3.30.70.150:FF:000001">
    <property type="entry name" value="Ribulose bisphosphate carboxylase large chain"/>
    <property type="match status" value="1"/>
</dbReference>
<dbReference type="Gene3D" id="3.20.20.110">
    <property type="entry name" value="Ribulose bisphosphate carboxylase, large subunit, C-terminal domain"/>
    <property type="match status" value="1"/>
</dbReference>
<dbReference type="Gene3D" id="3.30.70.150">
    <property type="entry name" value="RuBisCO large subunit, N-terminal domain"/>
    <property type="match status" value="1"/>
</dbReference>
<dbReference type="HAMAP" id="MF_01338">
    <property type="entry name" value="RuBisCO_L_type1"/>
    <property type="match status" value="1"/>
</dbReference>
<dbReference type="InterPro" id="IPR033966">
    <property type="entry name" value="RuBisCO"/>
</dbReference>
<dbReference type="InterPro" id="IPR020878">
    <property type="entry name" value="RuBisCo_large_chain_AS"/>
</dbReference>
<dbReference type="InterPro" id="IPR000685">
    <property type="entry name" value="RuBisCO_lsu_C"/>
</dbReference>
<dbReference type="InterPro" id="IPR036376">
    <property type="entry name" value="RuBisCO_lsu_C_sf"/>
</dbReference>
<dbReference type="InterPro" id="IPR017443">
    <property type="entry name" value="RuBisCO_lsu_fd_N"/>
</dbReference>
<dbReference type="InterPro" id="IPR036422">
    <property type="entry name" value="RuBisCO_lsu_N_sf"/>
</dbReference>
<dbReference type="InterPro" id="IPR020888">
    <property type="entry name" value="RuBisCO_lsuI"/>
</dbReference>
<dbReference type="NCBIfam" id="NF003252">
    <property type="entry name" value="PRK04208.1"/>
    <property type="match status" value="1"/>
</dbReference>
<dbReference type="PANTHER" id="PTHR42704">
    <property type="entry name" value="RIBULOSE BISPHOSPHATE CARBOXYLASE"/>
    <property type="match status" value="1"/>
</dbReference>
<dbReference type="PANTHER" id="PTHR42704:SF15">
    <property type="entry name" value="RIBULOSE BISPHOSPHATE CARBOXYLASE LARGE CHAIN"/>
    <property type="match status" value="1"/>
</dbReference>
<dbReference type="Pfam" id="PF00016">
    <property type="entry name" value="RuBisCO_large"/>
    <property type="match status" value="1"/>
</dbReference>
<dbReference type="Pfam" id="PF02788">
    <property type="entry name" value="RuBisCO_large_N"/>
    <property type="match status" value="1"/>
</dbReference>
<dbReference type="SFLD" id="SFLDG01052">
    <property type="entry name" value="RuBisCO"/>
    <property type="match status" value="1"/>
</dbReference>
<dbReference type="SFLD" id="SFLDS00014">
    <property type="entry name" value="RuBisCO"/>
    <property type="match status" value="1"/>
</dbReference>
<dbReference type="SFLD" id="SFLDG00301">
    <property type="entry name" value="RuBisCO-like_proteins"/>
    <property type="match status" value="1"/>
</dbReference>
<dbReference type="SUPFAM" id="SSF51649">
    <property type="entry name" value="RuBisCo, C-terminal domain"/>
    <property type="match status" value="1"/>
</dbReference>
<dbReference type="SUPFAM" id="SSF54966">
    <property type="entry name" value="RuBisCO, large subunit, small (N-terminal) domain"/>
    <property type="match status" value="1"/>
</dbReference>
<dbReference type="PROSITE" id="PS00157">
    <property type="entry name" value="RUBISCO_LARGE"/>
    <property type="match status" value="1"/>
</dbReference>
<keyword id="KW-0002">3D-structure</keyword>
<keyword id="KW-0007">Acetylation</keyword>
<keyword id="KW-0113">Calvin cycle</keyword>
<keyword id="KW-0120">Carbon dioxide fixation</keyword>
<keyword id="KW-0150">Chloroplast</keyword>
<keyword id="KW-0903">Direct protein sequencing</keyword>
<keyword id="KW-1015">Disulfide bond</keyword>
<keyword id="KW-0456">Lyase</keyword>
<keyword id="KW-0460">Magnesium</keyword>
<keyword id="KW-0479">Metal-binding</keyword>
<keyword id="KW-0503">Monooxygenase</keyword>
<keyword id="KW-0560">Oxidoreductase</keyword>
<keyword id="KW-0601">Photorespiration</keyword>
<keyword id="KW-0602">Photosynthesis</keyword>
<keyword id="KW-0934">Plastid</keyword>
<keyword id="KW-1185">Reference proteome</keyword>
<protein>
    <recommendedName>
        <fullName>Ribulose bisphosphate carboxylase large chain</fullName>
        <shortName>RuBisCO large subunit</shortName>
        <ecNumber>4.1.1.39</ecNumber>
    </recommendedName>
</protein>
<proteinExistence type="evidence at protein level"/>
<reference key="1">
    <citation type="journal article" date="1987" name="Jpn. J. Genet.">
        <title>The molecular basis of genetic diversity among cytoplasms of Triticum and Aegilops. VI. Complete nucleotide sequences of the rbcL genes encoding H- and L-type rubisco large subunits in common Wheat and Ae. crassa 4x.</title>
        <authorList>
            <person name="Terachi T."/>
            <person name="Ogihara Y."/>
            <person name="Tsunewaki K."/>
        </authorList>
    </citation>
    <scope>NUCLEOTIDE SEQUENCE [GENOMIC DNA]</scope>
</reference>
<reference key="2">
    <citation type="submission" date="2003-06" db="EMBL/GenBank/DDBJ databases">
        <title>Wheat chloroplast gene rbcL.</title>
        <authorList>
            <person name="Niu J.S."/>
        </authorList>
    </citation>
    <scope>NUCLEOTIDE SEQUENCE [MRNA]</scope>
</reference>
<reference key="3">
    <citation type="journal article" date="2000" name="Plant Mol. Biol. Rep.">
        <title>Chinese spring wheat (Triticum aestivum L.) chloroplast genome: complete sequence and contig clones.</title>
        <authorList>
            <person name="Ogihara Y."/>
            <person name="Isono K."/>
            <person name="Kojima T."/>
            <person name="Endo A."/>
            <person name="Hanaoka M."/>
            <person name="Shiina T."/>
            <person name="Terachi T."/>
            <person name="Utsugi S."/>
            <person name="Murata M."/>
            <person name="Mori N."/>
            <person name="Takumi S."/>
            <person name="Ikeo K."/>
            <person name="Gojobori T."/>
            <person name="Murai R."/>
            <person name="Murai K."/>
            <person name="Matsuoka Y."/>
            <person name="Ohnishi Y."/>
            <person name="Tajiri H."/>
            <person name="Tsunewaki K."/>
        </authorList>
    </citation>
    <scope>NUCLEOTIDE SEQUENCE [LARGE SCALE GENOMIC DNA]</scope>
    <source>
        <strain>cv. Chinese Spring</strain>
    </source>
</reference>
<reference key="4">
    <citation type="journal article" date="1991" name="Genetics">
        <title>Molecular analysis of the hot spot region related to length mutations in wheat chloroplast DNAs. I. Nucleotide divergence of genes and intergenic spacer regions located in the hot spot region.</title>
        <authorList>
            <person name="Ogihara Y."/>
            <person name="Terachi T."/>
            <person name="Sasakuma T."/>
        </authorList>
    </citation>
    <scope>NUCLEOTIDE SEQUENCE [GENOMIC DNA] OF 56-477</scope>
    <source>
        <strain>cv. Chinese Spring</strain>
        <tissue>Seedling</tissue>
    </source>
</reference>
<reference key="5">
    <citation type="journal article" date="1989" name="Proc. Natl. Acad. Sci. U.S.A.">
        <title>Post-translational modifications in the large subunit of ribulose bisphosphate carboxylase/oxygenase.</title>
        <authorList>
            <person name="Houtz R.L."/>
            <person name="Stults J.T."/>
            <person name="Mulligan R.M."/>
            <person name="Tolbert N.E."/>
        </authorList>
    </citation>
    <scope>PROTEIN SEQUENCE OF 3-21</scope>
    <scope>FUNCTION</scope>
    <scope>ACETYLATION AT PRO-3</scope>
    <scope>LACK OF METHYLATION</scope>
</reference>
<reference key="6">
    <citation type="journal article" date="1992" name="J. Biol. Chem.">
        <title>Oxidative stress causes rapid membrane translocation and in vivo degradation of ribulose-1,5-bisphosphate carboxylase/oxygenase.</title>
        <authorList>
            <person name="Mehta R.A."/>
            <person name="Fawcett T.W."/>
            <person name="Porath D."/>
            <person name="Mattoo A.K."/>
        </authorList>
    </citation>
    <scope>DISULFIDE BOND</scope>
</reference>